<name>PSN1_HUMAN</name>
<gene>
    <name type="primary">PSEN1</name>
    <name type="synonym">AD3</name>
    <name type="synonym">PS1</name>
    <name type="synonym">PSNL1</name>
</gene>
<reference key="1">
    <citation type="journal article" date="1995" name="Nature">
        <title>Cloning of a gene bearing missense mutations in early-onset familial Alzheimer's disease.</title>
        <authorList>
            <person name="Sherrington R."/>
            <person name="Rogaev E.I."/>
            <person name="Liang Y."/>
            <person name="Rogaeva E.A."/>
            <person name="Levesque G."/>
            <person name="Ikeda M."/>
            <person name="Chi H."/>
            <person name="Lin C."/>
            <person name="Li G."/>
            <person name="Holman K."/>
            <person name="Tsuda T."/>
            <person name="Mar L."/>
            <person name="Foncin J.-F."/>
            <person name="Bruni A.C."/>
            <person name="Montesi M.P."/>
            <person name="Sorbi S."/>
            <person name="Rainero I."/>
            <person name="Pinessi L."/>
            <person name="Nee L."/>
            <person name="Chumakov I."/>
            <person name="Pollen D."/>
            <person name="Brookes A."/>
            <person name="Sanseau P."/>
            <person name="Polinsky R.J."/>
            <person name="Wasco W."/>
            <person name="da Silva H.A.R."/>
            <person name="Haines J.L."/>
            <person name="Pericak-Vance M.A."/>
            <person name="Tanzi R.E."/>
            <person name="Roses A.D."/>
            <person name="Fraser P.E."/>
            <person name="Rommens J.M."/>
            <person name="St George-Hyslop P.H."/>
        </authorList>
    </citation>
    <scope>NUCLEOTIDE SEQUENCE [GENOMIC DNA / MRNA] (ISOFORMS 1 AND 2)</scope>
    <scope>VARIANTS AD3 LEU-146; ARG-163; GLU-246 AND VAL-286</scope>
    <scope>TISSUE SPECIFICITY</scope>
    <source>
        <tissue>Brain</tissue>
    </source>
</reference>
<reference key="2">
    <citation type="journal article" date="1996" name="FEBS Lett.">
        <title>Identification and characterization of presenilin I-467, I-463 and I-374.</title>
        <authorList>
            <person name="Sahara N."/>
            <person name="Yahagi Y."/>
            <person name="Takagi H."/>
            <person name="Kondo T."/>
            <person name="Okochi M."/>
            <person name="Usami M."/>
            <person name="Shirasawa T."/>
            <person name="Mori H."/>
        </authorList>
    </citation>
    <scope>NUCLEOTIDE SEQUENCE [MRNA] (ISOFORMS 2 AND 3)</scope>
    <scope>TISSUE SPECIFICITY</scope>
    <source>
        <tissue>Blood</tissue>
        <tissue>Brain</tissue>
    </source>
</reference>
<reference key="3">
    <citation type="submission" date="1998-08" db="EMBL/GenBank/DDBJ databases">
        <title>Human presenilin 1 gene encodes an alternative protein-minilin.</title>
        <authorList>
            <person name="Powell C.S."/>
            <person name="Gegg M.E."/>
            <person name="Palmer M.S."/>
        </authorList>
    </citation>
    <scope>NUCLEOTIDE SEQUENCE [MRNA] (ISOFORM 4)</scope>
</reference>
<reference key="4">
    <citation type="submission" date="1998-11" db="EMBL/GenBank/DDBJ databases">
        <title>Complete sequence of the gene for presenilin 1.</title>
        <authorList>
            <person name="Rowen L."/>
            <person name="Madan A."/>
            <person name="Qin S."/>
            <person name="Abbasi N."/>
            <person name="Dors M."/>
            <person name="Ratcliffe A."/>
            <person name="Madan A."/>
            <person name="Dickhoff R."/>
            <person name="Shaffer T."/>
            <person name="James R."/>
            <person name="Lasky S."/>
            <person name="Hood L."/>
        </authorList>
    </citation>
    <scope>NUCLEOTIDE SEQUENCE [GENOMIC DNA]</scope>
</reference>
<reference key="5">
    <citation type="submission" date="2001-09" db="EMBL/GenBank/DDBJ databases">
        <authorList>
            <person name="Kang L."/>
            <person name="Zhang B."/>
            <person name="Zhou Y."/>
            <person name="Peng X."/>
            <person name="Yuan J."/>
            <person name="Qiang B."/>
        </authorList>
    </citation>
    <scope>NUCLEOTIDE SEQUENCE [MRNA] (ISOFORM 5)</scope>
</reference>
<reference key="6">
    <citation type="journal article" date="2004" name="Nat. Genet.">
        <title>Complete sequencing and characterization of 21,243 full-length human cDNAs.</title>
        <authorList>
            <person name="Ota T."/>
            <person name="Suzuki Y."/>
            <person name="Nishikawa T."/>
            <person name="Otsuki T."/>
            <person name="Sugiyama T."/>
            <person name="Irie R."/>
            <person name="Wakamatsu A."/>
            <person name="Hayashi K."/>
            <person name="Sato H."/>
            <person name="Nagai K."/>
            <person name="Kimura K."/>
            <person name="Makita H."/>
            <person name="Sekine M."/>
            <person name="Obayashi M."/>
            <person name="Nishi T."/>
            <person name="Shibahara T."/>
            <person name="Tanaka T."/>
            <person name="Ishii S."/>
            <person name="Yamamoto J."/>
            <person name="Saito K."/>
            <person name="Kawai Y."/>
            <person name="Isono Y."/>
            <person name="Nakamura Y."/>
            <person name="Nagahari K."/>
            <person name="Murakami K."/>
            <person name="Yasuda T."/>
            <person name="Iwayanagi T."/>
            <person name="Wagatsuma M."/>
            <person name="Shiratori A."/>
            <person name="Sudo H."/>
            <person name="Hosoiri T."/>
            <person name="Kaku Y."/>
            <person name="Kodaira H."/>
            <person name="Kondo H."/>
            <person name="Sugawara M."/>
            <person name="Takahashi M."/>
            <person name="Kanda K."/>
            <person name="Yokoi T."/>
            <person name="Furuya T."/>
            <person name="Kikkawa E."/>
            <person name="Omura Y."/>
            <person name="Abe K."/>
            <person name="Kamihara K."/>
            <person name="Katsuta N."/>
            <person name="Sato K."/>
            <person name="Tanikawa M."/>
            <person name="Yamazaki M."/>
            <person name="Ninomiya K."/>
            <person name="Ishibashi T."/>
            <person name="Yamashita H."/>
            <person name="Murakawa K."/>
            <person name="Fujimori K."/>
            <person name="Tanai H."/>
            <person name="Kimata M."/>
            <person name="Watanabe M."/>
            <person name="Hiraoka S."/>
            <person name="Chiba Y."/>
            <person name="Ishida S."/>
            <person name="Ono Y."/>
            <person name="Takiguchi S."/>
            <person name="Watanabe S."/>
            <person name="Yosida M."/>
            <person name="Hotuta T."/>
            <person name="Kusano J."/>
            <person name="Kanehori K."/>
            <person name="Takahashi-Fujii A."/>
            <person name="Hara H."/>
            <person name="Tanase T.-O."/>
            <person name="Nomura Y."/>
            <person name="Togiya S."/>
            <person name="Komai F."/>
            <person name="Hara R."/>
            <person name="Takeuchi K."/>
            <person name="Arita M."/>
            <person name="Imose N."/>
            <person name="Musashino K."/>
            <person name="Yuuki H."/>
            <person name="Oshima A."/>
            <person name="Sasaki N."/>
            <person name="Aotsuka S."/>
            <person name="Yoshikawa Y."/>
            <person name="Matsunawa H."/>
            <person name="Ichihara T."/>
            <person name="Shiohata N."/>
            <person name="Sano S."/>
            <person name="Moriya S."/>
            <person name="Momiyama H."/>
            <person name="Satoh N."/>
            <person name="Takami S."/>
            <person name="Terashima Y."/>
            <person name="Suzuki O."/>
            <person name="Nakagawa S."/>
            <person name="Senoh A."/>
            <person name="Mizoguchi H."/>
            <person name="Goto Y."/>
            <person name="Shimizu F."/>
            <person name="Wakebe H."/>
            <person name="Hishigaki H."/>
            <person name="Watanabe T."/>
            <person name="Sugiyama A."/>
            <person name="Takemoto M."/>
            <person name="Kawakami B."/>
            <person name="Yamazaki M."/>
            <person name="Watanabe K."/>
            <person name="Kumagai A."/>
            <person name="Itakura S."/>
            <person name="Fukuzumi Y."/>
            <person name="Fujimori Y."/>
            <person name="Komiyama M."/>
            <person name="Tashiro H."/>
            <person name="Tanigami A."/>
            <person name="Fujiwara T."/>
            <person name="Ono T."/>
            <person name="Yamada K."/>
            <person name="Fujii Y."/>
            <person name="Ozaki K."/>
            <person name="Hirao M."/>
            <person name="Ohmori Y."/>
            <person name="Kawabata A."/>
            <person name="Hikiji T."/>
            <person name="Kobatake N."/>
            <person name="Inagaki H."/>
            <person name="Ikema Y."/>
            <person name="Okamoto S."/>
            <person name="Okitani R."/>
            <person name="Kawakami T."/>
            <person name="Noguchi S."/>
            <person name="Itoh T."/>
            <person name="Shigeta K."/>
            <person name="Senba T."/>
            <person name="Matsumura K."/>
            <person name="Nakajima Y."/>
            <person name="Mizuno T."/>
            <person name="Morinaga M."/>
            <person name="Sasaki M."/>
            <person name="Togashi T."/>
            <person name="Oyama M."/>
            <person name="Hata H."/>
            <person name="Watanabe M."/>
            <person name="Komatsu T."/>
            <person name="Mizushima-Sugano J."/>
            <person name="Satoh T."/>
            <person name="Shirai Y."/>
            <person name="Takahashi Y."/>
            <person name="Nakagawa K."/>
            <person name="Okumura K."/>
            <person name="Nagase T."/>
            <person name="Nomura N."/>
            <person name="Kikuchi H."/>
            <person name="Masuho Y."/>
            <person name="Yamashita R."/>
            <person name="Nakai K."/>
            <person name="Yada T."/>
            <person name="Nakamura Y."/>
            <person name="Ohara O."/>
            <person name="Isogai T."/>
            <person name="Sugano S."/>
        </authorList>
    </citation>
    <scope>NUCLEOTIDE SEQUENCE [LARGE SCALE MRNA] (ISOFORM 1)</scope>
    <source>
        <tissue>Tongue</tissue>
    </source>
</reference>
<reference key="7">
    <citation type="journal article" date="2003" name="Nature">
        <title>The DNA sequence and analysis of human chromosome 14.</title>
        <authorList>
            <person name="Heilig R."/>
            <person name="Eckenberg R."/>
            <person name="Petit J.-L."/>
            <person name="Fonknechten N."/>
            <person name="Da Silva C."/>
            <person name="Cattolico L."/>
            <person name="Levy M."/>
            <person name="Barbe V."/>
            <person name="De Berardinis V."/>
            <person name="Ureta-Vidal A."/>
            <person name="Pelletier E."/>
            <person name="Vico V."/>
            <person name="Anthouard V."/>
            <person name="Rowen L."/>
            <person name="Madan A."/>
            <person name="Qin S."/>
            <person name="Sun H."/>
            <person name="Du H."/>
            <person name="Pepin K."/>
            <person name="Artiguenave F."/>
            <person name="Robert C."/>
            <person name="Cruaud C."/>
            <person name="Bruels T."/>
            <person name="Jaillon O."/>
            <person name="Friedlander L."/>
            <person name="Samson G."/>
            <person name="Brottier P."/>
            <person name="Cure S."/>
            <person name="Segurens B."/>
            <person name="Aniere F."/>
            <person name="Samain S."/>
            <person name="Crespeau H."/>
            <person name="Abbasi N."/>
            <person name="Aiach N."/>
            <person name="Boscus D."/>
            <person name="Dickhoff R."/>
            <person name="Dors M."/>
            <person name="Dubois I."/>
            <person name="Friedman C."/>
            <person name="Gouyvenoux M."/>
            <person name="James R."/>
            <person name="Madan A."/>
            <person name="Mairey-Estrada B."/>
            <person name="Mangenot S."/>
            <person name="Martins N."/>
            <person name="Menard M."/>
            <person name="Oztas S."/>
            <person name="Ratcliffe A."/>
            <person name="Shaffer T."/>
            <person name="Trask B."/>
            <person name="Vacherie B."/>
            <person name="Bellemere C."/>
            <person name="Belser C."/>
            <person name="Besnard-Gonnet M."/>
            <person name="Bartol-Mavel D."/>
            <person name="Boutard M."/>
            <person name="Briez-Silla S."/>
            <person name="Combette S."/>
            <person name="Dufosse-Laurent V."/>
            <person name="Ferron C."/>
            <person name="Lechaplais C."/>
            <person name="Louesse C."/>
            <person name="Muselet D."/>
            <person name="Magdelenat G."/>
            <person name="Pateau E."/>
            <person name="Petit E."/>
            <person name="Sirvain-Trukniewicz P."/>
            <person name="Trybou A."/>
            <person name="Vega-Czarny N."/>
            <person name="Bataille E."/>
            <person name="Bluet E."/>
            <person name="Bordelais I."/>
            <person name="Dubois M."/>
            <person name="Dumont C."/>
            <person name="Guerin T."/>
            <person name="Haffray S."/>
            <person name="Hammadi R."/>
            <person name="Muanga J."/>
            <person name="Pellouin V."/>
            <person name="Robert D."/>
            <person name="Wunderle E."/>
            <person name="Gauguet G."/>
            <person name="Roy A."/>
            <person name="Sainte-Marthe L."/>
            <person name="Verdier J."/>
            <person name="Verdier-Discala C."/>
            <person name="Hillier L.W."/>
            <person name="Fulton L."/>
            <person name="McPherson J."/>
            <person name="Matsuda F."/>
            <person name="Wilson R."/>
            <person name="Scarpelli C."/>
            <person name="Gyapay G."/>
            <person name="Wincker P."/>
            <person name="Saurin W."/>
            <person name="Quetier F."/>
            <person name="Waterston R."/>
            <person name="Hood L."/>
            <person name="Weissenbach J."/>
        </authorList>
    </citation>
    <scope>NUCLEOTIDE SEQUENCE [LARGE SCALE GENOMIC DNA]</scope>
</reference>
<reference key="8">
    <citation type="submission" date="2005-07" db="EMBL/GenBank/DDBJ databases">
        <authorList>
            <person name="Mural R.J."/>
            <person name="Istrail S."/>
            <person name="Sutton G.G."/>
            <person name="Florea L."/>
            <person name="Halpern A.L."/>
            <person name="Mobarry C.M."/>
            <person name="Lippert R."/>
            <person name="Walenz B."/>
            <person name="Shatkay H."/>
            <person name="Dew I."/>
            <person name="Miller J.R."/>
            <person name="Flanigan M.J."/>
            <person name="Edwards N.J."/>
            <person name="Bolanos R."/>
            <person name="Fasulo D."/>
            <person name="Halldorsson B.V."/>
            <person name="Hannenhalli S."/>
            <person name="Turner R."/>
            <person name="Yooseph S."/>
            <person name="Lu F."/>
            <person name="Nusskern D.R."/>
            <person name="Shue B.C."/>
            <person name="Zheng X.H."/>
            <person name="Zhong F."/>
            <person name="Delcher A.L."/>
            <person name="Huson D.H."/>
            <person name="Kravitz S.A."/>
            <person name="Mouchard L."/>
            <person name="Reinert K."/>
            <person name="Remington K.A."/>
            <person name="Clark A.G."/>
            <person name="Waterman M.S."/>
            <person name="Eichler E.E."/>
            <person name="Adams M.D."/>
            <person name="Hunkapiller M.W."/>
            <person name="Myers E.W."/>
            <person name="Venter J.C."/>
        </authorList>
    </citation>
    <scope>NUCLEOTIDE SEQUENCE [LARGE SCALE GENOMIC DNA]</scope>
</reference>
<reference key="9">
    <citation type="journal article" date="2004" name="Genome Res.">
        <title>The status, quality, and expansion of the NIH full-length cDNA project: the Mammalian Gene Collection (MGC).</title>
        <authorList>
            <consortium name="The MGC Project Team"/>
        </authorList>
    </citation>
    <scope>NUCLEOTIDE SEQUENCE [LARGE SCALE MRNA] (ISOFORM 2)</scope>
    <source>
        <tissue>Skin</tissue>
    </source>
</reference>
<reference key="10">
    <citation type="journal article" date="1997" name="Biochem. Biophys. Res. Commun.">
        <title>Cloning of Xenopus presenilin-alpha and -beta cDNAs and their differential expression in oogenesis and embryogenesis.</title>
        <authorList>
            <person name="Tsujimura A."/>
            <person name="Yasojima K."/>
            <person name="Hashimoto-Gotoh T."/>
        </authorList>
    </citation>
    <scope>NUCLEOTIDE SEQUENCE [GENOMIC DNA] OF 1-113</scope>
</reference>
<reference key="11">
    <citation type="journal article" date="1996" name="FEBS Lett.">
        <title>Alzheimer's presenilin 1 gene expression in platelets and megakaryocytes. Identification of a novel splice variant.</title>
        <authorList>
            <person name="Vidal R."/>
            <person name="Ghiso J."/>
            <person name="Wisniewski T."/>
            <person name="Frangione B."/>
        </authorList>
    </citation>
    <scope>NUCLEOTIDE SEQUENCE [MRNA] OF 24-32</scope>
    <scope>ALTERNATIVE SPLICING (ISOFORMS 6 AND 7)</scope>
    <source>
        <tissue>Megakaryocyte</tissue>
        <tissue>Platelet</tissue>
    </source>
</reference>
<reference key="12">
    <citation type="journal article" date="2004" name="Biochemistry">
        <title>Purification and characterization of the human gamma-secretase complex.</title>
        <authorList>
            <person name="Fraering P.C."/>
            <person name="Ye W."/>
            <person name="Strub J.-M."/>
            <person name="Dolios G."/>
            <person name="LaVoie M.J."/>
            <person name="Ostaszewski B.L."/>
            <person name="van Dorsselaer A."/>
            <person name="Wang R."/>
            <person name="Selkoe D.J."/>
            <person name="Wolfe M.S."/>
        </authorList>
    </citation>
    <scope>PROTEIN SEQUENCE OF 36-42; 61-76; 109-129; 217-239; 270-278; 315-320; 345-352 AND 381-395 (ISOFORM 1)</scope>
    <scope>IDENTIFICATION BY MASS SPECTROMETRY</scope>
    <scope>IDENTIFICATION IN GAMMA-SECRETASE COMPLEX</scope>
    <scope>FUNCTION</scope>
    <scope>CATALYTIC ACTIVITY</scope>
    <scope>SUBCELLULAR LOCATION</scope>
</reference>
<reference key="13">
    <citation type="journal article" date="1996" name="Nat. Med.">
        <title>Alzheimer-associated presenilins 1 and 2: neuronal expression in brain and localization to intracellular membranes in mammalian cells.</title>
        <authorList>
            <person name="Kovacs D.M."/>
            <person name="Fausett H.J."/>
            <person name="Page K.J."/>
            <person name="Kim T.-W."/>
            <person name="Moir R.D."/>
            <person name="Merriam D.E."/>
            <person name="Hollister R.D."/>
            <person name="Hallmark O.G."/>
            <person name="Mancini R."/>
            <person name="Felsenstein K.M."/>
            <person name="Hyman B.T."/>
            <person name="Tanzi R.E."/>
            <person name="Wasco W."/>
        </authorList>
    </citation>
    <scope>SUBCELLULAR LOCATION</scope>
    <scope>TISSUE SPECIFICITY</scope>
</reference>
<reference key="14">
    <citation type="journal article" date="1997" name="Neurobiol. Dis.">
        <title>Presenilin proteins undergo heterogeneous endoproteolysis between Thr291 and Ala299 and occur as stable N- and C-terminal fragments in normal and Alzheimer brain tissue.</title>
        <authorList>
            <person name="Podlisny M.B."/>
            <person name="Citron M."/>
            <person name="Amarante P."/>
            <person name="Sherrington R."/>
            <person name="Xia W."/>
            <person name="Zhang J."/>
            <person name="Diehl T."/>
            <person name="Levesque G."/>
            <person name="Fraser P."/>
            <person name="Haass C."/>
            <person name="Koo E.H."/>
            <person name="Seubert P."/>
            <person name="St George-Hyslop P.H."/>
            <person name="Teplow D.B."/>
            <person name="Selkoe D.J."/>
        </authorList>
    </citation>
    <scope>PROTEOLYTIC PROCESSING</scope>
</reference>
<reference key="15">
    <citation type="journal article" date="1997" name="Proc. Natl. Acad. Sci. U.S.A.">
        <title>Proteolytic processing of the Alzheimer disease-associated presenilin-1 generates an in vivo substrate for protein kinase C.</title>
        <authorList>
            <person name="Walter J."/>
            <person name="Gruenberg J."/>
            <person name="Capell A."/>
            <person name="Pesold B."/>
            <person name="Schindzielorz A."/>
            <person name="Citron M."/>
            <person name="Mendla K."/>
            <person name="St George-Hyslop P.H."/>
            <person name="Multhaup G."/>
            <person name="Selkoe D.J."/>
            <person name="Haass C."/>
        </authorList>
    </citation>
    <scope>PHOSPHORYLATION</scope>
</reference>
<reference key="16">
    <citation type="journal article" date="1998" name="Biochemistry">
        <title>Alzheimer's disease associated presenilin-1 holoprotein and its 18-20 kDa C-terminal fragment are death substrates for proteases of the caspase family.</title>
        <authorList>
            <person name="Gruenberg J."/>
            <person name="Walter J."/>
            <person name="Loetscher H."/>
            <person name="Deuschle U."/>
            <person name="Jacobsen H."/>
            <person name="Haass C."/>
        </authorList>
    </citation>
    <scope>CASPASE CLEAVAGE SITE</scope>
    <scope>MUTAGENESIS OF ASP-345; ASP-373 AND ASP-385</scope>
</reference>
<reference key="17">
    <citation type="journal article" date="1998" name="FEBS Lett.">
        <title>Direct association of presenilin-1 with beta-catenin.</title>
        <authorList>
            <person name="Murayama M."/>
            <person name="Tanaka S."/>
            <person name="Palacino J."/>
            <person name="Murayama O."/>
            <person name="Honda T."/>
            <person name="Sun X."/>
            <person name="Yasutake K."/>
            <person name="Nihonmatsu N."/>
            <person name="Wolozin B."/>
            <person name="Takashima A."/>
        </authorList>
    </citation>
    <scope>FUNCTION</scope>
    <scope>INTERACTION WITH CTNNB1</scope>
    <scope>SUBCELLULAR LOCATION</scope>
</reference>
<reference key="18">
    <citation type="journal article" date="1998" name="J. Neurosci.">
        <title>Interaction of presenilins with the filamin family of actin-binding proteins.</title>
        <authorList>
            <person name="Zhang W."/>
            <person name="Han S.W."/>
            <person name="McKeel D.W."/>
            <person name="Goate A."/>
            <person name="Wu J.Y."/>
        </authorList>
    </citation>
    <scope>INTERACTION WITH FLNA AND FLNB</scope>
</reference>
<reference key="19">
    <citation type="journal article" date="1999" name="Biochemistry">
        <title>Amyloidogenic function of the Alzheimer's disease-associated presenilin 1 in the absence of endoproteolysis.</title>
        <authorList>
            <person name="Steiner H."/>
            <person name="Romig H."/>
            <person name="Pesold B."/>
            <person name="Philipp U."/>
            <person name="Baader M."/>
            <person name="Citron M."/>
            <person name="Loetscher H."/>
            <person name="Jacobsen H."/>
            <person name="Haass C."/>
        </authorList>
    </citation>
    <scope>FUNCTION</scope>
    <scope>MUTAGENESIS OF MET-292</scope>
    <scope>PROTEOLYTIC PROCESSING</scope>
</reference>
<reference key="20">
    <citation type="journal article" date="1999" name="J. Biol. Chem.">
        <title>Identification of a novel PSD-95/Dlg/ZO-1 (PDZ)-like protein interacting with the C terminus of presenilin-1.</title>
        <authorList>
            <person name="Xu X."/>
            <person name="Shi Y.-C."/>
            <person name="Wu X."/>
            <person name="Gambetti P."/>
            <person name="Sui D."/>
            <person name="Cui M.-Z."/>
        </authorList>
    </citation>
    <scope>INTERACTION WITH MTCH1</scope>
</reference>
<reference key="21">
    <citation type="journal article" date="1999" name="J. Biol. Chem.">
        <title>Cell surface presenilin-1 participates in the gamma-secretase-like proteolysis of Notch.</title>
        <authorList>
            <person name="Ray W.J."/>
            <person name="Yao M."/>
            <person name="Mumm J."/>
            <person name="Schroeter E.H."/>
            <person name="Saftig P."/>
            <person name="Wolfe M."/>
            <person name="Selkoe D.J."/>
            <person name="Kopan R."/>
            <person name="Goate A.M."/>
        </authorList>
    </citation>
    <scope>FUNCTION</scope>
    <scope>SUBCELLULAR LOCATION</scope>
    <scope>INTERACTION WITH NOTCH</scope>
</reference>
<reference key="22">
    <citation type="journal article" date="1999" name="J. Neurochem.">
        <title>Presenilins interact with armadillo proteins including neural-specific plakophilin-related protein and beta-catenin.</title>
        <authorList>
            <person name="Levesque G."/>
            <person name="Yu G."/>
            <person name="Nishimura M."/>
            <person name="Zhang D.M."/>
            <person name="Levesque L."/>
            <person name="Yu H."/>
            <person name="Xu D."/>
            <person name="Liang Y."/>
            <person name="Rogaeva E.A."/>
            <person name="Ikeda M."/>
            <person name="Duthie M."/>
            <person name="Murgolo N."/>
            <person name="Wang L."/>
            <person name="VanderVere P."/>
            <person name="Bayne M.L."/>
            <person name="Strader C.D."/>
            <person name="Rommens J.M."/>
            <person name="Fraser P.E."/>
            <person name="St George-Hyslop P.H."/>
        </authorList>
    </citation>
    <scope>INTERACTION WITH CTNND2 AND CTNNB1</scope>
    <scope>SUBCELLULAR LOCATION</scope>
</reference>
<reference key="23">
    <citation type="journal article" date="1999" name="Nature">
        <title>Two transmembrane aspartates in presenilin-1 required for presenilin endoproteolysis and gamma-secretase activity.</title>
        <authorList>
            <person name="Wolfe M.S."/>
            <person name="Xia W."/>
            <person name="Ostaszewski B.L."/>
            <person name="Diehl T.S."/>
            <person name="Kimberly W.T."/>
            <person name="Selkoe D.J."/>
        </authorList>
    </citation>
    <scope>FUNCTION</scope>
    <scope>CATALYTIC ACTIVITY</scope>
    <scope>ACTIVE SITE</scope>
    <scope>MUTAGENESIS OF ASP-257 AND ASP-385</scope>
</reference>
<reference key="24">
    <citation type="journal article" date="2000" name="J. Neurochem.">
        <title>Aspartate mutations in presenilin and gamma-secretase inhibitors both impair notch1 proteolysis and nuclear translocation with relative preservation of notch1 signaling.</title>
        <authorList>
            <person name="Berezovska O."/>
            <person name="Jack C."/>
            <person name="McLean P."/>
            <person name="Aster J.C."/>
            <person name="Hicks C."/>
            <person name="Xia W."/>
            <person name="Wolfe M.S."/>
            <person name="Kimberly W.T."/>
            <person name="Weinmaster G."/>
            <person name="Selkoe D.J."/>
            <person name="Hyman B.T."/>
        </authorList>
    </citation>
    <scope>FUNCTION</scope>
    <scope>CATALYTIC ACTIVITY</scope>
    <scope>ACTIVE SITE</scope>
    <scope>MUTAGENESIS OF ASP-257 AND ASP-385</scope>
</reference>
<reference key="25">
    <citation type="journal article" date="2000" name="Proc. Natl. Acad. Sci. U.S.A.">
        <title>Separation of presenilin function in amyloid beta-peptide generation and endoproteolysis of Notch.</title>
        <authorList>
            <person name="Kulic L."/>
            <person name="Walter J."/>
            <person name="Multhaup G."/>
            <person name="Teplow D.B."/>
            <person name="Baumeister R."/>
            <person name="Romig H."/>
            <person name="Capell A."/>
            <person name="Steiner H."/>
            <person name="Haass C."/>
        </authorList>
    </citation>
    <scope>FUNCTION</scope>
    <scope>CATALYTIC ACTIVITY</scope>
    <scope>MUTAGENESIS OF LEU-286</scope>
</reference>
<reference key="26">
    <citation type="journal article" date="2002" name="Blood Cells Mol. Dis.">
        <title>Identification of the presenilins in hematopoietic cells with localization of presenilin 1 to neutrophil and platelet granules.</title>
        <authorList>
            <person name="Mirinics Z.K."/>
            <person name="Calafat J."/>
            <person name="Udby L."/>
            <person name="Lovelock J."/>
            <person name="Kjeldsen L."/>
            <person name="Rothermund K."/>
            <person name="Sisodia S.S."/>
            <person name="Borregaard N."/>
            <person name="Corey S.J."/>
        </authorList>
    </citation>
    <scope>TISSUE SPECIFICITY</scope>
    <scope>SUBCELLULAR LOCATION</scope>
</reference>
<reference key="27">
    <citation type="journal article" date="2002" name="EMBO J.">
        <title>A presenilin-1/gamma-secretase cleavage releases the E-cadherin intracellular domain and regulates disassembly of adherens junctions.</title>
        <authorList>
            <person name="Marambaud P."/>
            <person name="Shioi J."/>
            <person name="Serban G."/>
            <person name="Georgakopoulos A."/>
            <person name="Sarner S."/>
            <person name="Nagy V."/>
            <person name="Baki L."/>
            <person name="Wen P."/>
            <person name="Efthimiopoulos S."/>
            <person name="Shao Z."/>
            <person name="Wisniewski T."/>
            <person name="Robakis N.K."/>
        </authorList>
    </citation>
    <scope>FUNCTION</scope>
    <scope>SUBCELLULAR LOCATION</scope>
    <scope>IDENTIFICATION IN A COMPLEX WITH CDH1 AND CTNNB1</scope>
</reference>
<reference key="28">
    <citation type="journal article" date="2002" name="J. Biol. Chem.">
        <title>Endoplasmic reticulum stress-inducible protein, Herp, enhances presenilin-mediated generation of amyloid beta-protein.</title>
        <authorList>
            <person name="Sai X."/>
            <person name="Kawamura Y."/>
            <person name="Kokame K."/>
            <person name="Yamaguchi H."/>
            <person name="Shiraishi H."/>
            <person name="Suzuki R."/>
            <person name="Suzuki T."/>
            <person name="Kawaichi M."/>
            <person name="Miyata T."/>
            <person name="Kitamura T."/>
            <person name="De Strooper B."/>
            <person name="Yanagisawa K."/>
            <person name="Komano H."/>
        </authorList>
    </citation>
    <scope>INTERACTION WITH HERPUD1</scope>
</reference>
<reference key="29">
    <citation type="journal article" date="2002" name="J. Biol. Chem.">
        <title>A new splice variant of glial fibrillary acidic protein GFAPepsilon, interacts with the presenilin proteins.</title>
        <authorList>
            <person name="Nielsen A.L."/>
            <person name="Holm I.E."/>
            <person name="Johansen M."/>
            <person name="Bonven B."/>
            <person name="Jorgensen P."/>
            <person name="Jorgensen A.L."/>
        </authorList>
    </citation>
    <scope>INTERACTION WITH GFAP</scope>
    <scope>MUTAGENESIS OF 66-ASP--ASP-72; 76-LYS-TYR-77; 82-VAL-ILE-83; VAL-82 AND 84-MET-LEU-85</scope>
    <scope>CHARACTERIZATION OF VARIANTS AD3 VAL-79 AND LEU-82</scope>
</reference>
<reference key="30">
    <citation type="journal article" date="2003" name="J. Neurosci. Res.">
        <title>Presenilin 1 is involved in maturation and trafficking of N-cadherin to the plasma membrane.</title>
        <authorList>
            <person name="Uemura K."/>
            <person name="Kitagawa N."/>
            <person name="Kohno R."/>
            <person name="Kuzuya A."/>
            <person name="Kageyama T."/>
            <person name="Chonabayashi K."/>
            <person name="Shibasaki H."/>
            <person name="Shimohama S."/>
        </authorList>
    </citation>
    <scope>INTERACTION WITH CDH2</scope>
    <scope>SUBCELLULAR LOCATION</scope>
    <scope>MUTAGENESIS OF ASP-385</scope>
</reference>
<reference key="31">
    <citation type="journal article" date="2003" name="Nat. Cell Biol.">
        <title>Reconstitution of gamma-secretase activity.</title>
        <authorList>
            <person name="Edbauer D."/>
            <person name="Winkler E."/>
            <person name="Regula J.T."/>
            <person name="Pesold B."/>
            <person name="Steiner H."/>
            <person name="Haass C."/>
        </authorList>
    </citation>
    <scope>ENZYME ACTIVITY OF A GAMMA-SECRETASE COMPLEX</scope>
    <scope>CATALYTIC ACTIVITY</scope>
    <scope>FUNCTION</scope>
    <scope>SUBUNIT</scope>
</reference>
<reference key="32">
    <citation type="journal article" date="2003" name="Proc. Natl. Acad. Sci. U.S.A.">
        <title>Gamma-secretase is a membrane protein complex comprised of presenilin, nicastrin, Aph-1, and Pen-2.</title>
        <authorList>
            <person name="Kimberly W.T."/>
            <person name="LaVoie M.J."/>
            <person name="Ostaszewski B.L."/>
            <person name="Ye W."/>
            <person name="Wolfe M.S."/>
            <person name="Selkoe D.J."/>
        </authorList>
    </citation>
    <scope>COMPONENT OF A GAMMA-SECRETASE COMPLEX WITH PEN2; PSEN1/PSEN2 AND NCSTN</scope>
</reference>
<reference key="33">
    <citation type="journal article" date="2004" name="Genome Biol.">
        <title>An unappreciated role for RNA surveillance.</title>
        <authorList>
            <person name="Hillman R.T."/>
            <person name="Green R.E."/>
            <person name="Brenner S.E."/>
        </authorList>
    </citation>
    <scope>SPLICE ISOFORM(S) THAT ARE POTENTIAL NMD TARGET(S)</scope>
</reference>
<reference key="34">
    <citation type="journal article" date="2004" name="J. Alzheimers Dis.">
        <title>A novel highly pathogenic Alzheimer presenilin-1 mutation in codon 117 (Pro117Ser): Comparison of clinical, neuropathological and cell culture phenotypes of Pro117Leu and Pro117Ser mutations.</title>
        <authorList>
            <person name="Dowjat W.K."/>
            <person name="Kuchna I."/>
            <person name="Wisniewski T."/>
            <person name="Wegiel J."/>
        </authorList>
    </citation>
    <scope>FUNCTION</scope>
    <scope>SUBCELLULAR LOCATION</scope>
    <scope>VARIANT AD3 SER-117</scope>
    <scope>CHARACTERIZATION OF VARIANTS AD3 LEU-117 AND SER-117</scope>
</reference>
<reference key="35">
    <citation type="journal article" date="2004" name="J. Biol. Chem.">
        <title>Phosphorylation of presenilin 1 at the caspase recognition site regulates its proteolytic processing and the progression of apoptosis.</title>
        <authorList>
            <person name="Fluhrer R."/>
            <person name="Friedlein A."/>
            <person name="Haass C."/>
            <person name="Walter J."/>
        </authorList>
    </citation>
    <scope>PHOSPHORYLATION AT SER-310 AND SER-346</scope>
    <scope>MUTAGENESIS OF SER-310 AND SER-346</scope>
</reference>
<reference key="36">
    <citation type="journal article" date="2004" name="J. Biol. Chem.">
        <title>Consensus analysis of signal peptide peptidase and homologous human aspartic proteases reveals opposite topology of catalytic domains compared with presenilins.</title>
        <authorList>
            <person name="Friedmann E."/>
            <person name="Lemberg M.K."/>
            <person name="Weihofen A."/>
            <person name="Dev K.K."/>
            <person name="Dengler U."/>
            <person name="Rovelli G."/>
            <person name="Martoglio B."/>
        </authorList>
    </citation>
    <scope>TOPOLOGY</scope>
</reference>
<reference key="37">
    <citation type="journal article" date="2004" name="J. Neurochem.">
        <title>Conserved residues within the putative active site of gamma-secretase differentially influence enzyme activity and inhibitor binding.</title>
        <authorList>
            <person name="Wrigley J.D."/>
            <person name="Nunn E.J."/>
            <person name="Nyabi O."/>
            <person name="Clarke E.E."/>
            <person name="Hunt P."/>
            <person name="Nadin A."/>
            <person name="De Strooper B."/>
            <person name="Shearman M.S."/>
            <person name="Beher D."/>
        </authorList>
    </citation>
    <scope>FUNCTION</scope>
    <scope>ACTIVE SITES ASP-257 AND ASP-385</scope>
    <scope>MUTAGENESIS OF TYR-256; ASP-257; ASP-385 AND TYR-389</scope>
</reference>
<reference key="38">
    <citation type="journal article" date="2005" name="J. Biol. Chem.">
        <title>Cadherins mediate both the association between PS1 and beta-catenin and the effects of PS1 on beta-catenin stability.</title>
        <authorList>
            <person name="Serban G."/>
            <person name="Kouchi Z."/>
            <person name="Baki L."/>
            <person name="Georgakopoulos A."/>
            <person name="Litterst C.M."/>
            <person name="Shioi J."/>
            <person name="Robakis N.K."/>
        </authorList>
    </citation>
    <scope>INTERACTION WITH CDH1 AND CTNNB1</scope>
</reference>
<reference key="39">
    <citation type="journal article" date="2006" name="Cell">
        <title>Global, in vivo, and site-specific phosphorylation dynamics in signaling networks.</title>
        <authorList>
            <person name="Olsen J.V."/>
            <person name="Blagoev B."/>
            <person name="Gnad F."/>
            <person name="Macek B."/>
            <person name="Kumar C."/>
            <person name="Mortensen P."/>
            <person name="Mann M."/>
        </authorList>
    </citation>
    <scope>PHOSPHORYLATION [LARGE SCALE ANALYSIS] AT SER-43</scope>
    <scope>IDENTIFICATION BY MASS SPECTROMETRY [LARGE SCALE ANALYSIS]</scope>
    <source>
        <tissue>Cervix carcinoma</tissue>
    </source>
</reference>
<reference key="40">
    <citation type="journal article" date="2006" name="Cell">
        <title>Presenilins form ER Ca2+ leak channels, a function disrupted by familial Alzheimer's disease-linked mutations.</title>
        <authorList>
            <person name="Tu H."/>
            <person name="Nelson O."/>
            <person name="Bezprozvanny A."/>
            <person name="Wang Z."/>
            <person name="Lee S.F."/>
            <person name="Hao Y.H."/>
            <person name="Serneels L."/>
            <person name="De Strooper B."/>
            <person name="Yu G."/>
            <person name="Bezprozvanny I."/>
        </authorList>
    </citation>
    <scope>FUNCTION</scope>
    <scope>CHARACTERIZATION OF VARIANT AD3 VAL-146</scope>
</reference>
<reference key="41">
    <citation type="journal article" date="2006" name="J. Neurochem.">
        <title>C-terminal PAL motif of presenilin and presenilin homologues required for normal active site conformation.</title>
        <authorList>
            <person name="Wang J."/>
            <person name="Beher D."/>
            <person name="Nyborg A.C."/>
            <person name="Shearman M.S."/>
            <person name="Golde T.E."/>
            <person name="Goate A."/>
        </authorList>
    </citation>
    <scope>FUNCTION OF PAL MOTIF</scope>
    <scope>MUTAGENESIS OF PRO-433; ALA-434 AND LEU-435</scope>
    <scope>CHARACTERIZATION OF VARIANT AD3 PHE-435</scope>
</reference>
<reference key="42">
    <citation type="journal article" date="1996" name="Hum. Mol. Genet.">
        <title>The presenilin genes: a new gene family involved in Alzheimer disease pathology.</title>
        <authorList>
            <person name="Cruts M."/>
            <person name="Hendriks L."/>
            <person name="Van Broeckhoven C."/>
        </authorList>
    </citation>
    <scope>VARIANTS AD3 ILE-139 AND CYS-289</scope>
</reference>
<reference key="43">
    <citation type="journal article" date="1998" name="Hum. Mutat.">
        <title>Presenilin mutations in Alzheimer's disease.</title>
        <authorList>
            <person name="Cruts M."/>
            <person name="van Broeckhoven C."/>
        </authorList>
    </citation>
    <scope>REVIEW ON VARIANTS</scope>
</reference>
<reference key="44">
    <citation type="journal article" date="2008" name="Mol. Cell">
        <title>Kinase-selective enrichment enables quantitative phosphoproteomics of the kinome across the cell cycle.</title>
        <authorList>
            <person name="Daub H."/>
            <person name="Olsen J.V."/>
            <person name="Bairlein M."/>
            <person name="Gnad F."/>
            <person name="Oppermann F.S."/>
            <person name="Korner R."/>
            <person name="Greff Z."/>
            <person name="Keri G."/>
            <person name="Stemmann O."/>
            <person name="Mann M."/>
        </authorList>
    </citation>
    <scope>IDENTIFICATION BY MASS SPECTROMETRY [LARGE SCALE ANALYSIS]</scope>
    <source>
        <tissue>Cervix carcinoma</tissue>
    </source>
</reference>
<reference key="45">
    <citation type="journal article" date="2008" name="Proc. Natl. Acad. Sci. U.S.A.">
        <title>A quantitative atlas of mitotic phosphorylation.</title>
        <authorList>
            <person name="Dephoure N."/>
            <person name="Zhou C."/>
            <person name="Villen J."/>
            <person name="Beausoleil S.A."/>
            <person name="Bakalarski C.E."/>
            <person name="Elledge S.J."/>
            <person name="Gygi S.P."/>
        </authorList>
    </citation>
    <scope>IDENTIFICATION BY MASS SPECTROMETRY [LARGE SCALE ANALYSIS]</scope>
    <source>
        <tissue>Cervix carcinoma</tissue>
    </source>
</reference>
<reference key="46">
    <citation type="journal article" date="2009" name="Sci. Signal.">
        <title>Quantitative phosphoproteomic analysis of T cell receptor signaling reveals system-wide modulation of protein-protein interactions.</title>
        <authorList>
            <person name="Mayya V."/>
            <person name="Lundgren D.H."/>
            <person name="Hwang S.-I."/>
            <person name="Rezaul K."/>
            <person name="Wu L."/>
            <person name="Eng J.K."/>
            <person name="Rodionov V."/>
            <person name="Han D.K."/>
        </authorList>
    </citation>
    <scope>IDENTIFICATION BY MASS SPECTROMETRY [LARGE SCALE ANALYSIS]</scope>
    <source>
        <tissue>Leukemic T-cell</tissue>
    </source>
</reference>
<reference key="47">
    <citation type="journal article" date="2010" name="J. Biol. Chem.">
        <title>Human CRB2 inhibits gamma-secretase cleavage of amyloid precursor protein by binding to the presenilin complex.</title>
        <authorList>
            <person name="Mitsuishi Y."/>
            <person name="Hasegawa H."/>
            <person name="Matsuo A."/>
            <person name="Araki W."/>
            <person name="Suzuki T."/>
            <person name="Tagami S."/>
            <person name="Okochi M."/>
            <person name="Takeda M."/>
            <person name="Roepman R."/>
            <person name="Nishimura M."/>
        </authorList>
    </citation>
    <scope>IDENTIFICATION IN THE GAMMA-SECRETASE COMPLEX</scope>
    <scope>INTERACTION WITH CRB2</scope>
</reference>
<reference key="48">
    <citation type="journal article" date="2010" name="Sci. Signal.">
        <title>Quantitative phosphoproteomics reveals widespread full phosphorylation site occupancy during mitosis.</title>
        <authorList>
            <person name="Olsen J.V."/>
            <person name="Vermeulen M."/>
            <person name="Santamaria A."/>
            <person name="Kumar C."/>
            <person name="Miller M.L."/>
            <person name="Jensen L.J."/>
            <person name="Gnad F."/>
            <person name="Cox J."/>
            <person name="Jensen T.S."/>
            <person name="Nigg E.A."/>
            <person name="Brunak S."/>
            <person name="Mann M."/>
        </authorList>
    </citation>
    <scope>IDENTIFICATION BY MASS SPECTROMETRY [LARGE SCALE ANALYSIS]</scope>
    <source>
        <tissue>Cervix carcinoma</tissue>
    </source>
</reference>
<reference key="49">
    <citation type="journal article" date="2010" name="Science">
        <title>Gamma-secretase gene mutations in familial acne inversa.</title>
        <authorList>
            <person name="Wang B."/>
            <person name="Yang W."/>
            <person name="Wen W."/>
            <person name="Sun J."/>
            <person name="Su B."/>
            <person name="Liu B."/>
            <person name="Ma D."/>
            <person name="Lv D."/>
            <person name="Wen Y."/>
            <person name="Qu T."/>
            <person name="Chen M."/>
            <person name="Sun M."/>
            <person name="Shen Y."/>
            <person name="Zhang X."/>
        </authorList>
    </citation>
    <scope>INVOLVEMENT IN ACNINV3</scope>
</reference>
<reference key="50">
    <citation type="journal article" date="2011" name="Sci. Signal.">
        <title>System-wide temporal characterization of the proteome and phosphoproteome of human embryonic stem cell differentiation.</title>
        <authorList>
            <person name="Rigbolt K.T."/>
            <person name="Prokhorova T.A."/>
            <person name="Akimov V."/>
            <person name="Henningsen J."/>
            <person name="Johansen P.T."/>
            <person name="Kratchmarova I."/>
            <person name="Kassem M."/>
            <person name="Mann M."/>
            <person name="Olsen J.V."/>
            <person name="Blagoev B."/>
        </authorList>
    </citation>
    <scope>PHOSPHORYLATION [LARGE SCALE ANALYSIS] AT SER-43 AND SER-367</scope>
    <scope>IDENTIFICATION BY MASS SPECTROMETRY [LARGE SCALE ANALYSIS]</scope>
</reference>
<reference key="51">
    <citation type="journal article" date="2011" name="Traffic">
        <title>Alzheimer's disease-associated ubiquilin-1 regulates presenilin-1 accumulation and aggresome formation.</title>
        <authorList>
            <person name="Viswanathan J."/>
            <person name="Haapasalo A."/>
            <person name="Bottcher C."/>
            <person name="Miettinen R."/>
            <person name="Kurkinen K.M."/>
            <person name="Lu A."/>
            <person name="Thomas A."/>
            <person name="Maynard C.J."/>
            <person name="Romano D."/>
            <person name="Hyman B.T."/>
            <person name="Berezovska O."/>
            <person name="Bertram L."/>
            <person name="Soininen H."/>
            <person name="Dantuma N.P."/>
            <person name="Tanzi R.E."/>
            <person name="Hiltunen M."/>
        </authorList>
    </citation>
    <scope>SUBCELLULAR LOCATION</scope>
    <scope>INTERACTION WITH UBQLN1</scope>
</reference>
<reference key="52">
    <citation type="journal article" date="2013" name="J. Proteome Res.">
        <title>Toward a comprehensive characterization of a human cancer cell phosphoproteome.</title>
        <authorList>
            <person name="Zhou H."/>
            <person name="Di Palma S."/>
            <person name="Preisinger C."/>
            <person name="Peng M."/>
            <person name="Polat A.N."/>
            <person name="Heck A.J."/>
            <person name="Mohammed S."/>
        </authorList>
    </citation>
    <scope>PHOSPHORYLATION [LARGE SCALE ANALYSIS] AT SER-43 AND SER-367</scope>
    <scope>IDENTIFICATION BY MASS SPECTROMETRY [LARGE SCALE ANALYSIS]</scope>
    <source>
        <tissue>Cervix carcinoma</tissue>
        <tissue>Erythroleukemia</tissue>
    </source>
</reference>
<reference key="53">
    <citation type="journal article" date="2015" name="Mol. Neurobiol.">
        <title>G206D mutation of presenilin-1 reduces Pen2 interaction, increases Abeta42/Abeta40 ratio and elevates ER Ca(2+) accumulation.</title>
        <authorList>
            <person name="Chen W.T."/>
            <person name="Hsieh Y.F."/>
            <person name="Huang Y.J."/>
            <person name="Lin C.C."/>
            <person name="Lin Y.T."/>
            <person name="Liu Y.C."/>
            <person name="Lien C.C."/>
            <person name="Cheng I.H."/>
        </authorList>
    </citation>
    <scope>FUNCTION</scope>
    <scope>INTERACTION WITH APH1A/APH1B AND PEN2</scope>
    <scope>SUBCELLULAR LOCATION</scope>
    <scope>CHARACTERIZATION OF VARIANT AD3 ASP-206</scope>
</reference>
<reference evidence="143" key="54">
    <citation type="submission" date="2009-12" db="PDB data bank">
        <title>Solution structure of presenilin-1 CTF subunit.</title>
        <authorList>
            <person name="Doetsch V."/>
        </authorList>
    </citation>
    <scope>STRUCTURE BY NMR OF 292-467</scope>
</reference>
<reference key="55">
    <citation type="journal article" date="2014" name="Nature">
        <title>Three-dimensional structure of human gamma-secretase.</title>
        <authorList>
            <person name="Lu P."/>
            <person name="Bai X.C."/>
            <person name="Ma D."/>
            <person name="Xie T."/>
            <person name="Yan C."/>
            <person name="Sun L."/>
            <person name="Yang G."/>
            <person name="Zhao Y."/>
            <person name="Zhou R."/>
            <person name="Scheres S.H."/>
            <person name="Shi Y."/>
        </authorList>
    </citation>
    <scope>STRUCTURE BY ELECTRON MICROSCOPY (4.5 ANGSTROMS)</scope>
    <scope>FUNCTION</scope>
    <scope>SUBCELLULAR LOCATION</scope>
    <scope>SUBUNIT</scope>
    <scope>TOPOLOGY</scope>
</reference>
<reference evidence="146 147 148 149" key="56">
    <citation type="journal article" date="2015" name="Elife">
        <title>Sampling the conformational space of the catalytic subunit of human gamma-secretase.</title>
        <authorList>
            <person name="Bai X.C."/>
            <person name="Rajendra E."/>
            <person name="Yang G."/>
            <person name="Shi Y."/>
            <person name="Scheres S.H."/>
        </authorList>
    </citation>
    <scope>STRUCTURE BY ELECTRON MICROSCOPY (4.00 ANGSTROMS)</scope>
    <scope>SUBUNIT</scope>
    <scope>TOPOLOGY</scope>
</reference>
<reference evidence="145" key="57">
    <citation type="journal article" date="2015" name="Nature">
        <title>An atomic structure of human gamma-secretase.</title>
        <authorList>
            <person name="Bai X.C."/>
            <person name="Yan C."/>
            <person name="Yang G."/>
            <person name="Lu P."/>
            <person name="Ma D."/>
            <person name="Sun L."/>
            <person name="Zhou R."/>
            <person name="Scheres S.H."/>
            <person name="Shi Y."/>
        </authorList>
    </citation>
    <scope>STRUCTURE BY ELECTRON MICROSCOPY (3.40 ANGSTROMS)</scope>
    <scope>SUBCELLULAR LOCATION</scope>
    <scope>TOPOLOGY</scope>
    <scope>SUBUNIT</scope>
    <scope>FUNCTION</scope>
    <scope>CATALYTIC ACTIVITY</scope>
    <scope>CHARACTERIZATION OF VARIANTS AD3 LEU-213; ILE-237 AND PHE-261</scope>
    <scope>MUTAGENESIS OF ILE-202; LEU-226; LEU-248 AND LEU-424</scope>
</reference>
<reference evidence="144" key="58">
    <citation type="journal article" date="2015" name="Proc. Natl. Acad. Sci. U.S.A.">
        <title>Structural basis of human gamma-secretase assembly.</title>
        <authorList>
            <person name="Sun L."/>
            <person name="Zhao L."/>
            <person name="Yang G."/>
            <person name="Yan C."/>
            <person name="Zhou R."/>
            <person name="Zhou X."/>
            <person name="Xie T."/>
            <person name="Zhao Y."/>
            <person name="Wu S."/>
            <person name="Li X."/>
            <person name="Shi Y."/>
        </authorList>
    </citation>
    <scope>STRUCTURE BY ELECTRON MICROSCOPY (4.40 ANGSTROMS) OF 81-463</scope>
    <scope>SUBUNIT</scope>
    <scope>TOPOLOGY</scope>
</reference>
<reference key="59">
    <citation type="journal article" date="2019" name="Nature">
        <title>Structural basis of Notch recognition by human gamma-secretase.</title>
        <authorList>
            <person name="Yang G."/>
            <person name="Zhou R."/>
            <person name="Zhou Q."/>
            <person name="Guo X."/>
            <person name="Yan C."/>
            <person name="Ke M."/>
            <person name="Lei J."/>
            <person name="Shi Y."/>
        </authorList>
    </citation>
    <scope>STRUCTURE BY ELECTRON MICROSCOPY (2.70 ANGSTROMS) OF MUTANT ALA-385 IN COMPLEX WITH NOTCH1; PSENEN; APH1A AND NCSTN</scope>
    <scope>SUBUNIT</scope>
    <scope>TOPOLOGY</scope>
    <scope>CATALYTIC ACTIVITY</scope>
    <scope>FUNCTION</scope>
    <scope>ACTIVE SITE</scope>
    <scope>MUTAGENESIS OF GLN-112; 288-TYR--SER-290; 377-ARG--LEU-381; ASP-385; LEU-432 AND 432-LEU--ALA-434</scope>
    <scope>DOMAIN</scope>
</reference>
<reference key="60">
    <citation type="journal article" date="2019" name="Science">
        <title>Recognition of the amyloid precursor protein by human gamma-secretase.</title>
        <authorList>
            <person name="Zhou R."/>
            <person name="Yang G."/>
            <person name="Guo X."/>
            <person name="Zhou Q."/>
            <person name="Lei J."/>
            <person name="Shi Y."/>
        </authorList>
    </citation>
    <scope>STRUCTURE BY ELECTRON MICROSCOPY (2.60 ANGSTROMS) OF MUTANT ALA-385 IN COMPLEX WITH APP CHAIN C83; PSENEN; APH1A AND NCSTN</scope>
    <scope>SUBUNIT</scope>
    <scope>TOPOLOGY</scope>
    <scope>CATALYTIC ACTIVITY</scope>
    <scope>FUNCTION</scope>
    <scope>ACTIVE SITE</scope>
    <scope>DOMAIN</scope>
    <scope>MUTAGENESIS OF GLN-112; 288-TYR--SER-290; 377-ARG--LEU-381; ASP-385; LEU-432 AND 432-LEU--ALA-434</scope>
</reference>
<reference key="61">
    <citation type="journal article" date="1995" name="Hum. Mol. Genet.">
        <title>Molecular genetic analysis of familial early-onset Alzheimer's disease linked to chromosome 14q24.3.</title>
        <authorList>
            <person name="Cruts M."/>
            <person name="Backhovens H."/>
            <person name="Wang S.-Y."/>
            <person name="van Gassen G."/>
            <person name="Theuns J."/>
            <person name="de Jonghe C."/>
            <person name="Wehnert A."/>
            <person name="de Voecht J."/>
            <person name="de Winter G."/>
            <person name="Cras P."/>
            <person name="Bruyland M."/>
            <person name="Datson N."/>
            <person name="Weissenbach J."/>
            <person name="den Dunnen J.T."/>
            <person name="Martin J.-J."/>
            <person name="Hendriks L."/>
            <person name="Van Broeckhoven C."/>
        </authorList>
    </citation>
    <scope>VARIANTS AD3 THR-143 AND ALA-384</scope>
</reference>
<reference key="62">
    <citation type="journal article" date="1995" name="Hum. Mol. Genet.">
        <title>Mutations of the presenilin I gene in families with early-onset Alzheimer's disease.</title>
        <authorList>
            <person name="Campion D."/>
            <person name="Flaman J.-M."/>
            <person name="Brice A."/>
            <person name="Hannequin D."/>
            <person name="Dubois B."/>
            <person name="Martin C."/>
            <person name="Moreau V."/>
            <person name="Charbonnier F."/>
            <person name="Didierjean O."/>
            <person name="Tardieu S."/>
            <person name="Penet C."/>
            <person name="Puel M."/>
            <person name="Pasquier F."/>
            <person name="le Doze F."/>
            <person name="Bellis G."/>
            <person name="Calenda A."/>
            <person name="Heilig R."/>
            <person name="Martinez M."/>
            <person name="Mallet J."/>
            <person name="Bellis M."/>
            <person name="Clerget-Darpoux F."/>
            <person name="Agid Y."/>
            <person name="Frebourg T."/>
        </authorList>
    </citation>
    <scope>VARIANTS AD3 LEU-82; HIS-115; THR-139; ARG-163; THR-231; LEU-264; VAL-392 AND TYR-410</scope>
</reference>
<reference key="63">
    <citation type="journal article" date="1995" name="Nature">
        <title>Familial Alzheimer's disease in kindreds with missense mutations in a gene on chromosome 1 related to the Alzheimer's disease type 3 gene.</title>
        <authorList>
            <person name="Rogaev E.I."/>
            <person name="Sherrington R."/>
            <person name="Rogaeva E.A."/>
            <person name="Levesque G."/>
            <person name="Ikeda M."/>
            <person name="Liang Y."/>
            <person name="Chi H."/>
            <person name="Lin C."/>
            <person name="Holman K."/>
            <person name="Tsuda T."/>
            <person name="Mar L."/>
            <person name="Sorbi S."/>
            <person name="Nacmias B."/>
            <person name="Piacentini S."/>
            <person name="Amaducci L."/>
            <person name="Chumakov I."/>
            <person name="Cohen D."/>
            <person name="Lannfelt L."/>
            <person name="Fraser P.E."/>
            <person name="Rommens J.M."/>
            <person name="St George-Hyslop P.H."/>
        </authorList>
    </citation>
    <scope>VARIANTS AD3 VAL-260; VAL-285 AND VAL-392</scope>
</reference>
<reference key="64">
    <citation type="journal article" date="1995" name="Nat. Genet.">
        <title>The structure of the presenilin 1 (S182) gene and identification of six novel mutations in early onset AD families.</title>
        <authorList>
            <person name="Clark R.F."/>
            <person name="Hutton M."/>
            <person name="Fuldner R.A."/>
            <person name="Froelich S."/>
            <person name="Karran E."/>
            <person name="Talbot C."/>
            <person name="Crook R."/>
            <person name="Lendon C.L."/>
            <person name="Prihar G."/>
            <person name="He C."/>
            <person name="Korenblat K."/>
            <person name="Martinez A."/>
            <person name="Wragg M."/>
            <person name="Busfield F."/>
            <person name="Behrens M.I."/>
            <person name="Myers A."/>
            <person name="Norton J."/>
            <person name="Morris J."/>
            <person name="Mehta N."/>
            <person name="Pearson C."/>
            <person name="Lincoln S."/>
            <person name="Baker M."/>
            <person name="Duff K."/>
            <person name="Zehr C."/>
            <person name="Perez-Tur J."/>
            <person name="Houlden H."/>
            <person name="Ruiz A."/>
            <person name="Ossa J."/>
            <person name="Lopera F."/>
            <person name="Arcos M."/>
            <person name="Madrigal L."/>
            <person name="Collinge J."/>
            <person name="Humphreys C."/>
            <person name="Asworth T."/>
            <person name="Sarner S."/>
            <person name="Fox N.C."/>
            <person name="Harvey R."/>
            <person name="Kennedy A."/>
            <person name="Roques P.K."/>
            <person name="Cline R.T."/>
            <person name="Phillips C.A."/>
            <person name="Venter J.C."/>
            <person name="Forsel L."/>
            <person name="Axelman K."/>
            <person name="Lilius L."/>
            <person name="Johnston J."/>
            <person name="Cowburn R."/>
            <person name="Viitanen M."/>
            <person name="Winblad B."/>
            <person name="Kosik K.S."/>
            <person name="Haltia M."/>
            <person name="Poyhonen M."/>
            <person name="Dickson D."/>
            <person name="Mann D."/>
            <person name="Neary D."/>
            <person name="Snowden J."/>
            <person name="Lantos P."/>
            <person name="Lannfelt L."/>
            <person name="Rossor M.N."/>
            <person name="Roberts G.W."/>
            <person name="Adams M.D."/>
            <person name="Hardy J."/>
            <person name="Goate A.M."/>
        </authorList>
    </citation>
    <scope>VARIANTS AD3 VAL-139; VAL-146; TYR-163; SER-267; ALA-280 AND GLY-280</scope>
</reference>
<reference key="65">
    <citation type="journal article" date="1996" name="Nat. Med.">
        <title>The E280A presenilin 1 Alzheimer mutation produces increased A beta 42 deposition and severe cerebellar pathology.</title>
        <authorList>
            <person name="Lemere C.A."/>
            <person name="Lopera F."/>
            <person name="Kosik K.S."/>
            <person name="Lendon C.L."/>
            <person name="Ossa J."/>
            <person name="Saido T.C."/>
            <person name="Yamaguchi H."/>
            <person name="Ruiz A."/>
            <person name="Martinez A."/>
            <person name="Madrigal L."/>
            <person name="Hincapie L."/>
            <person name="Arango J.C."/>
            <person name="Anthony D.C."/>
            <person name="Koo E.H."/>
            <person name="Goate A.M."/>
            <person name="Selkoe D.J."/>
            <person name="Arango J.C."/>
        </authorList>
    </citation>
    <scope>VARIANT AD3 ALA-280</scope>
    <scope>INVOLVEMENT IN AD3</scope>
</reference>
<reference key="66">
    <citation type="journal article" date="1996" name="Neurosci. Lett.">
        <title>Three different mutations of presenilin 1 gene in early-onset Alzheimer's disease families.</title>
        <authorList>
            <person name="Kamino K."/>
            <person name="Sato S."/>
            <person name="Sakaki Y."/>
            <person name="Yoshiiwa A."/>
            <person name="Nishiwaki Y."/>
            <person name="Takeda H."/>
            <person name="Tanabe H."/>
            <person name="Nishimura T."/>
            <person name="Li K."/>
            <person name="St George-Hyslop P.H."/>
            <person name="Miki T."/>
            <person name="Ogihara T."/>
        </authorList>
    </citation>
    <scope>VARIANTS AD3 PHE-96; ARG-163 AND THR-213</scope>
</reference>
<reference key="67">
    <citation type="journal article" date="1997" name="Ann. Neurol.">
        <title>Early-onset Alzheimer's disease with a presenilin-1 mutation at the site corresponding to the Volga German presenilin-2 mutation.</title>
        <authorList>
            <person name="Crook R."/>
            <person name="Ellis R."/>
            <person name="Shanks M."/>
            <person name="Thal L.J."/>
            <person name="Perez-Tur J."/>
            <person name="Baker M."/>
            <person name="Hutton M."/>
            <person name="Haltia T."/>
            <person name="Hardy J."/>
            <person name="Galasko D."/>
        </authorList>
    </citation>
    <scope>VARIANT AD3 ASP-135</scope>
</reference>
<reference key="68">
    <citation type="journal article" date="1997" name="Hum. Mutat.">
        <title>E280A PS-1 mutation causes Alzheimer's disease but age of onset is not modified by ApoE alleles.</title>
        <authorList>
            <person name="Lendon C.L."/>
            <person name="Martinez A."/>
            <person name="Behrens I.M."/>
            <person name="Kosik K.S."/>
            <person name="Madrigal L."/>
            <person name="Norton J."/>
            <person name="Neuman R."/>
            <person name="Myers A."/>
            <person name="Busfield F."/>
            <person name="Wragg M."/>
            <person name="Arcos M."/>
            <person name="Arango-Viana J.C."/>
            <person name="Ossa J."/>
            <person name="Ruiz A."/>
            <person name="Goate A.M."/>
            <person name="Lopera F."/>
        </authorList>
    </citation>
    <scope>VARIANT AD3 ALA-280</scope>
</reference>
<reference key="69">
    <citation type="journal article" date="1997" name="NeuroReport">
        <title>Two novel (M233T and R278T) presenilin-1 mutations in early-onset Alzheimer's disease pedigrees and preliminary evidence for association of presenilin-1 mutations with a novel phenotype.</title>
        <authorList>
            <person name="Kwok J.B.J."/>
            <person name="Taddei K."/>
            <person name="Hallupp M."/>
            <person name="Fisher C."/>
            <person name="Brooks W.S."/>
            <person name="Broe G.A."/>
            <person name="Hardy J."/>
            <person name="Fulham M.J."/>
            <person name="Nicholson G.A."/>
            <person name="Stell R."/>
            <person name="St George-Hyslop P.H."/>
            <person name="Fraser P.E."/>
            <person name="Kakulas B."/>
            <person name="Clarnette R."/>
            <person name="Relkin N."/>
            <person name="Gandy S.E."/>
            <person name="Schofield P.R."/>
            <person name="Martins R.N."/>
        </authorList>
    </citation>
    <scope>VARIANTS AD3 THR-233 AND THR-278</scope>
</reference>
<reference key="70">
    <citation type="journal article" date="1998" name="Ann. Genet.">
        <title>A novel Leu171Pro mutation in presenilin-1 gene in a Mexican family with early onset Alzheimer disease.</title>
        <authorList>
            <person name="Ramirez-Duenas M.G."/>
            <person name="Rogaeva E.A."/>
            <person name="Leal C.A."/>
            <person name="Lin C."/>
            <person name="Ramirez-Casillas G.A."/>
            <person name="Hernandez-Romo J.A."/>
            <person name="St George-Hyslop P.H."/>
            <person name="Cantu J.M."/>
        </authorList>
    </citation>
    <scope>VARIANT AD3 PRO-171</scope>
</reference>
<reference key="71">
    <citation type="journal article" date="1998" name="Ann. Neurol.">
        <title>The Glu318Gly mutation of the presenilin-1 gene does not necessarily cause Alzheimer's disease.</title>
        <authorList>
            <person name="Mattila K.M."/>
            <person name="Forsell C."/>
            <person name="Pirttila T."/>
            <person name="Rinne J.O."/>
            <person name="Lehtimaki T."/>
            <person name="Roytta M."/>
            <person name="Lilius L."/>
            <person name="Eerola A."/>
            <person name="St George-Hyslop P.H."/>
            <person name="Frey H."/>
            <person name="Lannfelt L."/>
        </authorList>
    </citation>
    <scope>VARIANT GLY-318</scope>
</reference>
<reference key="72">
    <citation type="journal article" date="1998" name="Ann. Neurol.">
        <title>Missense mutation E318G of the presenilin-1 gene appears to be a nonpathogenic polymorphism.</title>
        <authorList>
            <person name="Aldudo J."/>
            <person name="Bullido M.J."/>
            <person name="Frank A."/>
            <person name="Valdivieso F."/>
        </authorList>
    </citation>
    <scope>VARIANT GLY-318</scope>
</reference>
<reference key="73">
    <citation type="journal article" date="1998" name="Hum. Mol. Genet.">
        <title>Estimation of the genetic contribution of presenilin-1 and -2 mutations in a population-based study of presenile Alzheimer disease.</title>
        <authorList>
            <person name="Cruts M."/>
            <person name="van Duijn C.M."/>
            <person name="Backhovens H."/>
            <person name="van den Broeck M."/>
            <person name="Wehnert A."/>
            <person name="Serneels S."/>
            <person name="Sherrington R."/>
            <person name="Hutton M."/>
            <person name="Hardy J."/>
            <person name="St George-Hyslop P.H."/>
            <person name="Hofman A."/>
            <person name="van Broeckhoven C."/>
        </authorList>
    </citation>
    <scope>VARIANTS AD3 VAL-79; CYS-115 AND VAL-231</scope>
    <scope>VARIANT GLY-318</scope>
</reference>
<reference key="74">
    <citation type="journal article" date="1998" name="Hum. Mutat.">
        <title>Missense mutations in the chromosome 14 familial Alzheimer's disease presenilin 1 gene.</title>
        <authorList>
            <person name="Poorkaj P."/>
            <person name="Sharma V."/>
            <person name="Anderson L."/>
            <person name="Nemens E."/>
            <person name="Alonso M.E."/>
            <person name="Orr H."/>
            <person name="White J."/>
            <person name="Heston L."/>
            <person name="Bird T.D."/>
            <person name="Schellenberg G.D."/>
        </authorList>
    </citation>
    <scope>VARIANTS AD3 ASP-120; ARG-163; VAL-209; VAL-260; LEU-264; TYR-410 AND PRO-426</scope>
</reference>
<reference key="75">
    <citation type="journal article" date="1998" name="Hum. Mutat.">
        <title>Missense mutation in exon 11 (codon 378) of the presenilin-1 gene in a French family with early-onset Alzheimer's disease and transmission study by mismatch enhanced allele specific amplification.</title>
        <authorList>
            <person name="Besancon R."/>
            <person name="Lorenzi A."/>
            <person name="Cruts M."/>
            <person name="Radawiec S."/>
            <person name="Sturtz F."/>
            <person name="Broussolle E."/>
            <person name="Chazot G."/>
            <person name="van Broeckhoven C."/>
            <person name="Chamba G."/>
            <person name="Vandenberghe A."/>
        </authorList>
    </citation>
    <scope>VARIANT AD3 GLU-378</scope>
</reference>
<reference key="76">
    <citation type="journal article" date="1998" name="J. Med. Genet.">
        <title>De novo presenilin 1 mutations are rare in clinically sporadic, early onset Alzheimer's disease cases.</title>
        <authorList>
            <person name="Dumanchin C."/>
            <person name="Brice A."/>
            <person name="Campion D."/>
            <person name="Hannequin D."/>
            <person name="Martin C."/>
            <person name="Moreau V."/>
            <person name="Agid Y."/>
            <person name="Martinez M."/>
            <person name="Clerget-Darpoux F."/>
            <person name="Frebourg T."/>
        </authorList>
    </citation>
    <scope>VARIANT AD3 LYS-139</scope>
</reference>
<reference key="77">
    <citation type="journal article" date="1998" name="NeuroReport">
        <title>A novel Polish presenilin-1 mutation (P117L) is associated with familial Alzheimer's disease and leads to death as early as the age of 28 years.</title>
        <authorList>
            <person name="Wisniewski T."/>
            <person name="Dowjat W.K."/>
            <person name="Buxbaum J.D."/>
            <person name="Khorkova O."/>
            <person name="Efthimiopoulos S."/>
            <person name="Kulczycki J."/>
            <person name="Lojkowska W."/>
            <person name="Wegiel J."/>
            <person name="Wisniewski H.M."/>
            <person name="Frangione B."/>
        </authorList>
    </citation>
    <scope>VARIANT AD3 LEU-117</scope>
</reference>
<reference key="78">
    <citation type="journal article" date="1998" name="NeuroReport">
        <title>Two novel presenilin-1 mutations (Ser169Leu and Pro436Gln) associated with very early onset Alzheimer's disease.</title>
        <authorList>
            <person name="Taddei K."/>
            <person name="Kwok J.B."/>
            <person name="Kril J.J."/>
            <person name="Halliday G.M."/>
            <person name="Creasey H."/>
            <person name="Hallupp M."/>
            <person name="Fisher C."/>
            <person name="Brooks W.S."/>
            <person name="Chung C."/>
            <person name="Andrews C."/>
            <person name="Masters C.L."/>
            <person name="Schofield P.R."/>
            <person name="Martins R.N."/>
        </authorList>
    </citation>
    <scope>VARIANTS AD3 LEU-169 AND GLN-436</scope>
</reference>
<reference key="79">
    <citation type="journal article" date="1999" name="Am. J. Hum. Genet.">
        <title>The Glu318Gly substitution in presenilin 1 is not causally related to Alzheimer disease.</title>
        <authorList>
            <person name="Dermaut B."/>
            <person name="Cruts M."/>
            <person name="Slooter A.J.C."/>
            <person name="van Gestel S."/>
            <person name="de Jonghe C."/>
            <person name="Vanderstichele H."/>
            <person name="Vanmechelen E."/>
            <person name="Breteler M.M."/>
            <person name="Hofman A."/>
            <person name="van Duijn C.M."/>
            <person name="van Broeckhoven C."/>
        </authorList>
    </citation>
    <scope>VARIANT GLY-318</scope>
</reference>
<reference key="80">
    <citation type="journal article" date="1999" name="Am. J. Hum. Genet.">
        <title>Early-onset autosomal dominant Alzheimer disease: prevalence, genetic heterogeneity, and mutation spectrum.</title>
        <authorList>
            <person name="Campion D."/>
            <person name="Dumanchin C."/>
            <person name="Hannequin D."/>
            <person name="Dubois B."/>
            <person name="Belliard S."/>
            <person name="Puel M."/>
            <person name="Thomas-Anterion C."/>
            <person name="Michon A."/>
            <person name="Martin C."/>
            <person name="Charbonnier F."/>
            <person name="Raux G."/>
            <person name="Camuzat A."/>
            <person name="Penet C."/>
            <person name="Mesnage V."/>
            <person name="Martinez M."/>
            <person name="Clerget-Darpoux F."/>
            <person name="Brice A."/>
            <person name="Frebourg T."/>
        </authorList>
    </citation>
    <scope>VARIANTS AD3 LEU-82; HIS-115; ASP-120; THR-139; LEU-146; ILE-147; ARG-163; CYS-165; TRP-173; THR-231; THR-233; PRO-235; LEU-264; ILE-390; VAL-392 AND TYR-410</scope>
    <scope>VARIANT GLY-318</scope>
</reference>
<reference key="81">
    <citation type="journal article" date="1999" name="Hum. Mutat.">
        <title>Pathogenic presenilin 1 mutations (P436S and I143F) in early-onset Alzheimer's disease in the UK.</title>
        <authorList>
            <person name="Palmer M.S."/>
            <person name="Beck J.A."/>
            <person name="Campbell T.A."/>
            <person name="Humphries C.B."/>
            <person name="Roques P.K."/>
            <person name="Fox N.C."/>
            <person name="Harvey R."/>
            <person name="Rossor M.N."/>
            <person name="Collinge J."/>
        </authorList>
    </citation>
    <scope>VARIANTS AD3 PHE-143 AND SER-436</scope>
</reference>
<reference key="82">
    <citation type="journal article" date="1999" name="Hum. Mutat.">
        <title>A novel missense mutation (G209R) in exon 8 of the presenilin 1 gene in a Japanese family with presenile familial Alzheimer's disease.</title>
        <authorList>
            <person name="Sugiyama N."/>
            <person name="Suzuki K."/>
            <person name="Matsumura T."/>
            <person name="Kawanishi C."/>
            <person name="Onishi H."/>
            <person name="Yamada Y."/>
            <person name="Iseki E."/>
            <person name="Kosaka K."/>
        </authorList>
    </citation>
    <scope>VARIANT AD3 ARG-209</scope>
</reference>
<reference key="83">
    <citation type="journal article" date="1999" name="Hum. Mutat.">
        <title>DGGE method for the mutational analysis of the coding and proximal promoter regions of the Alzheimer's disease presenilin-1 gene: two novel mutations.</title>
        <authorList>
            <person name="Aldudo J."/>
            <person name="Bullido M.J."/>
            <person name="Valdivieso F."/>
        </authorList>
    </citation>
    <scope>VARIANTS AD3 LEU-233; ARG-282 AND THR-409</scope>
    <scope>VARIANT GLY-318</scope>
</reference>
<reference key="84">
    <citation type="journal article" date="1999" name="Neurology">
        <title>A presenilin 1 mutation (Ser169Pro) associated with early-onset AD and myoclonic seizures.</title>
        <authorList>
            <person name="Ezquerra M."/>
            <person name="Carnero C."/>
            <person name="Blesa R."/>
            <person name="Gelpi J.L."/>
            <person name="Ballesta F."/>
            <person name="Oliva R."/>
        </authorList>
    </citation>
    <scope>VARIANT AD3 PRO-169</scope>
</reference>
<reference key="85">
    <citation type="journal article" date="1999" name="NeuroReport">
        <title>Early-onset Alzheimer's disease caused by a novel mutation at codon 219 of the presenilin-1 gene.</title>
        <authorList>
            <person name="Smith M.J."/>
            <person name="Gardner R.J."/>
            <person name="Knight M.A."/>
            <person name="Forrest S.M."/>
            <person name="Beyreuther K."/>
            <person name="Storey E."/>
            <person name="McLean C.A."/>
            <person name="Cotton R.G."/>
            <person name="Cappal R."/>
            <person name="Masters C.L."/>
        </authorList>
    </citation>
    <scope>VARIANT AD3 PRO-219</scope>
</reference>
<reference key="86">
    <citation type="journal article" date="1999" name="NeuroReport">
        <title>A presenilin-1 Thr116Asn substitution in a family with early-onset Alzheimer's disease.</title>
        <authorList>
            <person name="Romero I."/>
            <person name="Joergensen P."/>
            <person name="Bolwig G."/>
            <person name="Fraser P.E."/>
            <person name="Rogaeva E."/>
            <person name="Mann D."/>
            <person name="Havsager A.-M."/>
            <person name="Joergensen A.L."/>
        </authorList>
    </citation>
    <scope>VARIANT AD3 ASN-116</scope>
</reference>
<reference key="87">
    <citation type="journal article" date="2000" name="Am. J. Hum. Genet.">
        <title>High prevalence of pathogenic mutations in patients with early-onset dementia detected by sequence analyses of four different genes.</title>
        <authorList>
            <person name="Finckh U."/>
            <person name="Mueller-Thomsen T."/>
            <person name="Mann U."/>
            <person name="Eggers C."/>
            <person name="Marksteiner J."/>
            <person name="Meins W."/>
            <person name="Binetti G."/>
            <person name="Alberici A."/>
            <person name="Hock C."/>
            <person name="Nitsch R.M."/>
            <person name="Gal A."/>
        </authorList>
    </citation>
    <scope>VARIANTS AD3 VAL-79; LEU-105 AND VAL-139</scope>
    <scope>VARIANT GLY-318</scope>
</reference>
<reference key="88">
    <citation type="journal article" date="2000" name="J. Neurol. Neurosurg. Psych.">
        <title>Novel presenilin-1 mutation with widespread cortical amyloid deposition but limited cerebral amyloid angiopathy.</title>
        <authorList>
            <person name="Yasuda M."/>
            <person name="Maeda S."/>
            <person name="Kawamata T."/>
            <person name="Tamaoka A."/>
            <person name="Yamamoto Y."/>
            <person name="Kuroda S."/>
            <person name="Maeda K."/>
            <person name="Tanaka C."/>
        </authorList>
    </citation>
    <scope>VARIANT AD3 SER-405</scope>
</reference>
<reference key="89">
    <citation type="journal article" date="2000" name="Biochem. Biophys. Res. Commun.">
        <title>The presenilin 1 C92S mutation increases abeta 42 production.</title>
        <authorList>
            <person name="Lewis P.A."/>
            <person name="Perez-Tur J."/>
            <person name="Golde T.E."/>
            <person name="Hardy J."/>
        </authorList>
    </citation>
    <scope>VARIANT AD3 SER-92</scope>
</reference>
<reference key="90">
    <citation type="journal article" date="2000" name="Neurology">
        <title>Dementia with prominent frontotemporal features associated with L113P presenilin 1 mutation.</title>
        <authorList>
            <person name="Raux G."/>
            <person name="Gantier R."/>
            <person name="Thomas-Anterion C."/>
            <person name="Boulliat J."/>
            <person name="Verpillat P."/>
            <person name="Hannequin D."/>
            <person name="Brice A."/>
            <person name="Frebourg T."/>
            <person name="Campion D."/>
        </authorList>
    </citation>
    <scope>VARIANT FTD1 PRO-113</scope>
</reference>
<reference key="91">
    <citation type="journal article" date="2001" name="Am. J. Med. Genet.">
        <title>Systematic genetic study of Alzheimer disease in Latin America: mutation frequencies of the amyloid beta precursor protein and presenilin genes in Colombia.</title>
        <authorList>
            <person name="Arango D."/>
            <person name="Cruts M."/>
            <person name="Torres O."/>
            <person name="Backhovens H."/>
            <person name="Serrano M.L."/>
            <person name="Villareal E."/>
            <person name="Montanes P."/>
            <person name="Matallana D."/>
            <person name="Cano C."/>
            <person name="Van Broeckhoven C."/>
            <person name="Jacquier M."/>
        </authorList>
    </citation>
    <scope>VARIANTS AD3 MET-94; THR-143 AND ALA-280</scope>
    <scope>VARIANT GLY-318</scope>
</reference>
<reference key="92">
    <citation type="journal article" date="2001" name="Brain">
        <title>Cerebral amyloid angiopathy is a pathogenic lesion in Alzheimer's disease due to a novel presenilin 1 mutation.</title>
        <authorList>
            <person name="Dermaut B."/>
            <person name="Kumar-Singh S."/>
            <person name="De Jonghe C."/>
            <person name="Cruts M."/>
            <person name="Loefgren A."/>
            <person name="Luebke U."/>
            <person name="Cras P."/>
            <person name="Dom R."/>
            <person name="De Deyn P.P."/>
            <person name="Martin J.J."/>
            <person name="Van Broeckhoven C."/>
        </authorList>
    </citation>
    <scope>VARIANT AD3 VAL-282</scope>
    <scope>CHARACTERIZATION OF VARIANT AD3 VAL-282</scope>
</reference>
<reference key="93">
    <citation type="journal article" date="2001" name="Hum. Genet.">
        <authorList>
            <person name="Ringman J.M."/>
            <person name="Jain V."/>
            <person name="Murrell J."/>
            <person name="Ghetti B."/>
            <person name="Cochran E.J."/>
        </authorList>
    </citation>
    <scope>ERRATUM OF PUBMED:11701593</scope>
    <scope>VARIANT AD3 GLU-431</scope>
</reference>
<reference key="94">
    <citation type="journal article" date="2001" name="JAMA">
        <title>A founder mutation in presenilin 1 causing early-onset Alzheimer disease in unrelated Caribbean Hispanic families.</title>
        <authorList>
            <person name="Athan E.S."/>
            <person name="Williamson J."/>
            <person name="Ciappa A."/>
            <person name="Santana V."/>
            <person name="Romas S.N."/>
            <person name="Lee J.H."/>
            <person name="Rondon H."/>
            <person name="Lantigua R.A."/>
            <person name="Medrano M."/>
            <person name="Torres M."/>
            <person name="Arawaka S."/>
            <person name="Rogaeva E."/>
            <person name="Song Y.-Q."/>
            <person name="Sato C."/>
            <person name="Kawarai T."/>
            <person name="Fafel K.C."/>
            <person name="Boss M.A."/>
            <person name="Seltzer W.K."/>
            <person name="Stern Y."/>
            <person name="St George-Hyslop P.H."/>
            <person name="Tycko B."/>
            <person name="Mayeux R."/>
        </authorList>
    </citation>
    <scope>VARIANT AD3 ALA-206</scope>
</reference>
<reference key="95">
    <citation type="journal article" date="2001" name="J. Neurol. Neurosurg. Psych.">
        <title>Very early onset Alzheimer's disease with spastic paraparesis associated with a novel presenilin 1 mutation (Phe237Ile).</title>
        <authorList>
            <person name="Sodeyama N."/>
            <person name="Iwata T."/>
            <person name="Ishikawa K."/>
            <person name="Mizusawa H."/>
            <person name="Yamada M."/>
            <person name="Itoh Y."/>
            <person name="Otomo E."/>
            <person name="Matsushita M."/>
            <person name="Komatsuzaki Y."/>
        </authorList>
    </citation>
    <scope>VARIANT AD3 ILE-237</scope>
</reference>
<reference key="96">
    <citation type="journal article" date="2001" name="Neurology">
        <title>Screening for PS1 mutations in a referral-based series of AD cases: 21 novel mutations.</title>
        <authorList>
            <person name="Rogaeva E.A."/>
            <person name="Fafel K.C."/>
            <person name="Song Y.Q."/>
            <person name="Medeiros H."/>
            <person name="Sato C."/>
            <person name="Liang Y."/>
            <person name="Richard E."/>
            <person name="Rogaev E.I."/>
            <person name="Frommelt P."/>
            <person name="Sadovnick A.D."/>
            <person name="Meschino W."/>
            <person name="Rockwood K."/>
            <person name="Boss M.A."/>
            <person name="Mayeux R."/>
            <person name="St George-Hyslop P."/>
        </authorList>
    </citation>
    <scope>VARIANTS AD3 GLN-35; VAL-79; CYS-115; ASN-116; THR-143; ILE-146; LEU-146; VAL-146; TYR-156 DELINS PHE-THR-TYR; ARG-163; LEU-177; SER-177; PRO-178; ALA-206; SER-206; GLU-209; LEU-213; ARG-222; THR-231; LEU-233; PRO-235; PHE-261; ARG-274; ARG-352 INS; ILE-354; GLN-358; TYR-365; VAL-394; PHE-418; GLU-431; PHE-435 AND VAL-439</scope>
    <scope>VARIANT GLY-318</scope>
</reference>
<reference key="97">
    <citation type="journal article" date="2002" name="Am. J. Med. Genet.">
        <title>Molecular evidence of presenilin 1 mutation in familial early onset dementia.</title>
        <authorList>
            <person name="Matsubara-Tsutsui M."/>
            <person name="Yasuda M."/>
            <person name="Yamagata H."/>
            <person name="Nomura T."/>
            <person name="Taguchi K."/>
            <person name="Kohara K."/>
            <person name="Miyoshi K."/>
            <person name="Miki T."/>
        </authorList>
    </citation>
    <scope>VARIANT AD3 SER-266</scope>
</reference>
<reference key="98">
    <citation type="journal article" date="2002" name="J. Neurol. Neurosurg. Psych.">
        <title>A novel mutation (V89L) in the presenilin 1 gene in a family with early onset Alzheimer's disease and marked behavioural disturbances.</title>
        <authorList>
            <person name="Queralt R."/>
            <person name="Ezquerra M."/>
            <person name="Lleo A."/>
            <person name="Castellvi M."/>
            <person name="Gelpi J."/>
            <person name="Ferrer I."/>
            <person name="Acarin N."/>
            <person name="Pasarin L."/>
            <person name="Blesa R."/>
            <person name="Oliva R."/>
        </authorList>
    </citation>
    <scope>VARIANT AD3 LEU-89</scope>
</reference>
<reference key="99">
    <citation type="journal article" date="2002" name="Neurology">
        <title>Presenilin-1 mutation (E280G), spastic paraparesis, and cranial MRI white-matter abnormalities.</title>
        <authorList>
            <person name="O'Riordan S."/>
            <person name="McMonagle P."/>
            <person name="Janssen J.C."/>
            <person name="Fox N.C."/>
            <person name="Farrell M."/>
            <person name="Collinge J."/>
            <person name="Rossor M.N."/>
            <person name="Hutchinson M."/>
        </authorList>
    </citation>
    <scope>VARIANT AD3 GLY-280</scope>
</reference>
<reference key="100">
    <citation type="journal article" date="2002" name="Proc. Natl. Acad. Sci. U.S.A.">
        <title>Presenilin-1 mutations of leucine 166 equally affect the generation of the Notch and APP intracellular domains independent of their effect on Abeta 42 production.</title>
        <authorList>
            <person name="Moehlmann T."/>
            <person name="Winkler E."/>
            <person name="Xia X."/>
            <person name="Edbauer D."/>
            <person name="Murrell J."/>
            <person name="Capell A."/>
            <person name="Kaether C."/>
            <person name="Zheng H."/>
            <person name="Ghetti B."/>
            <person name="Haass C."/>
            <person name="Steiner H."/>
        </authorList>
    </citation>
    <scope>VARIANT AD3 PRO-166</scope>
</reference>
<reference key="101">
    <citation type="journal article" date="2002" name="Neurogenetics">
        <title>A novel presenilin 1 mutation (L174 M) in a large Cuban family with early onset Alzheimer disease.</title>
        <authorList>
            <person name="Bertoli-Avella A.M."/>
            <person name="Marcheco Teruel B."/>
            <person name="Llibre Rodriguez J.J."/>
            <person name="Gomez Viera N."/>
            <person name="Borrajero-Martinez I."/>
            <person name="Severijnen E.A."/>
            <person name="Joosse M."/>
            <person name="van Duijn C.M."/>
            <person name="Heredero Baute L."/>
            <person name="Heutink P."/>
        </authorList>
    </citation>
    <scope>VARIANT AD3 MET-174</scope>
</reference>
<reference key="102">
    <citation type="journal article" date="2003" name="J. Biol. Chem.">
        <title>Presenilin-1 mutation L271V results in altered exon 8 splicing and Alzheimer's disease with non-cored plaques and no neuritic dystrophy.</title>
        <authorList>
            <person name="Kwok J.B.J."/>
            <person name="Halliday G.M."/>
            <person name="Brooks W.S."/>
            <person name="Dolios G."/>
            <person name="Laudon H."/>
            <person name="Murayama O."/>
            <person name="Hallupp M."/>
            <person name="Badenhop R.F."/>
            <person name="Vickers J."/>
            <person name="Wang R."/>
            <person name="Naslund J."/>
            <person name="Takashima A."/>
            <person name="Gandy S.E."/>
            <person name="Schofield P.R."/>
        </authorList>
    </citation>
    <scope>VARIANT AD3 VAL-271</scope>
</reference>
<reference key="103">
    <citation type="journal article" date="2003" name="Neurology">
        <title>Early onset familial Alzheimer's disease: Mutation frequency in 31 families.</title>
        <authorList>
            <person name="Janssen J.C."/>
            <person name="Beck J.A."/>
            <person name="Campbell T.A."/>
            <person name="Dickinson A."/>
            <person name="Fox N.C."/>
            <person name="Harvey R.J."/>
            <person name="Houlden H."/>
            <person name="Rossor M.N."/>
            <person name="Collinge J."/>
        </authorList>
    </citation>
    <scope>VARIANTS AD3 CYS-115; ILE-146; VAL-153; CYS-154; ILE-168 DEL; PRO-171; ASP-184; PHE-229; VAL-235; LEU-237; VAL-260; PHE-263; HIS-269; MET-377 AND VAL-378</scope>
    <scope>VARIANT GLY-318</scope>
</reference>
<reference key="104">
    <citation type="journal article" date="2004" name="Ann. Neurol.">
        <title>A novel presenilin 1 mutation associated with Pick's disease but not beta-amyloid plaques.</title>
        <authorList>
            <person name="Dermaut B."/>
            <person name="Kumar-Singh S."/>
            <person name="Engelborghs S."/>
            <person name="Theuns J."/>
            <person name="Rademakers R."/>
            <person name="Saerens J."/>
            <person name="Pickut B.A."/>
            <person name="Peeters K."/>
            <person name="van den Broeck M."/>
            <person name="Vennekens K."/>
            <person name="Claes S."/>
            <person name="Cruts M."/>
            <person name="Cras P."/>
            <person name="Martin J.J."/>
            <person name="Van Broeckhoven C."/>
            <person name="De Deyn P.P."/>
        </authorList>
    </citation>
    <scope>VARIANT PIDB VAL-183</scope>
    <scope>CHARACTERIZATION OF VARIANTS AD3 THR-143 AND VAL-282</scope>
    <scope>CHARACTERIZATION OF VARIANT PIDB VAL-183</scope>
</reference>
<reference key="105">
    <citation type="journal article" date="2004" name="Arch. Neurol.">
        <title>A novel presenilin-1 mutation (Leu85Pro) in early-onset Alzheimer disease with spastic paraparesis.</title>
        <authorList>
            <person name="Ataka S."/>
            <person name="Tomiyama T."/>
            <person name="Takuma H."/>
            <person name="Yamashita T."/>
            <person name="Shimada H."/>
            <person name="Tsutada T."/>
            <person name="Kawabata K."/>
            <person name="Mori H."/>
            <person name="Miki T."/>
        </authorList>
    </citation>
    <scope>VARIANT AD3 PRO-85</scope>
    <scope>CHARACTERIZATION OF VARIANT AD3 PRO-85</scope>
</reference>
<reference key="106">
    <citation type="journal article" date="2004" name="Neurology">
        <title>A presenilin 1 R278I mutation presenting with language impairment.</title>
        <authorList>
            <person name="Godbolt A.K."/>
            <person name="Beck J.A."/>
            <person name="Collinge J."/>
            <person name="Garrard P."/>
            <person name="Warren J.D."/>
            <person name="Fox N.C."/>
            <person name="Rossor M.N."/>
        </authorList>
    </citation>
    <scope>VARIANT AD3 ILE-278</scope>
</reference>
<reference key="107">
    <citation type="journal article" date="2004" name="Neurosci. Lett.">
        <title>A novel presenilin 1 mutation (Y154N) in a patient with early onset Alzheimer's disease with spastic paraparesis.</title>
        <authorList>
            <person name="Hattori S."/>
            <person name="Sakuma K."/>
            <person name="Wakutani Y."/>
            <person name="Wada K."/>
            <person name="Shimoda M."/>
            <person name="Urakami K."/>
            <person name="Kowa H."/>
            <person name="Nakashima K."/>
        </authorList>
    </citation>
    <scope>VARIANT AD3 ASN-154</scope>
</reference>
<reference key="108">
    <citation type="journal article" date="2005" name="Arch. Neurol.">
        <title>Novel presenilin 1 mutation (S170F) causing Alzheimer disease with Lewy bodies in the third decade of life.</title>
        <authorList>
            <person name="Snider B.J."/>
            <person name="Norton J."/>
            <person name="Coats M.A."/>
            <person name="Chakraverty S."/>
            <person name="Hou C.E."/>
            <person name="Jervis R."/>
            <person name="Lendon C.L."/>
            <person name="Goate A.M."/>
            <person name="McKeel D.W. Jr."/>
            <person name="Morris J.C."/>
        </authorList>
    </citation>
    <scope>VARIANT AD3 PHE-170</scope>
</reference>
<reference key="109">
    <citation type="journal article" date="2005" name="J. Alzheimers Dis.">
        <title>One novel presenilin-1 gene mutation in a Chinese pedigree of familial Alzheimer's disease.</title>
        <authorList>
            <person name="Jia J."/>
            <person name="Xu E."/>
            <person name="Shao Y."/>
            <person name="Jia J."/>
            <person name="Sun Y."/>
            <person name="Li D."/>
        </authorList>
    </citation>
    <scope>VARIANT AD3 LEU-97</scope>
</reference>
<reference key="110">
    <citation type="journal article" date="2006" name="Am. J. Hum. Genet.">
        <title>Mutations of presenilin genes in dilated cardiomyopathy and heart failure.</title>
        <authorList>
            <person name="Li D."/>
            <person name="Parks S.B."/>
            <person name="Kushner J.D."/>
            <person name="Nauman D."/>
            <person name="Burgess D."/>
            <person name="Ludwigsen S."/>
            <person name="Partain J."/>
            <person name="Nixon R.R."/>
            <person name="Allen C.N."/>
            <person name="Irwin R.P."/>
            <person name="Jakobs P.M."/>
            <person name="Litt M."/>
            <person name="Hershberger R.E."/>
        </authorList>
    </citation>
    <scope>VARIANT CMD1U GLY-333</scope>
</reference>
<reference key="111">
    <citation type="journal article" date="2006" name="Hum. Mutat.">
        <title>Mean age-of-onset of familial alzheimer disease caused by presenilin mutations correlates with both increased Abeta42 and decreased Abeta40.</title>
        <authorList>
            <person name="Kumar-Singh S."/>
            <person name="Theuns J."/>
            <person name="Van Broeck B."/>
            <person name="Pirici D."/>
            <person name="Vennekens K."/>
            <person name="Corsmit E."/>
            <person name="Cruts M."/>
            <person name="Dermaut B."/>
            <person name="Wang R."/>
            <person name="Van Broeckhoven C."/>
        </authorList>
    </citation>
    <scope>CHARACTERIZATION OF VARIANTS AD3 VAL-79; THR-143; VAL-231; PHE-262; PHE-263; VAL-282 AND ALA-384</scope>
</reference>
<reference key="112">
    <citation type="journal article" date="2006" name="Neurogenetics">
        <title>Founder effect for the Ala431Glu mutation of the presenilin 1 gene causing early-onset Alzheimer's disease in Mexican families.</title>
        <authorList>
            <person name="Yescas P."/>
            <person name="Huertas-Vazquez A."/>
            <person name="Villarreal-Molina M.T."/>
            <person name="Rasmussen A."/>
            <person name="Tusie-Luna M.T."/>
            <person name="Lopez M."/>
            <person name="Canizales-Quinteros S."/>
            <person name="Alonso M.E."/>
        </authorList>
    </citation>
    <scope>VARIANT AD3 GLU-431</scope>
</reference>
<reference key="113">
    <citation type="journal article" date="2006" name="Neurogenetics">
        <title>The A431E mutation in PSEN1 causing familial Alzheimer's disease originating in Jalisco State, Mexico: an additional fifteen families.</title>
        <authorList>
            <person name="Murrell J."/>
            <person name="Ghetti B."/>
            <person name="Cochran E."/>
            <person name="Macias-Islas M.A."/>
            <person name="Medina L."/>
            <person name="Varpetian A."/>
            <person name="Cummings J.L."/>
            <person name="Mendez M.F."/>
            <person name="Kawas C."/>
            <person name="Chui H."/>
            <person name="Ringman J.M."/>
        </authorList>
    </citation>
    <scope>VARIANT AD3 GLU-431</scope>
</reference>
<reference key="114">
    <citation type="journal article" date="2007" name="Ann. Neurol.">
        <title>Extreme cerebrospinal fluid amyloid beta levels identify family with late-onset Alzheimer's disease presenilin 1 mutation.</title>
        <authorList>
            <person name="Kauwe J.S."/>
            <person name="Jacquart S."/>
            <person name="Chakraverty S."/>
            <person name="Wang J."/>
            <person name="Mayo K."/>
            <person name="Fagan A.M."/>
            <person name="Holtzman D.M."/>
            <person name="Morris J.C."/>
            <person name="Goate A.M."/>
        </authorList>
    </citation>
    <scope>VARIANT AD3 VAL-79</scope>
    <scope>CHARACTERIZATION OF VARIANT AD3 VAL-79</scope>
</reference>
<reference key="115">
    <citation type="journal article" date="2007" name="Arch. Neurol.">
        <title>Association of a presenilin 1 S170F mutation with a novel Alzheimer disease molecular phenotype.</title>
        <authorList>
            <person name="Piccini A."/>
            <person name="Zanusso G."/>
            <person name="Borghi R."/>
            <person name="Noviello C."/>
            <person name="Monaco S."/>
            <person name="Russo R."/>
            <person name="Damonte G."/>
            <person name="Armirotti A."/>
            <person name="Gelati M."/>
            <person name="Giordano R."/>
            <person name="Zambenedetti P."/>
            <person name="Russo C."/>
            <person name="Ghetti B."/>
            <person name="Tabaton M."/>
        </authorList>
    </citation>
    <scope>VARIANT AD3 PHE-170</scope>
</reference>
<reference key="116">
    <citation type="journal article" date="2007" name="J. Biol. Chem.">
        <title>Ligand binding and calcium influx induce distinct ectodomain/gamma-secretase-processing pathways of EphB2 receptor.</title>
        <authorList>
            <person name="Litterst C."/>
            <person name="Georgakopoulos A."/>
            <person name="Shioi J."/>
            <person name="Ghersi E."/>
            <person name="Wisniewski T."/>
            <person name="Wang R."/>
            <person name="Ludwig A."/>
            <person name="Robakis N.K."/>
        </authorList>
    </citation>
    <scope>CHARACTERIZATION OF VARIANTS AD3 LEU-117; LEU-146; GLU-246; VAL-260; LEU-264 AND GLY-280</scope>
    <scope>FUNCTION</scope>
    <scope>MUTAGENESIS OF ASP-257</scope>
</reference>
<reference key="117">
    <citation type="journal article" date="2008" name="Am. J. Hum. Genet.">
        <title>Mutations in the MESP2 gene cause spondylothoracic dysostosis/Jarcho-Levin syndrome.</title>
        <authorList>
            <person name="Cornier A.S."/>
            <person name="Staehling-Hampton K."/>
            <person name="Delventhal K.M."/>
            <person name="Saga Y."/>
            <person name="Caubet J.-F."/>
            <person name="Sasaki N."/>
            <person name="Ellard S."/>
            <person name="Young E."/>
            <person name="Ramirez N."/>
            <person name="Carlo S.E."/>
            <person name="Torres J."/>
            <person name="Emans J.B."/>
            <person name="Turnpenny P.D."/>
            <person name="Pourquie O."/>
        </authorList>
    </citation>
    <scope>VARIANT GLY-318</scope>
</reference>
<reference key="118">
    <citation type="journal article" date="2008" name="J. Biol. Chem.">
        <title>Enzymatic characteristics of I213T mutant presenilin-1/gamma-secretase in cell models and knock-in mouse brains: familial Alzheimer disease-linked mutation impairs gamma-site cleavage of amyloid precursor protein C-terminal fragment beta.</title>
        <authorList>
            <person name="Shimojo M."/>
            <person name="Sahara N."/>
            <person name="Mizoroki T."/>
            <person name="Funamoto S."/>
            <person name="Morishima-Kawashima M."/>
            <person name="Kudo T."/>
            <person name="Takeda M."/>
            <person name="Ihara Y."/>
            <person name="Ichinose H."/>
            <person name="Takashima A."/>
        </authorList>
    </citation>
    <scope>CHARACTERIZATION OF VARIANT AD3 THR-213</scope>
</reference>
<reference key="119">
    <citation type="journal article" date="2009" name="Am. J. Alzheimers Dis. Other Demen.">
        <title>Novel PSEN1 mutation in a Bulgarian patient with very early-onset Alzheimer's disease, spastic paraparesis, and extrapyramidal signs.</title>
        <authorList>
            <person name="Dintchov Traykov L."/>
            <person name="Mehrabian S."/>
            <person name="Van den Broeck M."/>
            <person name="Radoslavova Raycheva M."/>
            <person name="Cruts M."/>
            <person name="Kirilova Jordanova A."/>
            <person name="Van Broeckhoven C."/>
        </authorList>
    </citation>
    <scope>VARIANT AD3 VAL-381</scope>
</reference>
<reference key="120">
    <citation type="journal article" date="2009" name="Neurology">
        <title>Presenilin1 G217R mutation linked to Alzheimer disease with cotton wool plaques.</title>
        <authorList>
            <person name="Norton J.B."/>
            <person name="Cairns N.J."/>
            <person name="Chakraverty S."/>
            <person name="Wang J."/>
            <person name="Levitch D."/>
            <person name="Galvin J.E."/>
            <person name="Goate A."/>
        </authorList>
    </citation>
    <scope>VARIANT AD3 ARG-217</scope>
    <scope>CHARACTERIZATION OF VARIANT AD3 ARG-217</scope>
</reference>
<reference key="121">
    <citation type="journal article" date="2010" name="Neurology">
        <title>Worldwide distribution of PSEN1 Met146Leu mutation: a large variability for a founder mutation.</title>
        <authorList>
            <person name="Bruni A.C."/>
            <person name="Bernardi L."/>
            <person name="Colao R."/>
            <person name="Rubino E."/>
            <person name="Smirne N."/>
            <person name="Frangipane F."/>
            <person name="Terni B."/>
            <person name="Curcio S.A."/>
            <person name="Mirabelli M."/>
            <person name="Clodomiro A."/>
            <person name="Di Lorenzo R."/>
            <person name="Maletta R."/>
            <person name="Anfossi M."/>
            <person name="Gallo M."/>
            <person name="Geracitano S."/>
            <person name="Tomaino C."/>
            <person name="Muraca M.G."/>
            <person name="Leotta A."/>
            <person name="Lio S.G."/>
            <person name="Pinessi L."/>
            <person name="Rainero I."/>
            <person name="Sorbi S."/>
            <person name="Nee L."/>
            <person name="Milan G."/>
            <person name="Pappata S."/>
            <person name="Postiglione A."/>
            <person name="Abbamondi N."/>
            <person name="Forloni G."/>
            <person name="St George Hyslop P."/>
            <person name="Rogaeva E."/>
            <person name="Bugiani O."/>
            <person name="Giaccone G."/>
            <person name="Foncin J.F."/>
            <person name="Spillantini M.G."/>
            <person name="Puccio G."/>
        </authorList>
    </citation>
    <scope>VARIANT AD3 LEU-146</scope>
</reference>
<reference key="122">
    <citation type="journal article" date="2010" name="J. Biol. Chem.">
        <title>A presenilin-1 mutation identified in familial Alzheimer disease with cotton wool plaques causes a nearly complete loss of gamma-secretase activity.</title>
        <authorList>
            <person name="Heilig E.A."/>
            <person name="Xia W."/>
            <person name="Shen J."/>
            <person name="Kelleher R.J. III"/>
        </authorList>
    </citation>
    <scope>VARIANT AD3 PHE-435</scope>
    <scope>CHARACTERIZATION OF VARIANTS AD3 PHE-435; GLN-436 AND SER-436</scope>
    <scope>MUTAGENESIS OF PRO-433 AND LEU-435</scope>
    <scope>FUNCTION</scope>
</reference>
<reference key="123">
    <citation type="journal article" date="2011" name="J. Alzheimers Dis.">
        <title>Clinical phenotype of G206D mutation in the presenilin 1 gene in pathologically confirmed familial Alzheimer's disease.</title>
        <authorList>
            <person name="Wu Y.Y."/>
            <person name="Cheng I.H."/>
            <person name="Lee C.C."/>
            <person name="Chiu M.J."/>
            <person name="Lee M.J."/>
            <person name="Chen T.F."/>
            <person name="Hsu J.L."/>
        </authorList>
    </citation>
    <scope>VARIANT AD3 ASP-206</scope>
</reference>
<reference key="124">
    <citation type="journal article" date="2011" name="Nature">
        <title>Exome sequencing identifies frequent mutation of the SWI/SNF complex gene PBRM1 in renal carcinoma.</title>
        <authorList>
            <person name="Varela I."/>
            <person name="Tarpey P."/>
            <person name="Raine K."/>
            <person name="Huang D."/>
            <person name="Ong C.K."/>
            <person name="Stephens P."/>
            <person name="Davies H."/>
            <person name="Jones D."/>
            <person name="Lin M.L."/>
            <person name="Teague J."/>
            <person name="Bignell G."/>
            <person name="Butler A."/>
            <person name="Cho J."/>
            <person name="Dalgliesh G.L."/>
            <person name="Galappaththige D."/>
            <person name="Greenman C."/>
            <person name="Hardy C."/>
            <person name="Jia M."/>
            <person name="Latimer C."/>
            <person name="Lau K.W."/>
            <person name="Marshall J."/>
            <person name="McLaren S."/>
            <person name="Menzies A."/>
            <person name="Mudie L."/>
            <person name="Stebbings L."/>
            <person name="Largaespada D.A."/>
            <person name="Wessels L.F.A."/>
            <person name="Richard S."/>
            <person name="Kahnoski R.J."/>
            <person name="Anema J."/>
            <person name="Tuveson D.A."/>
            <person name="Perez-Mancera P.A."/>
            <person name="Mustonen V."/>
            <person name="Fischer A."/>
            <person name="Adams D.J."/>
            <person name="Rust A."/>
            <person name="Chan-On W."/>
            <person name="Subimerb C."/>
            <person name="Dykema K."/>
            <person name="Furge K."/>
            <person name="Campbell P.J."/>
            <person name="Teh B.T."/>
            <person name="Stratton M.R."/>
            <person name="Futreal P.A."/>
        </authorList>
    </citation>
    <scope>VARIANT CYS-315</scope>
</reference>
<reference key="125">
    <citation type="journal article" date="2011" name="Neurosci. Lett.">
        <title>A novel PSEN1 gene mutation (L235R) associated with familial early-onset Alzheimer's disease.</title>
        <authorList>
            <person name="Antonell A."/>
            <person name="Balasa M."/>
            <person name="Oliva R."/>
            <person name="Llado A."/>
            <person name="Bosch B."/>
            <person name="Fabregat N."/>
            <person name="Fortea J."/>
            <person name="Molinuevo J.L."/>
            <person name="Sanchez-Valle R."/>
        </authorList>
    </citation>
    <scope>VARIANT AD3 ARG-235</scope>
</reference>
<reference key="126">
    <citation type="journal article" date="2012" name="J. Biol. Chem.">
        <title>Familial Alzheimer disease presenilin-1 mutations alter the active site conformation of gamma-secretase.</title>
        <authorList>
            <person name="Chau D.M."/>
            <person name="Crump C.J."/>
            <person name="Villa J.C."/>
            <person name="Scheinberg D.A."/>
            <person name="Li Y.M."/>
        </authorList>
    </citation>
    <scope>CHARACTERIZATION OF VARIANTS AD3 LEU-146; ARG-163 AND ALA-280</scope>
</reference>
<reference key="127">
    <citation type="journal article" date="2012" name="Neurobiol. Aging">
        <title>Identification of PSEN1 and PSEN2 gene mutations and variants in Turkish dementia patients.</title>
        <authorList>
            <person name="Lohmann E."/>
            <person name="Guerreiro R.J."/>
            <person name="Erginel-Unaltuna N."/>
            <person name="Gurunlian N."/>
            <person name="Bilgic B."/>
            <person name="Gurvit H."/>
            <person name="Hanagasi H.A."/>
            <person name="Luu N."/>
            <person name="Emre M."/>
            <person name="Singleton A."/>
        </authorList>
    </citation>
    <scope>VARIANTS AD3 ARG-134; ARG-163 AND VAL-262</scope>
    <scope>VARIANT TYR-214</scope>
</reference>
<reference key="128">
    <citation type="journal article" date="2012" name="Neurosci. Lett.">
        <title>Novel presenilin-1 Y159F sequence variant associated with early-onset Alzheimer's disease.</title>
        <authorList>
            <person name="Kerchner G.A."/>
            <person name="Holbrook K."/>
        </authorList>
    </citation>
    <scope>VARIANT AD3 PHE-159</scope>
</reference>
<reference key="129">
    <citation type="journal article" date="2012" name="PLoS ONE">
        <title>Alzheimer's disease-linked mutations in presenilin-1 result in a drastic loss of activity in purified gamma-secretase complexes.</title>
        <authorList>
            <person name="Cacquevel M."/>
            <person name="Aeschbach L."/>
            <person name="Houacine J."/>
            <person name="Fraering P.C."/>
        </authorList>
    </citation>
    <scope>CHARACTERIZATION OF VARIANTS AD3 PRO-166 AND GLN-436</scope>
    <scope>MUTAGENESIS OF ASP-257 AND ASP-385</scope>
</reference>
<reference key="130">
    <citation type="journal article" date="2013" name="J. Neurosci.">
        <title>Trans-dominant negative effects of pathogenic PSEN1 mutations on gamma-secretase activity and Abeta production.</title>
        <authorList>
            <person name="Heilig E.A."/>
            <person name="Gutti U."/>
            <person name="Tai T."/>
            <person name="Shen J."/>
            <person name="Kelleher R.J. III"/>
        </authorList>
    </citation>
    <scope>CHARACTERIZATION OF VARIANTS AD3 PRO-166; ILE-278; ALA-384; VAL-392; TYR-410 AND PHE-435</scope>
</reference>
<reference key="131">
    <citation type="journal article" date="2014" name="J. Alzheimers Dis.">
        <title>A novel p.Leu(381)Phe mutation in presenilin 1 is associated with very early onset and unusually fast progressing dementia as well as lysosomal inclusions typically seen in Kufs disease.</title>
        <authorList>
            <person name="Dolzhanskaya N."/>
            <person name="Gonzalez M.A."/>
            <person name="Sperziani F."/>
            <person name="Stefl S."/>
            <person name="Messing J."/>
            <person name="Wen G.Y."/>
            <person name="Alexov E."/>
            <person name="Zuchner S."/>
            <person name="Velinov M."/>
        </authorList>
    </citation>
    <scope>VARIANT AD3 PHE-381</scope>
</reference>
<reference key="132">
    <citation type="journal article" date="2014" name="Neurosci. Lett.">
        <title>Clinical and molecular studies reveal a PSEN1 mutation (L153V) in a Peruvian family with early-onset Alzheimer's disease.</title>
        <authorList>
            <person name="Cornejo-Olivas M.R."/>
            <person name="Yu C.E."/>
            <person name="Mazzetti P."/>
            <person name="Mata I.F."/>
            <person name="Meza M."/>
            <person name="Lindo-Samanamud S."/>
            <person name="Leverenz J.B."/>
            <person name="Bird T.D."/>
        </authorList>
    </citation>
    <scope>VARIANT AD3 VAL-153</scope>
</reference>
<reference key="133">
    <citation type="journal article" date="2014" name="Neurosci. Lett.">
        <title>A novel presenilin 1 mutation (Ala275Val) as cause of early-onset familial Alzheimer disease.</title>
        <authorList>
            <person name="Luedecke D."/>
            <person name="Becktepe J.S."/>
            <person name="Lehmbeck J.T."/>
            <person name="Finckh U."/>
            <person name="Yamamoto R."/>
            <person name="Jahn H."/>
            <person name="Boelmans K."/>
        </authorList>
    </citation>
    <scope>VARIANT AD3 VAL-275</scope>
</reference>
<reference key="134">
    <citation type="journal article" date="2015" name="Neurobiol. Aging">
        <title>Novel presenilin 1 mutation (p.I83T) in Tunisian family with early-onset Alzheimer's disease.</title>
        <authorList>
            <person name="Achouri-Rassas A."/>
            <person name="Ben Ali N."/>
            <person name="Fray S."/>
            <person name="Hadj Fredj S."/>
            <person name="Kechaou M."/>
            <person name="Zakraoui N.O."/>
            <person name="Cherif A."/>
            <person name="Chabbi S."/>
            <person name="Anane N."/>
            <person name="Messaoud T."/>
            <person name="Gouider R."/>
            <person name="Belal S."/>
        </authorList>
    </citation>
    <scope>VARIANT AD3 THR-83</scope>
</reference>
<reference key="135">
    <citation type="journal article" date="2016" name="Am. J. Neurodegener. Dis.">
        <title>The presenilin 1 p.Gly206Ala mutation is a frequent cause of early-onset Alzheimer's disease in Hispanics in Florida.</title>
        <authorList>
            <person name="Ravenscroft T.A."/>
            <person name="Pottier C."/>
            <person name="Murray M.E."/>
            <person name="Baker M."/>
            <person name="Christopher E."/>
            <person name="Levitch D."/>
            <person name="Brown P.H."/>
            <person name="Barker W."/>
            <person name="Duara R."/>
            <person name="Greig-Custo M."/>
            <person name="Betancourt A."/>
            <person name="English M."/>
            <person name="Sun X."/>
            <person name="Ertekin-Taner N."/>
            <person name="Graff-Radford N.R."/>
            <person name="Dickson D.W."/>
            <person name="Rademakers R."/>
        </authorList>
    </citation>
    <scope>VARIANTS AD3 ALA-206 AND VAL-378</scope>
</reference>
<reference key="136">
    <citation type="journal article" date="2016" name="Neurosci. Lett.">
        <title>Novel presenilin 1 mutation (Ile408Thr) in an Italian family with late-onset Alzheimer's disease.</title>
        <authorList>
            <person name="Tedde A."/>
            <person name="Bartoli A."/>
            <person name="Piaceri I."/>
            <person name="Ferrara S."/>
            <person name="Bagnoli S."/>
            <person name="Serio A."/>
            <person name="Sorbi S."/>
            <person name="Nacmias B."/>
        </authorList>
    </citation>
    <scope>VARIANT AD3 THR-408</scope>
</reference>
<reference key="137">
    <citation type="journal article" date="2017" name="J. Alzheimers Dis.">
        <title>A novel PSEN1 K311R mutation discovered in Chinese families with late-onset Alzheimer's disease affects amyloid-beta production and tau phosphorylation.</title>
        <authorList>
            <person name="Dong J."/>
            <person name="Qin W."/>
            <person name="Wei C."/>
            <person name="Tang Y."/>
            <person name="Wang Q."/>
            <person name="Jia J."/>
        </authorList>
    </citation>
    <scope>VARIANT ARG-311</scope>
    <scope>CHARACTERIZATION OF VARIANTS ALA-280 AND ARG-311</scope>
    <scope>FUNCTION</scope>
</reference>
<reference key="138">
    <citation type="journal article" date="2017" name="Proc. Natl. Acad. Sci. U.S.A.">
        <title>Analysis of 138 pathogenic mutations in presenilin-1 on the in vitro production of Abeta42 and Abeta40 peptides by gamma-secretase.</title>
        <authorList>
            <person name="Sun L."/>
            <person name="Zhou R."/>
            <person name="Yang G."/>
            <person name="Shi Y."/>
        </authorList>
    </citation>
    <scope>CHARACTERIZATION OF VARIANTS AD3 GLN-35; VAL-79; LEU-82; PRO-85; LEU-89; SER-92; MET-94; PHE-96; LEU-97; HIS-115; ASN-116; ASP-120; LYS-120; ARG-134; ASP-135; VAL-139; THR-143; LEU-146; ILE-147; VAL-153; ASN-154; ARG-163; TYR-163; PRO-166; PRO-169; PHE-170; PRO-171; TRP-173; MET-174; LEU-177; PRO-178; VAL-183; ASP-184; ALA-206; SER-206; ARG-209; VAL-209; LEU-213; ARG-217; ARG-222; PHE-229; THR-231; LEU-233; THR-233; ARG-235; PRO-235; VAL-235; ILE-237; GLU-246; SER-250; VAL-260; PHE-261; PHE-262; ARG-263; LEU-264; SER-266; SER-267; GLY-269; VAL-271; ARG-274; VAL-275; ALA-280; GLY-280; ARG-282; VAL-285; VAL-286; ILE-354; GLN-358; GLU-378; VAL-378; VAL-381; ALA-384; ILE-390; VAL-392; VAL-394; THR-396; SER-405; THR-409; TYR-410; PHE-418; PRO-426; GLU-431; PHE-435; SER-436 AND VAL-439</scope>
    <scope>CHARACTERIZATION OF VARIANT CMD1U GLY-333</scope>
    <scope>MUTAGENESIS OF THR-99; PHE-105; ARG-108; LEU-113; PRO-117; GLU-123; HIS-131; ALA-136; ILE-143; LEU-150; TRP-165; ILE-168; PHE-176; GLU-184; ILE-202; SER-212; HIS-214; LEU-219; GLN-223; LEU-226; SER-230; ILE-238; LYS-239; THR-245; LEU-248; TYR-256; VAL-272; GLU-273; ARG-278; PRO-284; THR-291; ARG-352; SER-365; ARG-377; PHE-386; VAL-391; VAL-412; LEU-420; LEU-424; ALA-434 AND ILE-437</scope>
</reference>
<reference key="139">
    <citation type="journal article" date="2018" name="Int. J. Mol. Sci.">
        <title>PSEN1 p.Thr116Ile variant in two Korean families with young onset Alzheimer's disease.</title>
        <authorList>
            <person name="Bagyinszky E."/>
            <person name="Lee H.M."/>
            <person name="Van Giau V."/>
            <person name="Koh S.B."/>
            <person name="Jeong J.H."/>
            <person name="An S.S.A."/>
            <person name="Kim S."/>
        </authorList>
    </citation>
    <scope>VARIANT AD3 ILE-116</scope>
</reference>
<reference key="140">
    <citation type="journal article" date="2018" name="J. Neural Transm.">
        <title>Neuropathology and biochemistry of early onset familial Alzheimer's disease caused by presenilin-1 missense mutation Thr116Asn.</title>
        <authorList>
            <person name="Sutovsky S."/>
            <person name="Smolek T."/>
            <person name="Turcani P."/>
            <person name="Petrovic R."/>
            <person name="Brandoburova P."/>
            <person name="Jadhav S."/>
            <person name="Novak P."/>
            <person name="Attems J."/>
            <person name="Zilka N."/>
        </authorList>
    </citation>
    <scope>VARIANT AD3 ASN-116</scope>
</reference>
<reference key="141">
    <citation type="journal article" date="2018" name="Neurobiol. Aging">
        <title>Genetic screening in two Iranian families with early-onset Alzheimer's disease identified a novel PSEN1 mutation.</title>
        <authorList>
            <person name="Wang J.C."/>
            <person name="Alinaghi S."/>
            <person name="Tafakhori A."/>
            <person name="Sikora E."/>
            <person name="Azcona L.J."/>
            <person name="Karkheiran S."/>
            <person name="Goate A."/>
            <person name="Paisan-Ruiz C."/>
            <person name="Darvish H."/>
        </authorList>
    </citation>
    <scope>VARIANTS AD3 PHE-142 AND ASP-206</scope>
</reference>
<reference key="142">
    <citation type="journal article" date="2018" name="Neurobiol. Aging">
        <title>Novel PSEN1 p.Gly417Ala mutation in a Korean patient with early-onset Alzheimer's disease with parkinsonism.</title>
        <authorList>
            <person name="Giau V.V."/>
            <person name="Wang M.J."/>
            <person name="Bagyinszky E."/>
            <person name="Youn Y.C."/>
            <person name="An S.S.A."/>
            <person name="Kim S."/>
        </authorList>
    </citation>
    <scope>VARIANT AD3 ALA-417</scope>
</reference>
<reference key="143">
    <citation type="journal article" date="2018" name="Neurodegener. Dis.">
        <title>Phenotypic variability in autosomal dominant familial Alzheimer disease due to the S170F mutation of presenilin-1.</title>
        <authorList>
            <person name="Tiedt H.O."/>
            <person name="Benjamin B."/>
            <person name="Niedeggen M."/>
            <person name="Lueschow A."/>
        </authorList>
    </citation>
    <scope>VARIANT AD3 PHE-170</scope>
</reference>
<proteinExistence type="evidence at protein level"/>
<dbReference type="EC" id="3.4.23.-" evidence="9 20 21 40 46 87"/>
<dbReference type="EMBL" id="L42110">
    <property type="protein sequence ID" value="AAB46416.1"/>
    <property type="molecule type" value="mRNA"/>
</dbReference>
<dbReference type="EMBL" id="L76517">
    <property type="protein sequence ID" value="AAB46370.1"/>
    <property type="molecule type" value="mRNA"/>
</dbReference>
<dbReference type="EMBL" id="L76528">
    <property type="protein sequence ID" value="AAB46371.1"/>
    <property type="molecule type" value="Genomic_DNA"/>
</dbReference>
<dbReference type="EMBL" id="L76519">
    <property type="protein sequence ID" value="AAB46371.1"/>
    <property type="status" value="JOINED"/>
    <property type="molecule type" value="Genomic_DNA"/>
</dbReference>
<dbReference type="EMBL" id="L76520">
    <property type="protein sequence ID" value="AAB46371.1"/>
    <property type="status" value="JOINED"/>
    <property type="molecule type" value="Genomic_DNA"/>
</dbReference>
<dbReference type="EMBL" id="L76521">
    <property type="protein sequence ID" value="AAB46371.1"/>
    <property type="status" value="JOINED"/>
    <property type="molecule type" value="Genomic_DNA"/>
</dbReference>
<dbReference type="EMBL" id="L76522">
    <property type="protein sequence ID" value="AAB46371.1"/>
    <property type="status" value="JOINED"/>
    <property type="molecule type" value="Genomic_DNA"/>
</dbReference>
<dbReference type="EMBL" id="L76523">
    <property type="protein sequence ID" value="AAB46371.1"/>
    <property type="status" value="JOINED"/>
    <property type="molecule type" value="Genomic_DNA"/>
</dbReference>
<dbReference type="EMBL" id="L76524">
    <property type="protein sequence ID" value="AAB46371.1"/>
    <property type="status" value="JOINED"/>
    <property type="molecule type" value="Genomic_DNA"/>
</dbReference>
<dbReference type="EMBL" id="L76525">
    <property type="protein sequence ID" value="AAB46371.1"/>
    <property type="status" value="JOINED"/>
    <property type="molecule type" value="Genomic_DNA"/>
</dbReference>
<dbReference type="EMBL" id="L76526">
    <property type="protein sequence ID" value="AAB46371.1"/>
    <property type="status" value="JOINED"/>
    <property type="molecule type" value="Genomic_DNA"/>
</dbReference>
<dbReference type="EMBL" id="L76527">
    <property type="protein sequence ID" value="AAB46371.1"/>
    <property type="status" value="JOINED"/>
    <property type="molecule type" value="Genomic_DNA"/>
</dbReference>
<dbReference type="EMBL" id="U40379">
    <property type="protein sequence ID" value="AAB05894.1"/>
    <property type="molecule type" value="mRNA"/>
</dbReference>
<dbReference type="EMBL" id="U40380">
    <property type="protein sequence ID" value="AAB05895.1"/>
    <property type="molecule type" value="mRNA"/>
</dbReference>
<dbReference type="EMBL" id="AJ008005">
    <property type="protein sequence ID" value="CAA07825.1"/>
    <property type="molecule type" value="mRNA"/>
</dbReference>
<dbReference type="EMBL" id="AF109907">
    <property type="protein sequence ID" value="AAC97960.1"/>
    <property type="molecule type" value="Genomic_DNA"/>
</dbReference>
<dbReference type="EMBL" id="AF416717">
    <property type="protein sequence ID" value="AAL16811.1"/>
    <property type="molecule type" value="mRNA"/>
</dbReference>
<dbReference type="EMBL" id="AK312531">
    <property type="protein sequence ID" value="BAG35430.1"/>
    <property type="molecule type" value="mRNA"/>
</dbReference>
<dbReference type="EMBL" id="AC004858">
    <property type="protein sequence ID" value="AAF19253.1"/>
    <property type="molecule type" value="Genomic_DNA"/>
</dbReference>
<dbReference type="EMBL" id="AC004858">
    <property type="protein sequence ID" value="AAF19254.1"/>
    <property type="molecule type" value="Genomic_DNA"/>
</dbReference>
<dbReference type="EMBL" id="CH471061">
    <property type="protein sequence ID" value="EAW81092.1"/>
    <property type="molecule type" value="Genomic_DNA"/>
</dbReference>
<dbReference type="EMBL" id="BC011729">
    <property type="protein sequence ID" value="AAH11729.1"/>
    <property type="molecule type" value="mRNA"/>
</dbReference>
<dbReference type="EMBL" id="D84149">
    <property type="protein sequence ID" value="BAA20883.1"/>
    <property type="molecule type" value="Genomic_DNA"/>
</dbReference>
<dbReference type="CCDS" id="CCDS9812.1">
    <molecule id="P49768-1"/>
</dbReference>
<dbReference type="CCDS" id="CCDS9813.1">
    <molecule id="P49768-2"/>
</dbReference>
<dbReference type="PIR" id="S58396">
    <property type="entry name" value="S58396"/>
</dbReference>
<dbReference type="PIR" id="S63683">
    <property type="entry name" value="S63683"/>
</dbReference>
<dbReference type="PIR" id="S63684">
    <property type="entry name" value="S63684"/>
</dbReference>
<dbReference type="RefSeq" id="NP_000012.1">
    <molecule id="P49768-1"/>
    <property type="nucleotide sequence ID" value="NM_000021.4"/>
</dbReference>
<dbReference type="RefSeq" id="NP_015557.2">
    <molecule id="P49768-2"/>
    <property type="nucleotide sequence ID" value="NM_007318.3"/>
</dbReference>
<dbReference type="RefSeq" id="XP_005267921.1">
    <molecule id="P49768-1"/>
    <property type="nucleotide sequence ID" value="XM_005267864.4"/>
</dbReference>
<dbReference type="RefSeq" id="XP_005267923.1">
    <molecule id="P49768-2"/>
    <property type="nucleotide sequence ID" value="XM_005267866.3"/>
</dbReference>
<dbReference type="RefSeq" id="XP_011535273.1">
    <property type="nucleotide sequence ID" value="XM_011536971.2"/>
</dbReference>
<dbReference type="RefSeq" id="XP_011535274.1">
    <molecule id="P49768-1"/>
    <property type="nucleotide sequence ID" value="XM_011536972.3"/>
</dbReference>
<dbReference type="RefSeq" id="XP_011535275.1">
    <molecule id="P49768-2"/>
    <property type="nucleotide sequence ID" value="XM_011536973.3"/>
</dbReference>
<dbReference type="RefSeq" id="XP_011535276.1">
    <molecule id="P49768-2"/>
    <property type="nucleotide sequence ID" value="XM_011536974.3"/>
</dbReference>
<dbReference type="RefSeq" id="XP_047287556.1">
    <molecule id="P49768-1"/>
    <property type="nucleotide sequence ID" value="XM_047431600.1"/>
</dbReference>
<dbReference type="RefSeq" id="XP_047287557.1">
    <molecule id="P49768-1"/>
    <property type="nucleotide sequence ID" value="XM_047431601.1"/>
</dbReference>
<dbReference type="RefSeq" id="XP_047287558.1">
    <molecule id="P49768-2"/>
    <property type="nucleotide sequence ID" value="XM_047431602.1"/>
</dbReference>
<dbReference type="RefSeq" id="XP_054232388.1">
    <molecule id="P49768-1"/>
    <property type="nucleotide sequence ID" value="XM_054376413.1"/>
</dbReference>
<dbReference type="RefSeq" id="XP_054232389.1">
    <molecule id="P49768-1"/>
    <property type="nucleotide sequence ID" value="XM_054376414.1"/>
</dbReference>
<dbReference type="RefSeq" id="XP_054232390.1">
    <molecule id="P49768-1"/>
    <property type="nucleotide sequence ID" value="XM_054376415.1"/>
</dbReference>
<dbReference type="RefSeq" id="XP_054232391.1">
    <molecule id="P49768-1"/>
    <property type="nucleotide sequence ID" value="XM_054376416.1"/>
</dbReference>
<dbReference type="RefSeq" id="XP_054232392.1">
    <molecule id="P49768-2"/>
    <property type="nucleotide sequence ID" value="XM_054376417.1"/>
</dbReference>
<dbReference type="RefSeq" id="XP_054232393.1">
    <molecule id="P49768-2"/>
    <property type="nucleotide sequence ID" value="XM_054376418.1"/>
</dbReference>
<dbReference type="RefSeq" id="XP_054232394.1">
    <molecule id="P49768-2"/>
    <property type="nucleotide sequence ID" value="XM_054376419.1"/>
</dbReference>
<dbReference type="RefSeq" id="XP_054232395.1">
    <molecule id="P49768-2"/>
    <property type="nucleotide sequence ID" value="XM_054376420.1"/>
</dbReference>
<dbReference type="PDB" id="2KR6">
    <property type="method" value="NMR"/>
    <property type="chains" value="A=292-467"/>
</dbReference>
<dbReference type="PDB" id="4UIS">
    <property type="method" value="EM"/>
    <property type="resolution" value="4.40 A"/>
    <property type="chains" value="B=81-463"/>
</dbReference>
<dbReference type="PDB" id="5A63">
    <property type="method" value="EM"/>
    <property type="resolution" value="3.40 A"/>
    <property type="chains" value="B=1-467"/>
</dbReference>
<dbReference type="PDB" id="5FN2">
    <property type="method" value="EM"/>
    <property type="resolution" value="4.20 A"/>
    <property type="chains" value="B=1-467"/>
</dbReference>
<dbReference type="PDB" id="5FN3">
    <property type="method" value="EM"/>
    <property type="resolution" value="4.10 A"/>
    <property type="chains" value="B=1-467"/>
</dbReference>
<dbReference type="PDB" id="5FN4">
    <property type="method" value="EM"/>
    <property type="resolution" value="4.00 A"/>
    <property type="chains" value="B=1-467"/>
</dbReference>
<dbReference type="PDB" id="5FN5">
    <property type="method" value="EM"/>
    <property type="resolution" value="4.30 A"/>
    <property type="chains" value="B=1-467"/>
</dbReference>
<dbReference type="PDB" id="6IDF">
    <property type="method" value="EM"/>
    <property type="resolution" value="2.70 A"/>
    <property type="chains" value="B=1-467"/>
</dbReference>
<dbReference type="PDB" id="6IYC">
    <property type="method" value="EM"/>
    <property type="resolution" value="2.60 A"/>
    <property type="chains" value="B=1-467"/>
</dbReference>
<dbReference type="PDB" id="6LQG">
    <property type="method" value="EM"/>
    <property type="resolution" value="3.10 A"/>
    <property type="chains" value="B=1-467"/>
</dbReference>
<dbReference type="PDB" id="6LR4">
    <property type="method" value="EM"/>
    <property type="resolution" value="3.00 A"/>
    <property type="chains" value="B=1-467"/>
</dbReference>
<dbReference type="PDB" id="7C9I">
    <property type="method" value="EM"/>
    <property type="resolution" value="3.10 A"/>
    <property type="chains" value="B=1-467"/>
</dbReference>
<dbReference type="PDB" id="7D8X">
    <property type="method" value="EM"/>
    <property type="resolution" value="2.60 A"/>
    <property type="chains" value="B=1-467"/>
</dbReference>
<dbReference type="PDB" id="7Y5T">
    <property type="method" value="EM"/>
    <property type="resolution" value="2.90 A"/>
    <property type="chains" value="B=1-467"/>
</dbReference>
<dbReference type="PDB" id="8IM7">
    <property type="method" value="EM"/>
    <property type="resolution" value="3.40 A"/>
    <property type="chains" value="B=1-467"/>
</dbReference>
<dbReference type="PDB" id="8K8E">
    <property type="method" value="EM"/>
    <property type="resolution" value="2.60 A"/>
    <property type="chains" value="B=1-467"/>
</dbReference>
<dbReference type="PDB" id="8KCO">
    <property type="method" value="EM"/>
    <property type="resolution" value="2.80 A"/>
    <property type="chains" value="B=1-467"/>
</dbReference>
<dbReference type="PDB" id="8KCP">
    <property type="method" value="EM"/>
    <property type="resolution" value="3.00 A"/>
    <property type="chains" value="B=1-467"/>
</dbReference>
<dbReference type="PDB" id="8KCS">
    <property type="method" value="EM"/>
    <property type="resolution" value="2.40 A"/>
    <property type="chains" value="B=1-467"/>
</dbReference>
<dbReference type="PDB" id="8KCT">
    <property type="method" value="EM"/>
    <property type="resolution" value="2.60 A"/>
    <property type="chains" value="B=1-467"/>
</dbReference>
<dbReference type="PDB" id="8KCU">
    <property type="method" value="EM"/>
    <property type="resolution" value="2.70 A"/>
    <property type="chains" value="B=1-467"/>
</dbReference>
<dbReference type="PDB" id="8OQY">
    <property type="method" value="EM"/>
    <property type="resolution" value="3.30 A"/>
    <property type="chains" value="B=1-467"/>
</dbReference>
<dbReference type="PDB" id="8OQZ">
    <property type="method" value="EM"/>
    <property type="resolution" value="3.40 A"/>
    <property type="chains" value="B=1-467"/>
</dbReference>
<dbReference type="PDB" id="8X52">
    <property type="method" value="EM"/>
    <property type="resolution" value="2.90 A"/>
    <property type="chains" value="B=1-467"/>
</dbReference>
<dbReference type="PDB" id="8X53">
    <property type="method" value="EM"/>
    <property type="resolution" value="3.00 A"/>
    <property type="chains" value="B=1-467"/>
</dbReference>
<dbReference type="PDB" id="8X54">
    <property type="method" value="EM"/>
    <property type="resolution" value="2.90 A"/>
    <property type="chains" value="B=1-467"/>
</dbReference>
<dbReference type="PDBsum" id="2KR6"/>
<dbReference type="PDBsum" id="4UIS"/>
<dbReference type="PDBsum" id="5A63"/>
<dbReference type="PDBsum" id="5FN2"/>
<dbReference type="PDBsum" id="5FN3"/>
<dbReference type="PDBsum" id="5FN4"/>
<dbReference type="PDBsum" id="5FN5"/>
<dbReference type="PDBsum" id="6IDF"/>
<dbReference type="PDBsum" id="6IYC"/>
<dbReference type="PDBsum" id="6LQG"/>
<dbReference type="PDBsum" id="6LR4"/>
<dbReference type="PDBsum" id="7C9I"/>
<dbReference type="PDBsum" id="7D8X"/>
<dbReference type="PDBsum" id="7Y5T"/>
<dbReference type="PDBsum" id="8IM7"/>
<dbReference type="PDBsum" id="8K8E"/>
<dbReference type="PDBsum" id="8KCO"/>
<dbReference type="PDBsum" id="8KCP"/>
<dbReference type="PDBsum" id="8KCS"/>
<dbReference type="PDBsum" id="8KCT"/>
<dbReference type="PDBsum" id="8KCU"/>
<dbReference type="PDBsum" id="8OQY"/>
<dbReference type="PDBsum" id="8OQZ"/>
<dbReference type="PDBsum" id="8X52"/>
<dbReference type="PDBsum" id="8X53"/>
<dbReference type="PDBsum" id="8X54"/>
<dbReference type="EMDB" id="EMD-0944"/>
<dbReference type="EMDB" id="EMD-0957"/>
<dbReference type="EMDB" id="EMD-17112"/>
<dbReference type="EMDB" id="EMD-17113"/>
<dbReference type="EMDB" id="EMD-2477"/>
<dbReference type="EMDB" id="EMD-2478"/>
<dbReference type="EMDB" id="EMD-30312"/>
<dbReference type="EMDB" id="EMD-30614"/>
<dbReference type="EMDB" id="EMD-33624"/>
<dbReference type="EMDB" id="EMD-35572"/>
<dbReference type="EMDB" id="EMD-36948"/>
<dbReference type="EMDB" id="EMD-37106"/>
<dbReference type="EMDB" id="EMD-37107"/>
<dbReference type="EMDB" id="EMD-37108"/>
<dbReference type="EMDB" id="EMD-37109"/>
<dbReference type="EMDB" id="EMD-37110"/>
<dbReference type="EMDB" id="EMD-38059"/>
<dbReference type="EMDB" id="EMD-38060"/>
<dbReference type="EMDB" id="EMD-38061"/>
<dbReference type="EMDB" id="EMD-9648"/>
<dbReference type="EMDB" id="EMD-9751"/>
<dbReference type="SMR" id="P49768"/>
<dbReference type="BioGRID" id="111642">
    <property type="interactions" value="201"/>
</dbReference>
<dbReference type="ComplexPortal" id="CPX-2176">
    <property type="entry name" value="Gamma-secretase complex, APH1A-PSEN1 variant"/>
</dbReference>
<dbReference type="ComplexPortal" id="CPX-4233">
    <property type="entry name" value="Gamma-secretase complex, APH1B-PSEN1 variant"/>
</dbReference>
<dbReference type="CORUM" id="P49768"/>
<dbReference type="DIP" id="DIP-1134N"/>
<dbReference type="ELM" id="P49768"/>
<dbReference type="FunCoup" id="P49768">
    <property type="interactions" value="2287"/>
</dbReference>
<dbReference type="IntAct" id="P49768">
    <property type="interactions" value="283"/>
</dbReference>
<dbReference type="MINT" id="P49768"/>
<dbReference type="STRING" id="9606.ENSP00000326366"/>
<dbReference type="BindingDB" id="P49768"/>
<dbReference type="ChEMBL" id="CHEMBL2473"/>
<dbReference type="DrugBank" id="DB11893">
    <property type="generic name" value="Avagacestat"/>
</dbReference>
<dbReference type="DrugBank" id="DB12263">
    <property type="generic name" value="Begacestat"/>
</dbReference>
<dbReference type="DrugBank" id="DB05171">
    <property type="generic name" value="E-2012"/>
</dbReference>
<dbReference type="DrugBank" id="DB16159">
    <property type="generic name" value="Esflurbiprofen"/>
</dbReference>
<dbReference type="DrugBank" id="DB12819">
    <property type="generic name" value="GSI-136"/>
</dbReference>
<dbReference type="DrugBank" id="DB16825">
    <property type="generic name" value="Itanapraced"/>
</dbReference>
<dbReference type="DrugBank" id="DB12852">
    <property type="generic name" value="MK-0752"/>
</dbReference>
<dbReference type="DrugBank" id="DB12005">
    <property type="generic name" value="Nirogacestat"/>
</dbReference>
<dbReference type="DrugBank" id="DB11870">
    <property type="generic name" value="RG-4733"/>
</dbReference>
<dbReference type="DrugBank" id="DB12463">
    <property type="generic name" value="Semagacestat"/>
</dbReference>
<dbReference type="DrugBank" id="DB05289">
    <property type="generic name" value="Tarenflurbil"/>
</dbReference>
<dbReference type="GuidetoPHARMACOLOGY" id="2402"/>
<dbReference type="MEROPS" id="A22.001"/>
<dbReference type="TCDB" id="1.A.54.1.1">
    <property type="family name" value="the presenilin er ca(2+) leak channel (presenilin) family"/>
</dbReference>
<dbReference type="iPTMnet" id="P49768"/>
<dbReference type="PhosphoSitePlus" id="P49768"/>
<dbReference type="SwissPalm" id="P49768"/>
<dbReference type="BioMuta" id="PSEN1"/>
<dbReference type="DMDM" id="1709856"/>
<dbReference type="jPOST" id="P49768"/>
<dbReference type="MassIVE" id="P49768"/>
<dbReference type="PaxDb" id="9606-ENSP00000326366"/>
<dbReference type="PeptideAtlas" id="P49768"/>
<dbReference type="ProteomicsDB" id="56106">
    <molecule id="P49768-1"/>
</dbReference>
<dbReference type="ProteomicsDB" id="56107">
    <molecule id="P49768-2"/>
</dbReference>
<dbReference type="ProteomicsDB" id="56108">
    <molecule id="P49768-3"/>
</dbReference>
<dbReference type="ProteomicsDB" id="56109">
    <molecule id="P49768-4"/>
</dbReference>
<dbReference type="ProteomicsDB" id="56110">
    <molecule id="P49768-5"/>
</dbReference>
<dbReference type="ProteomicsDB" id="56111">
    <molecule id="P49768-6"/>
</dbReference>
<dbReference type="ProteomicsDB" id="56112">
    <molecule id="P49768-7"/>
</dbReference>
<dbReference type="Pumba" id="P49768"/>
<dbReference type="Antibodypedia" id="3480">
    <property type="antibodies" value="965 antibodies from 46 providers"/>
</dbReference>
<dbReference type="DNASU" id="5663"/>
<dbReference type="Ensembl" id="ENST00000324501.10">
    <molecule id="P49768-1"/>
    <property type="protein sequence ID" value="ENSP00000326366.5"/>
    <property type="gene ID" value="ENSG00000080815.20"/>
</dbReference>
<dbReference type="Ensembl" id="ENST00000357710.8">
    <molecule id="P49768-2"/>
    <property type="protein sequence ID" value="ENSP00000350342.4"/>
    <property type="gene ID" value="ENSG00000080815.20"/>
</dbReference>
<dbReference type="Ensembl" id="ENST00000394157.7">
    <molecule id="P49768-4"/>
    <property type="protein sequence ID" value="ENSP00000377712.3"/>
    <property type="gene ID" value="ENSG00000080815.20"/>
</dbReference>
<dbReference type="Ensembl" id="ENST00000394164.5">
    <molecule id="P49768-2"/>
    <property type="protein sequence ID" value="ENSP00000377719.1"/>
    <property type="gene ID" value="ENSG00000080815.20"/>
</dbReference>
<dbReference type="Ensembl" id="ENST00000553599.6">
    <molecule id="P49768-2"/>
    <property type="protein sequence ID" value="ENSP00000452477.2"/>
    <property type="gene ID" value="ENSG00000080815.20"/>
</dbReference>
<dbReference type="Ensembl" id="ENST00000553855.5">
    <molecule id="P49768-5"/>
    <property type="protein sequence ID" value="ENSP00000452242.1"/>
    <property type="gene ID" value="ENSG00000080815.20"/>
</dbReference>
<dbReference type="Ensembl" id="ENST00000554131.6">
    <molecule id="P49768-1"/>
    <property type="protein sequence ID" value="ENSP00000451915.2"/>
    <property type="gene ID" value="ENSG00000080815.20"/>
</dbReference>
<dbReference type="Ensembl" id="ENST00000555386.6">
    <molecule id="P49768-3"/>
    <property type="protein sequence ID" value="ENSP00000450845.1"/>
    <property type="gene ID" value="ENSG00000080815.20"/>
</dbReference>
<dbReference type="Ensembl" id="ENST00000556951.6">
    <molecule id="P49768-2"/>
    <property type="protein sequence ID" value="ENSP00000450551.2"/>
    <property type="gene ID" value="ENSG00000080815.20"/>
</dbReference>
<dbReference type="Ensembl" id="ENST00000557511.5">
    <molecule id="P49768-6"/>
    <property type="protein sequence ID" value="ENSP00000451429.1"/>
    <property type="gene ID" value="ENSG00000080815.20"/>
</dbReference>
<dbReference type="Ensembl" id="ENST00000700265.1">
    <molecule id="P49768-2"/>
    <property type="protein sequence ID" value="ENSP00000514901.1"/>
    <property type="gene ID" value="ENSG00000080815.20"/>
</dbReference>
<dbReference type="Ensembl" id="ENST00000700267.1">
    <molecule id="P49768-1"/>
    <property type="protein sequence ID" value="ENSP00000514903.1"/>
    <property type="gene ID" value="ENSG00000080815.20"/>
</dbReference>
<dbReference type="Ensembl" id="ENST00000700268.1">
    <molecule id="P49768-1"/>
    <property type="protein sequence ID" value="ENSP00000514904.1"/>
    <property type="gene ID" value="ENSG00000080815.20"/>
</dbReference>
<dbReference type="Ensembl" id="ENST00000700269.1">
    <molecule id="P49768-1"/>
    <property type="protein sequence ID" value="ENSP00000514905.1"/>
    <property type="gene ID" value="ENSG00000080815.20"/>
</dbReference>
<dbReference type="Ensembl" id="ENST00000700273.1">
    <molecule id="P49768-2"/>
    <property type="protein sequence ID" value="ENSP00000514908.1"/>
    <property type="gene ID" value="ENSG00000080815.20"/>
</dbReference>
<dbReference type="Ensembl" id="ENST00000700306.1">
    <molecule id="P49768-1"/>
    <property type="protein sequence ID" value="ENSP00000514933.1"/>
    <property type="gene ID" value="ENSG00000080815.20"/>
</dbReference>
<dbReference type="Ensembl" id="ENST00000700313.1">
    <molecule id="P49768-2"/>
    <property type="protein sequence ID" value="ENSP00000514940.1"/>
    <property type="gene ID" value="ENSG00000080815.20"/>
</dbReference>
<dbReference type="Ensembl" id="ENST00000700317.1">
    <molecule id="P49768-1"/>
    <property type="protein sequence ID" value="ENSP00000514944.1"/>
    <property type="gene ID" value="ENSG00000080815.20"/>
</dbReference>
<dbReference type="Ensembl" id="ENST00000700321.1">
    <molecule id="P49768-1"/>
    <property type="protein sequence ID" value="ENSP00000514948.1"/>
    <property type="gene ID" value="ENSG00000080815.20"/>
</dbReference>
<dbReference type="Ensembl" id="ENST00000700322.1">
    <molecule id="P49768-2"/>
    <property type="protein sequence ID" value="ENSP00000514949.1"/>
    <property type="gene ID" value="ENSG00000080815.20"/>
</dbReference>
<dbReference type="Ensembl" id="ENST00000700323.1">
    <molecule id="P49768-1"/>
    <property type="protein sequence ID" value="ENSP00000514950.1"/>
    <property type="gene ID" value="ENSG00000080815.20"/>
</dbReference>
<dbReference type="Ensembl" id="ENST00000700324.1">
    <molecule id="P49768-2"/>
    <property type="protein sequence ID" value="ENSP00000514951.1"/>
    <property type="gene ID" value="ENSG00000080815.20"/>
</dbReference>
<dbReference type="Ensembl" id="ENST00000700375.1">
    <molecule id="P49768-1"/>
    <property type="protein sequence ID" value="ENSP00000514966.1"/>
    <property type="gene ID" value="ENSG00000080815.20"/>
</dbReference>
<dbReference type="Ensembl" id="ENST00000700378.1">
    <molecule id="P49768-1"/>
    <property type="protein sequence ID" value="ENSP00000514968.1"/>
    <property type="gene ID" value="ENSG00000080815.20"/>
</dbReference>
<dbReference type="Ensembl" id="ENST00000700389.1">
    <molecule id="P49768-2"/>
    <property type="protein sequence ID" value="ENSP00000514970.1"/>
    <property type="gene ID" value="ENSG00000080815.20"/>
</dbReference>
<dbReference type="Ensembl" id="ENST00000700436.1">
    <molecule id="P49768-5"/>
    <property type="protein sequence ID" value="ENSP00000514987.1"/>
    <property type="gene ID" value="ENSG00000080815.20"/>
</dbReference>
<dbReference type="Ensembl" id="ENST00000700469.1">
    <molecule id="P49768-2"/>
    <property type="protein sequence ID" value="ENSP00000515002.1"/>
    <property type="gene ID" value="ENSG00000080815.20"/>
</dbReference>
<dbReference type="GeneID" id="5663"/>
<dbReference type="KEGG" id="hsa:5663"/>
<dbReference type="MANE-Select" id="ENST00000324501.10">
    <property type="protein sequence ID" value="ENSP00000326366.5"/>
    <property type="RefSeq nucleotide sequence ID" value="NM_000021.4"/>
    <property type="RefSeq protein sequence ID" value="NP_000012.1"/>
</dbReference>
<dbReference type="UCSC" id="uc001xnq.5">
    <molecule id="P49768-1"/>
    <property type="organism name" value="human"/>
</dbReference>
<dbReference type="AGR" id="HGNC:9508"/>
<dbReference type="CTD" id="5663"/>
<dbReference type="DisGeNET" id="5663"/>
<dbReference type="GeneCards" id="PSEN1"/>
<dbReference type="GeneReviews" id="PSEN1"/>
<dbReference type="HGNC" id="HGNC:9508">
    <property type="gene designation" value="PSEN1"/>
</dbReference>
<dbReference type="HPA" id="ENSG00000080815">
    <property type="expression patterns" value="Low tissue specificity"/>
</dbReference>
<dbReference type="MalaCards" id="PSEN1"/>
<dbReference type="MIM" id="104311">
    <property type="type" value="gene"/>
</dbReference>
<dbReference type="MIM" id="172700">
    <property type="type" value="phenotype"/>
</dbReference>
<dbReference type="MIM" id="600274">
    <property type="type" value="phenotype"/>
</dbReference>
<dbReference type="MIM" id="607822">
    <property type="type" value="phenotype"/>
</dbReference>
<dbReference type="MIM" id="613694">
    <property type="type" value="phenotype"/>
</dbReference>
<dbReference type="MIM" id="613737">
    <property type="type" value="phenotype"/>
</dbReference>
<dbReference type="neXtProt" id="NX_P49768"/>
<dbReference type="OpenTargets" id="ENSG00000080815"/>
<dbReference type="Orphanet" id="275864">
    <property type="disease" value="Behavioral variant of frontotemporal dementia"/>
</dbReference>
<dbReference type="Orphanet" id="1020">
    <property type="disease" value="Early-onset autosomal dominant Alzheimer disease"/>
</dbReference>
<dbReference type="Orphanet" id="154">
    <property type="disease" value="Familial isolated dilated cardiomyopathy"/>
</dbReference>
<dbReference type="Orphanet" id="100070">
    <property type="disease" value="Progressive non-fluent aphasia"/>
</dbReference>
<dbReference type="Orphanet" id="100069">
    <property type="disease" value="Semantic dementia"/>
</dbReference>
<dbReference type="PharmGKB" id="PA33855"/>
<dbReference type="VEuPathDB" id="HostDB:ENSG00000080815"/>
<dbReference type="eggNOG" id="KOG2736">
    <property type="taxonomic scope" value="Eukaryota"/>
</dbReference>
<dbReference type="GeneTree" id="ENSGT00940000158751"/>
<dbReference type="HOGENOM" id="CLU_022975_3_0_1"/>
<dbReference type="InParanoid" id="P49768"/>
<dbReference type="OMA" id="NATCNQQ"/>
<dbReference type="OrthoDB" id="20287at2759"/>
<dbReference type="PAN-GO" id="P49768">
    <property type="GO annotations" value="26 GO annotations based on evolutionary models"/>
</dbReference>
<dbReference type="PhylomeDB" id="P49768"/>
<dbReference type="TreeFam" id="TF315040"/>
<dbReference type="PathwayCommons" id="P49768"/>
<dbReference type="Reactome" id="R-HSA-1251985">
    <property type="pathway name" value="Nuclear signaling by ERBB4"/>
</dbReference>
<dbReference type="Reactome" id="R-HSA-1474228">
    <property type="pathway name" value="Degradation of the extracellular matrix"/>
</dbReference>
<dbReference type="Reactome" id="R-HSA-193692">
    <property type="pathway name" value="Regulated proteolysis of p75NTR"/>
</dbReference>
<dbReference type="Reactome" id="R-HSA-205043">
    <property type="pathway name" value="NRIF signals cell death from the nucleus"/>
</dbReference>
<dbReference type="Reactome" id="R-HSA-2122948">
    <property type="pathway name" value="Activated NOTCH1 Transmits Signal to the Nucleus"/>
</dbReference>
<dbReference type="Reactome" id="R-HSA-2644606">
    <property type="pathway name" value="Constitutive Signaling by NOTCH1 PEST Domain Mutants"/>
</dbReference>
<dbReference type="Reactome" id="R-HSA-2894862">
    <property type="pathway name" value="Constitutive Signaling by NOTCH1 HD+PEST Domain Mutants"/>
</dbReference>
<dbReference type="Reactome" id="R-HSA-2979096">
    <property type="pathway name" value="NOTCH2 Activation and Transmission of Signal to the Nucleus"/>
</dbReference>
<dbReference type="Reactome" id="R-HSA-3928665">
    <property type="pathway name" value="EPH-ephrin mediated repulsion of cells"/>
</dbReference>
<dbReference type="Reactome" id="R-HSA-6798695">
    <property type="pathway name" value="Neutrophil degranulation"/>
</dbReference>
<dbReference type="Reactome" id="R-HSA-9013507">
    <property type="pathway name" value="NOTCH3 Activation and Transmission of Signal to the Nucleus"/>
</dbReference>
<dbReference type="Reactome" id="R-HSA-9013700">
    <property type="pathway name" value="NOTCH4 Activation and Transmission of Signal to the Nucleus"/>
</dbReference>
<dbReference type="Reactome" id="R-HSA-9017802">
    <property type="pathway name" value="Noncanonical activation of NOTCH3"/>
</dbReference>
<dbReference type="Reactome" id="R-HSA-9839383">
    <property type="pathway name" value="TGFBR3 PTM regulation"/>
</dbReference>
<dbReference type="SignaLink" id="P49768"/>
<dbReference type="SIGNOR" id="P49768"/>
<dbReference type="BioGRID-ORCS" id="5663">
    <property type="hits" value="16 hits in 1162 CRISPR screens"/>
</dbReference>
<dbReference type="CD-CODE" id="8C2F96ED">
    <property type="entry name" value="Centrosome"/>
</dbReference>
<dbReference type="ChiTaRS" id="PSEN1">
    <property type="organism name" value="human"/>
</dbReference>
<dbReference type="EvolutionaryTrace" id="P49768"/>
<dbReference type="GeneWiki" id="PSEN1"/>
<dbReference type="GenomeRNAi" id="5663"/>
<dbReference type="Pharos" id="P49768">
    <property type="development level" value="Tchem"/>
</dbReference>
<dbReference type="PRO" id="PR:P49768"/>
<dbReference type="Proteomes" id="UP000005640">
    <property type="component" value="Chromosome 14"/>
</dbReference>
<dbReference type="RNAct" id="P49768">
    <property type="molecule type" value="protein"/>
</dbReference>
<dbReference type="Bgee" id="ENSG00000080815">
    <property type="expression patterns" value="Expressed in middle frontal gyrus and 202 other cell types or tissues"/>
</dbReference>
<dbReference type="ExpressionAtlas" id="P49768">
    <property type="expression patterns" value="baseline and differential"/>
</dbReference>
<dbReference type="GO" id="GO:0016235">
    <property type="term" value="C:aggresome"/>
    <property type="evidence" value="ECO:0000314"/>
    <property type="project" value="UniProtKB"/>
</dbReference>
<dbReference type="GO" id="GO:0035577">
    <property type="term" value="C:azurophil granule membrane"/>
    <property type="evidence" value="ECO:0000304"/>
    <property type="project" value="Reactome"/>
</dbReference>
<dbReference type="GO" id="GO:0005938">
    <property type="term" value="C:cell cortex"/>
    <property type="evidence" value="ECO:0007669"/>
    <property type="project" value="Ensembl"/>
</dbReference>
<dbReference type="GO" id="GO:0030054">
    <property type="term" value="C:cell junction"/>
    <property type="evidence" value="ECO:0000314"/>
    <property type="project" value="HPA"/>
</dbReference>
<dbReference type="GO" id="GO:0009986">
    <property type="term" value="C:cell surface"/>
    <property type="evidence" value="ECO:0007669"/>
    <property type="project" value="Ensembl"/>
</dbReference>
<dbReference type="GO" id="GO:0005813">
    <property type="term" value="C:centrosome"/>
    <property type="evidence" value="ECO:0000314"/>
    <property type="project" value="UniProtKB"/>
</dbReference>
<dbReference type="GO" id="GO:0035253">
    <property type="term" value="C:ciliary rootlet"/>
    <property type="evidence" value="ECO:0007669"/>
    <property type="project" value="Ensembl"/>
</dbReference>
<dbReference type="GO" id="GO:0030425">
    <property type="term" value="C:dendrite"/>
    <property type="evidence" value="ECO:0000314"/>
    <property type="project" value="ARUK-UCL"/>
</dbReference>
<dbReference type="GO" id="GO:0043198">
    <property type="term" value="C:dendritic shaft"/>
    <property type="evidence" value="ECO:0007669"/>
    <property type="project" value="Ensembl"/>
</dbReference>
<dbReference type="GO" id="GO:0031901">
    <property type="term" value="C:early endosome membrane"/>
    <property type="evidence" value="ECO:0007669"/>
    <property type="project" value="UniProtKB-SubCell"/>
</dbReference>
<dbReference type="GO" id="GO:0005783">
    <property type="term" value="C:endoplasmic reticulum"/>
    <property type="evidence" value="ECO:0000314"/>
    <property type="project" value="HGNC-UCL"/>
</dbReference>
<dbReference type="GO" id="GO:0005789">
    <property type="term" value="C:endoplasmic reticulum membrane"/>
    <property type="evidence" value="ECO:0007669"/>
    <property type="project" value="UniProtKB-SubCell"/>
</dbReference>
<dbReference type="GO" id="GO:0070765">
    <property type="term" value="C:gamma-secretase complex"/>
    <property type="evidence" value="ECO:0000314"/>
    <property type="project" value="UniProtKB"/>
</dbReference>
<dbReference type="GO" id="GO:0098978">
    <property type="term" value="C:glutamatergic synapse"/>
    <property type="evidence" value="ECO:0007669"/>
    <property type="project" value="Ensembl"/>
</dbReference>
<dbReference type="GO" id="GO:0005794">
    <property type="term" value="C:Golgi apparatus"/>
    <property type="evidence" value="ECO:0000314"/>
    <property type="project" value="HPA"/>
</dbReference>
<dbReference type="GO" id="GO:0000139">
    <property type="term" value="C:Golgi membrane"/>
    <property type="evidence" value="ECO:0007669"/>
    <property type="project" value="UniProtKB-SubCell"/>
</dbReference>
<dbReference type="GO" id="GO:0030426">
    <property type="term" value="C:growth cone"/>
    <property type="evidence" value="ECO:0000314"/>
    <property type="project" value="UniProtKB"/>
</dbReference>
<dbReference type="GO" id="GO:0000776">
    <property type="term" value="C:kinetochore"/>
    <property type="evidence" value="ECO:0000314"/>
    <property type="project" value="UniProtKB"/>
</dbReference>
<dbReference type="GO" id="GO:0016020">
    <property type="term" value="C:membrane"/>
    <property type="evidence" value="ECO:0000314"/>
    <property type="project" value="UniProtKB"/>
</dbReference>
<dbReference type="GO" id="GO:0045121">
    <property type="term" value="C:membrane raft"/>
    <property type="evidence" value="ECO:0000314"/>
    <property type="project" value="UniProtKB"/>
</dbReference>
<dbReference type="GO" id="GO:0005743">
    <property type="term" value="C:mitochondrial inner membrane"/>
    <property type="evidence" value="ECO:0007669"/>
    <property type="project" value="Ensembl"/>
</dbReference>
<dbReference type="GO" id="GO:0005739">
    <property type="term" value="C:mitochondrion"/>
    <property type="evidence" value="ECO:0000314"/>
    <property type="project" value="UniProtKB"/>
</dbReference>
<dbReference type="GO" id="GO:0031594">
    <property type="term" value="C:neuromuscular junction"/>
    <property type="evidence" value="ECO:0007669"/>
    <property type="project" value="Ensembl"/>
</dbReference>
<dbReference type="GO" id="GO:0043005">
    <property type="term" value="C:neuron projection"/>
    <property type="evidence" value="ECO:0000314"/>
    <property type="project" value="UniProtKB"/>
</dbReference>
<dbReference type="GO" id="GO:0043025">
    <property type="term" value="C:neuronal cell body"/>
    <property type="evidence" value="ECO:0007669"/>
    <property type="project" value="Ensembl"/>
</dbReference>
<dbReference type="GO" id="GO:0031965">
    <property type="term" value="C:nuclear membrane"/>
    <property type="evidence" value="ECO:0000314"/>
    <property type="project" value="UniProtKB"/>
</dbReference>
<dbReference type="GO" id="GO:0005640">
    <property type="term" value="C:nuclear outer membrane"/>
    <property type="evidence" value="ECO:0000314"/>
    <property type="project" value="MGI"/>
</dbReference>
<dbReference type="GO" id="GO:0005654">
    <property type="term" value="C:nucleoplasm"/>
    <property type="evidence" value="ECO:0000314"/>
    <property type="project" value="HPA"/>
</dbReference>
<dbReference type="GO" id="GO:0005634">
    <property type="term" value="C:nucleus"/>
    <property type="evidence" value="ECO:0000315"/>
    <property type="project" value="CAFA"/>
</dbReference>
<dbReference type="GO" id="GO:0005886">
    <property type="term" value="C:plasma membrane"/>
    <property type="evidence" value="ECO:0000314"/>
    <property type="project" value="UniProtKB"/>
</dbReference>
<dbReference type="GO" id="GO:0098794">
    <property type="term" value="C:postsynapse"/>
    <property type="evidence" value="ECO:0007669"/>
    <property type="project" value="GOC"/>
</dbReference>
<dbReference type="GO" id="GO:0042734">
    <property type="term" value="C:presynaptic membrane"/>
    <property type="evidence" value="ECO:0007669"/>
    <property type="project" value="Ensembl"/>
</dbReference>
<dbReference type="GO" id="GO:0032991">
    <property type="term" value="C:protein-containing complex"/>
    <property type="evidence" value="ECO:0000315"/>
    <property type="project" value="CAFA"/>
</dbReference>
<dbReference type="GO" id="GO:0005791">
    <property type="term" value="C:rough endoplasmic reticulum"/>
    <property type="evidence" value="ECO:0000314"/>
    <property type="project" value="UniProtKB"/>
</dbReference>
<dbReference type="GO" id="GO:0042383">
    <property type="term" value="C:sarcolemma"/>
    <property type="evidence" value="ECO:0007669"/>
    <property type="project" value="Ensembl"/>
</dbReference>
<dbReference type="GO" id="GO:0005790">
    <property type="term" value="C:smooth endoplasmic reticulum"/>
    <property type="evidence" value="ECO:0000314"/>
    <property type="project" value="UniProtKB"/>
</dbReference>
<dbReference type="GO" id="GO:0008021">
    <property type="term" value="C:synaptic vesicle"/>
    <property type="evidence" value="ECO:0007669"/>
    <property type="project" value="Ensembl"/>
</dbReference>
<dbReference type="GO" id="GO:0042500">
    <property type="term" value="F:aspartic endopeptidase activity, intramembrane cleaving"/>
    <property type="evidence" value="ECO:0000314"/>
    <property type="project" value="UniProtKB"/>
</dbReference>
<dbReference type="GO" id="GO:0004190">
    <property type="term" value="F:aspartic-type endopeptidase activity"/>
    <property type="evidence" value="ECO:0000303"/>
    <property type="project" value="ARUK-UCL"/>
</dbReference>
<dbReference type="GO" id="GO:0051117">
    <property type="term" value="F:ATPase binding"/>
    <property type="evidence" value="ECO:0000353"/>
    <property type="project" value="ARUK-UCL"/>
</dbReference>
<dbReference type="GO" id="GO:0008013">
    <property type="term" value="F:beta-catenin binding"/>
    <property type="evidence" value="ECO:0000353"/>
    <property type="project" value="UniProtKB"/>
</dbReference>
<dbReference type="GO" id="GO:0045296">
    <property type="term" value="F:cadherin binding"/>
    <property type="evidence" value="ECO:0007669"/>
    <property type="project" value="Ensembl"/>
</dbReference>
<dbReference type="GO" id="GO:0005262">
    <property type="term" value="F:calcium channel activity"/>
    <property type="evidence" value="ECO:0000315"/>
    <property type="project" value="UniProtKB"/>
</dbReference>
<dbReference type="GO" id="GO:0004175">
    <property type="term" value="F:endopeptidase activity"/>
    <property type="evidence" value="ECO:0000314"/>
    <property type="project" value="MGI"/>
</dbReference>
<dbReference type="GO" id="GO:0070851">
    <property type="term" value="F:growth factor receptor binding"/>
    <property type="evidence" value="ECO:0000353"/>
    <property type="project" value="ARUK-UCL"/>
</dbReference>
<dbReference type="GO" id="GO:0030165">
    <property type="term" value="F:PDZ domain binding"/>
    <property type="evidence" value="ECO:0000353"/>
    <property type="project" value="UniProtKB"/>
</dbReference>
<dbReference type="GO" id="GO:0042987">
    <property type="term" value="P:amyloid precursor protein catabolic process"/>
    <property type="evidence" value="ECO:0000314"/>
    <property type="project" value="ARUK-UCL"/>
</dbReference>
<dbReference type="GO" id="GO:0042982">
    <property type="term" value="P:amyloid precursor protein metabolic process"/>
    <property type="evidence" value="ECO:0000314"/>
    <property type="project" value="UniProtKB"/>
</dbReference>
<dbReference type="GO" id="GO:0034205">
    <property type="term" value="P:amyloid-beta formation"/>
    <property type="evidence" value="ECO:0000314"/>
    <property type="project" value="ARUK-UCL"/>
</dbReference>
<dbReference type="GO" id="GO:0097190">
    <property type="term" value="P:apoptotic signaling pathway"/>
    <property type="evidence" value="ECO:0007669"/>
    <property type="project" value="Ensembl"/>
</dbReference>
<dbReference type="GO" id="GO:0048143">
    <property type="term" value="P:astrocyte activation"/>
    <property type="evidence" value="ECO:0000316"/>
    <property type="project" value="ARUK-UCL"/>
</dbReference>
<dbReference type="GO" id="GO:0002265">
    <property type="term" value="P:astrocyte activation involved in immune response"/>
    <property type="evidence" value="ECO:0000316"/>
    <property type="project" value="ARUK-UCL"/>
</dbReference>
<dbReference type="GO" id="GO:0000045">
    <property type="term" value="P:autophagosome assembly"/>
    <property type="evidence" value="ECO:0007669"/>
    <property type="project" value="Ensembl"/>
</dbReference>
<dbReference type="GO" id="GO:0001568">
    <property type="term" value="P:blood vessel development"/>
    <property type="evidence" value="ECO:0007669"/>
    <property type="project" value="Ensembl"/>
</dbReference>
<dbReference type="GO" id="GO:0048854">
    <property type="term" value="P:brain morphogenesis"/>
    <property type="evidence" value="ECO:0007669"/>
    <property type="project" value="Ensembl"/>
</dbReference>
<dbReference type="GO" id="GO:0021870">
    <property type="term" value="P:Cajal-Retzius cell differentiation"/>
    <property type="evidence" value="ECO:0007669"/>
    <property type="project" value="Ensembl"/>
</dbReference>
<dbReference type="GO" id="GO:0055074">
    <property type="term" value="P:calcium ion homeostasis"/>
    <property type="evidence" value="ECO:0000318"/>
    <property type="project" value="GO_Central"/>
</dbReference>
<dbReference type="GO" id="GO:0001708">
    <property type="term" value="P:cell fate specification"/>
    <property type="evidence" value="ECO:0007669"/>
    <property type="project" value="Ensembl"/>
</dbReference>
<dbReference type="GO" id="GO:0098609">
    <property type="term" value="P:cell-cell adhesion"/>
    <property type="evidence" value="ECO:0000315"/>
    <property type="project" value="MGI"/>
</dbReference>
<dbReference type="GO" id="GO:1904646">
    <property type="term" value="P:cellular response to amyloid-beta"/>
    <property type="evidence" value="ECO:0000316"/>
    <property type="project" value="ARUK-UCL"/>
</dbReference>
<dbReference type="GO" id="GO:0021549">
    <property type="term" value="P:cerebellum development"/>
    <property type="evidence" value="ECO:0007669"/>
    <property type="project" value="Ensembl"/>
</dbReference>
<dbReference type="GO" id="GO:0021795">
    <property type="term" value="P:cerebral cortex cell migration"/>
    <property type="evidence" value="ECO:0007669"/>
    <property type="project" value="Ensembl"/>
</dbReference>
<dbReference type="GO" id="GO:0015871">
    <property type="term" value="P:choline transport"/>
    <property type="evidence" value="ECO:0007669"/>
    <property type="project" value="Ensembl"/>
</dbReference>
<dbReference type="GO" id="GO:0006974">
    <property type="term" value="P:DNA damage response"/>
    <property type="evidence" value="ECO:0000314"/>
    <property type="project" value="ARUK-UCL"/>
</dbReference>
<dbReference type="GO" id="GO:0021904">
    <property type="term" value="P:dorsal/ventral neural tube patterning"/>
    <property type="evidence" value="ECO:0007669"/>
    <property type="project" value="Ensembl"/>
</dbReference>
<dbReference type="GO" id="GO:0030326">
    <property type="term" value="P:embryonic limb morphogenesis"/>
    <property type="evidence" value="ECO:0007669"/>
    <property type="project" value="Ensembl"/>
</dbReference>
<dbReference type="GO" id="GO:0032469">
    <property type="term" value="P:endoplasmic reticulum calcium ion homeostasis"/>
    <property type="evidence" value="ECO:0000314"/>
    <property type="project" value="MGI"/>
</dbReference>
<dbReference type="GO" id="GO:0050673">
    <property type="term" value="P:epithelial cell proliferation"/>
    <property type="evidence" value="ECO:0007669"/>
    <property type="project" value="Ensembl"/>
</dbReference>
<dbReference type="GO" id="GO:0001947">
    <property type="term" value="P:heart looping"/>
    <property type="evidence" value="ECO:0007669"/>
    <property type="project" value="Ensembl"/>
</dbReference>
<dbReference type="GO" id="GO:0002244">
    <property type="term" value="P:hematopoietic progenitor cell differentiation"/>
    <property type="evidence" value="ECO:0007669"/>
    <property type="project" value="Ensembl"/>
</dbReference>
<dbReference type="GO" id="GO:0035556">
    <property type="term" value="P:intracellular signal transduction"/>
    <property type="evidence" value="ECO:0007669"/>
    <property type="project" value="InterPro"/>
</dbReference>
<dbReference type="GO" id="GO:0098712">
    <property type="term" value="P:L-glutamate import across plasma membrane"/>
    <property type="evidence" value="ECO:0007669"/>
    <property type="project" value="Ensembl"/>
</dbReference>
<dbReference type="GO" id="GO:0007611">
    <property type="term" value="P:learning or memory"/>
    <property type="evidence" value="ECO:0000316"/>
    <property type="project" value="ARUK-UCL"/>
</dbReference>
<dbReference type="GO" id="GO:0040011">
    <property type="term" value="P:locomotion"/>
    <property type="evidence" value="ECO:0007669"/>
    <property type="project" value="Ensembl"/>
</dbReference>
<dbReference type="GO" id="GO:0006509">
    <property type="term" value="P:membrane protein ectodomain proteolysis"/>
    <property type="evidence" value="ECO:0000314"/>
    <property type="project" value="HGNC-UCL"/>
</dbReference>
<dbReference type="GO" id="GO:0007613">
    <property type="term" value="P:memory"/>
    <property type="evidence" value="ECO:0000316"/>
    <property type="project" value="ARUK-UCL"/>
</dbReference>
<dbReference type="GO" id="GO:0006839">
    <property type="term" value="P:mitochondrial transport"/>
    <property type="evidence" value="ECO:0007669"/>
    <property type="project" value="Ensembl"/>
</dbReference>
<dbReference type="GO" id="GO:0043011">
    <property type="term" value="P:myeloid dendritic cell differentiation"/>
    <property type="evidence" value="ECO:0007669"/>
    <property type="project" value="Ensembl"/>
</dbReference>
<dbReference type="GO" id="GO:0043066">
    <property type="term" value="P:negative regulation of apoptotic process"/>
    <property type="evidence" value="ECO:0000314"/>
    <property type="project" value="UniProtKB"/>
</dbReference>
<dbReference type="GO" id="GO:2001234">
    <property type="term" value="P:negative regulation of apoptotic signaling pathway"/>
    <property type="evidence" value="ECO:0007669"/>
    <property type="project" value="Ensembl"/>
</dbReference>
<dbReference type="GO" id="GO:0050771">
    <property type="term" value="P:negative regulation of axonogenesis"/>
    <property type="evidence" value="ECO:0007669"/>
    <property type="project" value="Ensembl"/>
</dbReference>
<dbReference type="GO" id="GO:1904797">
    <property type="term" value="P:negative regulation of core promoter binding"/>
    <property type="evidence" value="ECO:0000315"/>
    <property type="project" value="CAFA"/>
</dbReference>
<dbReference type="GO" id="GO:0010629">
    <property type="term" value="P:negative regulation of gene expression"/>
    <property type="evidence" value="ECO:0000316"/>
    <property type="project" value="ARUK-UCL"/>
</dbReference>
<dbReference type="GO" id="GO:0043524">
    <property type="term" value="P:negative regulation of neuron apoptotic process"/>
    <property type="evidence" value="ECO:0007669"/>
    <property type="project" value="Ensembl"/>
</dbReference>
<dbReference type="GO" id="GO:0000122">
    <property type="term" value="P:negative regulation of transcription by RNA polymerase II"/>
    <property type="evidence" value="ECO:0000315"/>
    <property type="project" value="CAFA"/>
</dbReference>
<dbReference type="GO" id="GO:2000059">
    <property type="term" value="P:negative regulation of ubiquitin-dependent protein catabolic process"/>
    <property type="evidence" value="ECO:0007669"/>
    <property type="project" value="Ensembl"/>
</dbReference>
<dbReference type="GO" id="GO:0003407">
    <property type="term" value="P:neural retina development"/>
    <property type="evidence" value="ECO:0007669"/>
    <property type="project" value="Ensembl"/>
</dbReference>
<dbReference type="GO" id="GO:0051402">
    <property type="term" value="P:neuron apoptotic process"/>
    <property type="evidence" value="ECO:0007669"/>
    <property type="project" value="Ensembl"/>
</dbReference>
<dbReference type="GO" id="GO:0070050">
    <property type="term" value="P:neuron cellular homeostasis"/>
    <property type="evidence" value="ECO:0007669"/>
    <property type="project" value="Ensembl"/>
</dbReference>
<dbReference type="GO" id="GO:0048666">
    <property type="term" value="P:neuron development"/>
    <property type="evidence" value="ECO:0007669"/>
    <property type="project" value="Ensembl"/>
</dbReference>
<dbReference type="GO" id="GO:0001764">
    <property type="term" value="P:neuron migration"/>
    <property type="evidence" value="ECO:0007669"/>
    <property type="project" value="Ensembl"/>
</dbReference>
<dbReference type="GO" id="GO:1990535">
    <property type="term" value="P:neuron projection maintenance"/>
    <property type="evidence" value="ECO:0000316"/>
    <property type="project" value="ARUK-UCL"/>
</dbReference>
<dbReference type="GO" id="GO:0007220">
    <property type="term" value="P:Notch receptor processing"/>
    <property type="evidence" value="ECO:0000314"/>
    <property type="project" value="ARUK-UCL"/>
</dbReference>
<dbReference type="GO" id="GO:0007219">
    <property type="term" value="P:Notch signaling pathway"/>
    <property type="evidence" value="ECO:0000318"/>
    <property type="project" value="GO_Central"/>
</dbReference>
<dbReference type="GO" id="GO:1905908">
    <property type="term" value="P:positive regulation of amyloid fibril formation"/>
    <property type="evidence" value="ECO:0000316"/>
    <property type="project" value="ARUK-UCL"/>
</dbReference>
<dbReference type="GO" id="GO:0043065">
    <property type="term" value="P:positive regulation of apoptotic process"/>
    <property type="evidence" value="ECO:0007669"/>
    <property type="project" value="Ensembl"/>
</dbReference>
<dbReference type="GO" id="GO:0050820">
    <property type="term" value="P:positive regulation of coagulation"/>
    <property type="evidence" value="ECO:0007669"/>
    <property type="project" value="Ensembl"/>
</dbReference>
<dbReference type="GO" id="GO:0060999">
    <property type="term" value="P:positive regulation of dendritic spine development"/>
    <property type="evidence" value="ECO:0000315"/>
    <property type="project" value="CACAO"/>
</dbReference>
<dbReference type="GO" id="GO:0045893">
    <property type="term" value="P:positive regulation of DNA-templated transcription"/>
    <property type="evidence" value="ECO:0000315"/>
    <property type="project" value="CACAO"/>
</dbReference>
<dbReference type="GO" id="GO:0010628">
    <property type="term" value="P:positive regulation of gene expression"/>
    <property type="evidence" value="ECO:0000316"/>
    <property type="project" value="ARUK-UCL"/>
</dbReference>
<dbReference type="GO" id="GO:0045821">
    <property type="term" value="P:positive regulation of glycolytic process"/>
    <property type="evidence" value="ECO:0000316"/>
    <property type="project" value="ARUK-UCL"/>
</dbReference>
<dbReference type="GO" id="GO:0002038">
    <property type="term" value="P:positive regulation of L-glutamate import across plasma membrane"/>
    <property type="evidence" value="ECO:0007669"/>
    <property type="project" value="Ensembl"/>
</dbReference>
<dbReference type="GO" id="GO:0032436">
    <property type="term" value="P:positive regulation of proteasomal ubiquitin-dependent protein catabolic process"/>
    <property type="evidence" value="ECO:0007669"/>
    <property type="project" value="Ensembl"/>
</dbReference>
<dbReference type="GO" id="GO:0042307">
    <property type="term" value="P:positive regulation of protein import into nucleus"/>
    <property type="evidence" value="ECO:0000315"/>
    <property type="project" value="UniProtKB"/>
</dbReference>
<dbReference type="GO" id="GO:0001921">
    <property type="term" value="P:positive regulation of receptor recycling"/>
    <property type="evidence" value="ECO:0007669"/>
    <property type="project" value="Ensembl"/>
</dbReference>
<dbReference type="GO" id="GO:0032760">
    <property type="term" value="P:positive regulation of tumor necrosis factor production"/>
    <property type="evidence" value="ECO:0000316"/>
    <property type="project" value="ARUK-UCL"/>
</dbReference>
<dbReference type="GO" id="GO:0009791">
    <property type="term" value="P:post-embryonic development"/>
    <property type="evidence" value="ECO:0007669"/>
    <property type="project" value="Ensembl"/>
</dbReference>
<dbReference type="GO" id="GO:0140249">
    <property type="term" value="P:protein catabolic process at postsynapse"/>
    <property type="evidence" value="ECO:0007669"/>
    <property type="project" value="Ensembl"/>
</dbReference>
<dbReference type="GO" id="GO:0006486">
    <property type="term" value="P:protein glycosylation"/>
    <property type="evidence" value="ECO:0007669"/>
    <property type="project" value="Ensembl"/>
</dbReference>
<dbReference type="GO" id="GO:0016485">
    <property type="term" value="P:protein processing"/>
    <property type="evidence" value="ECO:0000314"/>
    <property type="project" value="HGNC-UCL"/>
</dbReference>
<dbReference type="GO" id="GO:0015031">
    <property type="term" value="P:protein transport"/>
    <property type="evidence" value="ECO:0007669"/>
    <property type="project" value="Ensembl"/>
</dbReference>
<dbReference type="GO" id="GO:0060828">
    <property type="term" value="P:regulation of canonical Wnt signaling pathway"/>
    <property type="evidence" value="ECO:0000250"/>
    <property type="project" value="UniProtKB"/>
</dbReference>
<dbReference type="GO" id="GO:0010468">
    <property type="term" value="P:regulation of gene expression"/>
    <property type="evidence" value="ECO:0000316"/>
    <property type="project" value="ARUK-UCL"/>
</dbReference>
<dbReference type="GO" id="GO:0010975">
    <property type="term" value="P:regulation of neuron projection development"/>
    <property type="evidence" value="ECO:0000315"/>
    <property type="project" value="UniProtKB"/>
</dbReference>
<dbReference type="GO" id="GO:0042325">
    <property type="term" value="P:regulation of phosphorylation"/>
    <property type="evidence" value="ECO:0000314"/>
    <property type="project" value="UniProtKB"/>
</dbReference>
<dbReference type="GO" id="GO:0099175">
    <property type="term" value="P:regulation of postsynapse organization"/>
    <property type="evidence" value="ECO:0007669"/>
    <property type="project" value="Ensembl"/>
</dbReference>
<dbReference type="GO" id="GO:0060075">
    <property type="term" value="P:regulation of resting membrane potential"/>
    <property type="evidence" value="ECO:0007669"/>
    <property type="project" value="Ensembl"/>
</dbReference>
<dbReference type="GO" id="GO:0048167">
    <property type="term" value="P:regulation of synaptic plasticity"/>
    <property type="evidence" value="ECO:0007669"/>
    <property type="project" value="Ensembl"/>
</dbReference>
<dbReference type="GO" id="GO:0051966">
    <property type="term" value="P:regulation of synaptic transmission, glutamatergic"/>
    <property type="evidence" value="ECO:0007669"/>
    <property type="project" value="Ensembl"/>
</dbReference>
<dbReference type="GO" id="GO:0098693">
    <property type="term" value="P:regulation of synaptic vesicle cycle"/>
    <property type="evidence" value="ECO:0007669"/>
    <property type="project" value="Ensembl"/>
</dbReference>
<dbReference type="GO" id="GO:0006979">
    <property type="term" value="P:response to oxidative stress"/>
    <property type="evidence" value="ECO:0007669"/>
    <property type="project" value="Ensembl"/>
</dbReference>
<dbReference type="GO" id="GO:0051208">
    <property type="term" value="P:sequestering of calcium ion"/>
    <property type="evidence" value="ECO:0007669"/>
    <property type="project" value="Ensembl"/>
</dbReference>
<dbReference type="GO" id="GO:0048705">
    <property type="term" value="P:skeletal system morphogenesis"/>
    <property type="evidence" value="ECO:0007669"/>
    <property type="project" value="Ensembl"/>
</dbReference>
<dbReference type="GO" id="GO:0043589">
    <property type="term" value="P:skin morphogenesis"/>
    <property type="evidence" value="ECO:0007669"/>
    <property type="project" value="Ensembl"/>
</dbReference>
<dbReference type="GO" id="GO:0051563">
    <property type="term" value="P:smooth endoplasmic reticulum calcium ion homeostasis"/>
    <property type="evidence" value="ECO:0007669"/>
    <property type="project" value="Ensembl"/>
</dbReference>
<dbReference type="GO" id="GO:0001756">
    <property type="term" value="P:somitogenesis"/>
    <property type="evidence" value="ECO:0007669"/>
    <property type="project" value="Ensembl"/>
</dbReference>
<dbReference type="GO" id="GO:0050808">
    <property type="term" value="P:synapse organization"/>
    <property type="evidence" value="ECO:0000316"/>
    <property type="project" value="ARUK-UCL"/>
</dbReference>
<dbReference type="GO" id="GO:0016080">
    <property type="term" value="P:synaptic vesicle targeting"/>
    <property type="evidence" value="ECO:0007669"/>
    <property type="project" value="Ensembl"/>
</dbReference>
<dbReference type="GO" id="GO:0002286">
    <property type="term" value="P:T cell activation involved in immune response"/>
    <property type="evidence" value="ECO:0007669"/>
    <property type="project" value="Ensembl"/>
</dbReference>
<dbReference type="GO" id="GO:0050852">
    <property type="term" value="P:T cell receptor signaling pathway"/>
    <property type="evidence" value="ECO:0007669"/>
    <property type="project" value="Ensembl"/>
</dbReference>
<dbReference type="GO" id="GO:0048538">
    <property type="term" value="P:thymus development"/>
    <property type="evidence" value="ECO:0007669"/>
    <property type="project" value="Ensembl"/>
</dbReference>
<dbReference type="DisProt" id="DP01292"/>
<dbReference type="FunFam" id="1.10.472.100:FF:000001">
    <property type="entry name" value="Presenilin"/>
    <property type="match status" value="1"/>
</dbReference>
<dbReference type="Gene3D" id="1.10.472.100">
    <property type="entry name" value="Presenilin"/>
    <property type="match status" value="1"/>
</dbReference>
<dbReference type="InterPro" id="IPR002031">
    <property type="entry name" value="Pept_A22A_PS1"/>
</dbReference>
<dbReference type="InterPro" id="IPR001108">
    <property type="entry name" value="Peptidase_A22A"/>
</dbReference>
<dbReference type="InterPro" id="IPR006639">
    <property type="entry name" value="Preselin/SPP"/>
</dbReference>
<dbReference type="InterPro" id="IPR042524">
    <property type="entry name" value="Presenilin_C"/>
</dbReference>
<dbReference type="PANTHER" id="PTHR10202">
    <property type="entry name" value="PRESENILIN"/>
    <property type="match status" value="1"/>
</dbReference>
<dbReference type="PANTHER" id="PTHR10202:SF18">
    <property type="entry name" value="PRESENILIN-1"/>
    <property type="match status" value="1"/>
</dbReference>
<dbReference type="Pfam" id="PF01080">
    <property type="entry name" value="Presenilin"/>
    <property type="match status" value="1"/>
</dbReference>
<dbReference type="PRINTS" id="PR01072">
    <property type="entry name" value="PRESENILIN"/>
</dbReference>
<dbReference type="PRINTS" id="PR01073">
    <property type="entry name" value="PRESENILIN1"/>
</dbReference>
<dbReference type="SMART" id="SM00730">
    <property type="entry name" value="PSN"/>
    <property type="match status" value="1"/>
</dbReference>
<evidence type="ECO:0000250" key="1">
    <source>
        <dbReference type="UniProtKB" id="P49769"/>
    </source>
</evidence>
<evidence type="ECO:0000250" key="2">
    <source>
        <dbReference type="UniProtKB" id="P97887"/>
    </source>
</evidence>
<evidence type="ECO:0000250" key="3">
    <source>
        <dbReference type="UniProtKB" id="Q4JIM4"/>
    </source>
</evidence>
<evidence type="ECO:0000256" key="4">
    <source>
        <dbReference type="SAM" id="MobiDB-lite"/>
    </source>
</evidence>
<evidence type="ECO:0000269" key="5">
    <source>
    </source>
</evidence>
<evidence type="ECO:0000269" key="6">
    <source>
    </source>
</evidence>
<evidence type="ECO:0000269" key="7">
    <source>
    </source>
</evidence>
<evidence type="ECO:0000269" key="8">
    <source>
    </source>
</evidence>
<evidence type="ECO:0000269" key="9">
    <source>
    </source>
</evidence>
<evidence type="ECO:0000269" key="10">
    <source>
    </source>
</evidence>
<evidence type="ECO:0000269" key="11">
    <source>
    </source>
</evidence>
<evidence type="ECO:0000269" key="12">
    <source>
    </source>
</evidence>
<evidence type="ECO:0000269" key="13">
    <source>
    </source>
</evidence>
<evidence type="ECO:0000269" key="14">
    <source>
    </source>
</evidence>
<evidence type="ECO:0000269" key="15">
    <source>
    </source>
</evidence>
<evidence type="ECO:0000269" key="16">
    <source>
    </source>
</evidence>
<evidence type="ECO:0000269" key="17">
    <source>
    </source>
</evidence>
<evidence type="ECO:0000269" key="18">
    <source>
    </source>
</evidence>
<evidence type="ECO:0000269" key="19">
    <source>
    </source>
</evidence>
<evidence type="ECO:0000269" key="20">
    <source>
    </source>
</evidence>
<evidence type="ECO:0000269" key="21">
    <source>
    </source>
</evidence>
<evidence type="ECO:0000269" key="22">
    <source>
    </source>
</evidence>
<evidence type="ECO:0000269" key="23">
    <source>
    </source>
</evidence>
<evidence type="ECO:0000269" key="24">
    <source>
    </source>
</evidence>
<evidence type="ECO:0000269" key="25">
    <source>
    </source>
</evidence>
<evidence type="ECO:0000269" key="26">
    <source>
    </source>
</evidence>
<evidence type="ECO:0000269" key="27">
    <source>
    </source>
</evidence>
<evidence type="ECO:0000269" key="28">
    <source>
    </source>
</evidence>
<evidence type="ECO:0000269" key="29">
    <source>
    </source>
</evidence>
<evidence type="ECO:0000269" key="30">
    <source>
    </source>
</evidence>
<evidence type="ECO:0000269" key="31">
    <source>
    </source>
</evidence>
<evidence type="ECO:0000269" key="32">
    <source>
    </source>
</evidence>
<evidence type="ECO:0000269" key="33">
    <source>
    </source>
</evidence>
<evidence type="ECO:0000269" key="34">
    <source>
    </source>
</evidence>
<evidence type="ECO:0000269" key="35">
    <source>
    </source>
</evidence>
<evidence type="ECO:0000269" key="36">
    <source>
    </source>
</evidence>
<evidence type="ECO:0000269" key="37">
    <source>
    </source>
</evidence>
<evidence type="ECO:0000269" key="38">
    <source>
    </source>
</evidence>
<evidence type="ECO:0000269" key="39">
    <source>
    </source>
</evidence>
<evidence type="ECO:0000269" key="40">
    <source>
    </source>
</evidence>
<evidence type="ECO:0000269" key="41">
    <source>
    </source>
</evidence>
<evidence type="ECO:0000269" key="42">
    <source>
    </source>
</evidence>
<evidence type="ECO:0000269" key="43">
    <source>
    </source>
</evidence>
<evidence type="ECO:0000269" key="44">
    <source>
    </source>
</evidence>
<evidence type="ECO:0000269" key="45">
    <source>
    </source>
</evidence>
<evidence type="ECO:0000269" key="46">
    <source>
    </source>
</evidence>
<evidence type="ECO:0000269" key="47">
    <source>
    </source>
</evidence>
<evidence type="ECO:0000269" key="48">
    <source>
    </source>
</evidence>
<evidence type="ECO:0000269" key="49">
    <source>
    </source>
</evidence>
<evidence type="ECO:0000269" key="50">
    <source>
    </source>
</evidence>
<evidence type="ECO:0000269" key="51">
    <source>
    </source>
</evidence>
<evidence type="ECO:0000269" key="52">
    <source>
    </source>
</evidence>
<evidence type="ECO:0000269" key="53">
    <source>
    </source>
</evidence>
<evidence type="ECO:0000269" key="54">
    <source>
    </source>
</evidence>
<evidence type="ECO:0000269" key="55">
    <source>
    </source>
</evidence>
<evidence type="ECO:0000269" key="56">
    <source>
    </source>
</evidence>
<evidence type="ECO:0000269" key="57">
    <source>
    </source>
</evidence>
<evidence type="ECO:0000269" key="58">
    <source>
    </source>
</evidence>
<evidence type="ECO:0000269" key="59">
    <source>
    </source>
</evidence>
<evidence type="ECO:0000269" key="60">
    <source>
    </source>
</evidence>
<evidence type="ECO:0000269" key="61">
    <source>
    </source>
</evidence>
<evidence type="ECO:0000269" key="62">
    <source>
    </source>
</evidence>
<evidence type="ECO:0000269" key="63">
    <source>
    </source>
</evidence>
<evidence type="ECO:0000269" key="64">
    <source>
    </source>
</evidence>
<evidence type="ECO:0000269" key="65">
    <source>
    </source>
</evidence>
<evidence type="ECO:0000269" key="66">
    <source>
    </source>
</evidence>
<evidence type="ECO:0000269" key="67">
    <source>
    </source>
</evidence>
<evidence type="ECO:0000269" key="68">
    <source>
    </source>
</evidence>
<evidence type="ECO:0000269" key="69">
    <source>
    </source>
</evidence>
<evidence type="ECO:0000269" key="70">
    <source>
    </source>
</evidence>
<evidence type="ECO:0000269" key="71">
    <source>
    </source>
</evidence>
<evidence type="ECO:0000269" key="72">
    <source>
    </source>
</evidence>
<evidence type="ECO:0000269" key="73">
    <source>
    </source>
</evidence>
<evidence type="ECO:0000269" key="74">
    <source>
    </source>
</evidence>
<evidence type="ECO:0000269" key="75">
    <source>
    </source>
</evidence>
<evidence type="ECO:0000269" key="76">
    <source>
    </source>
</evidence>
<evidence type="ECO:0000269" key="77">
    <source>
    </source>
</evidence>
<evidence type="ECO:0000269" key="78">
    <source>
    </source>
</evidence>
<evidence type="ECO:0000269" key="79">
    <source>
    </source>
</evidence>
<evidence type="ECO:0000269" key="80">
    <source>
    </source>
</evidence>
<evidence type="ECO:0000269" key="81">
    <source>
    </source>
</evidence>
<evidence type="ECO:0000269" key="82">
    <source>
    </source>
</evidence>
<evidence type="ECO:0000269" key="83">
    <source>
    </source>
</evidence>
<evidence type="ECO:0000269" key="84">
    <source>
    </source>
</evidence>
<evidence type="ECO:0000269" key="85">
    <source>
    </source>
</evidence>
<evidence type="ECO:0000269" key="86">
    <source>
    </source>
</evidence>
<evidence type="ECO:0000269" key="87">
    <source>
    </source>
</evidence>
<evidence type="ECO:0000269" key="88">
    <source>
    </source>
</evidence>
<evidence type="ECO:0000269" key="89">
    <source>
    </source>
</evidence>
<evidence type="ECO:0000269" key="90">
    <source>
    </source>
</evidence>
<evidence type="ECO:0000269" key="91">
    <source>
    </source>
</evidence>
<evidence type="ECO:0000269" key="92">
    <source>
    </source>
</evidence>
<evidence type="ECO:0000269" key="93">
    <source>
    </source>
</evidence>
<evidence type="ECO:0000269" key="94">
    <source>
    </source>
</evidence>
<evidence type="ECO:0000269" key="95">
    <source>
    </source>
</evidence>
<evidence type="ECO:0000269" key="96">
    <source>
    </source>
</evidence>
<evidence type="ECO:0000269" key="97">
    <source>
    </source>
</evidence>
<evidence type="ECO:0000269" key="98">
    <source>
    </source>
</evidence>
<evidence type="ECO:0000269" key="99">
    <source>
    </source>
</evidence>
<evidence type="ECO:0000269" key="100">
    <source>
    </source>
</evidence>
<evidence type="ECO:0000269" key="101">
    <source>
    </source>
</evidence>
<evidence type="ECO:0000269" key="102">
    <source>
    </source>
</evidence>
<evidence type="ECO:0000269" key="103">
    <source>
    </source>
</evidence>
<evidence type="ECO:0000269" key="104">
    <source>
    </source>
</evidence>
<evidence type="ECO:0000269" key="105">
    <source>
    </source>
</evidence>
<evidence type="ECO:0000269" key="106">
    <source>
    </source>
</evidence>
<evidence type="ECO:0000269" key="107">
    <source>
    </source>
</evidence>
<evidence type="ECO:0000269" key="108">
    <source>
    </source>
</evidence>
<evidence type="ECO:0000269" key="109">
    <source>
    </source>
</evidence>
<evidence type="ECO:0000269" key="110">
    <source>
    </source>
</evidence>
<evidence type="ECO:0000269" key="111">
    <source>
    </source>
</evidence>
<evidence type="ECO:0000269" key="112">
    <source>
    </source>
</evidence>
<evidence type="ECO:0000269" key="113">
    <source>
    </source>
</evidence>
<evidence type="ECO:0000269" key="114">
    <source>
    </source>
</evidence>
<evidence type="ECO:0000269" key="115">
    <source>
    </source>
</evidence>
<evidence type="ECO:0000269" key="116">
    <source>
    </source>
</evidence>
<evidence type="ECO:0000269" key="117">
    <source>
    </source>
</evidence>
<evidence type="ECO:0000269" key="118">
    <source>
    </source>
</evidence>
<evidence type="ECO:0000269" key="119">
    <source>
    </source>
</evidence>
<evidence type="ECO:0000269" key="120">
    <source>
    </source>
</evidence>
<evidence type="ECO:0000269" key="121">
    <source>
    </source>
</evidence>
<evidence type="ECO:0000269" key="122">
    <source>
    </source>
</evidence>
<evidence type="ECO:0000269" key="123">
    <source>
    </source>
</evidence>
<evidence type="ECO:0000269" key="124">
    <source>
    </source>
</evidence>
<evidence type="ECO:0000269" key="125">
    <source>
    </source>
</evidence>
<evidence type="ECO:0000269" key="126">
    <source>
    </source>
</evidence>
<evidence type="ECO:0000269" key="127">
    <source ref="93"/>
</evidence>
<evidence type="ECO:0000303" key="128">
    <source>
    </source>
</evidence>
<evidence type="ECO:0000303" key="129">
    <source>
    </source>
</evidence>
<evidence type="ECO:0000303" key="130">
    <source>
    </source>
</evidence>
<evidence type="ECO:0000303" key="131">
    <source ref="3"/>
</evidence>
<evidence type="ECO:0000303" key="132">
    <source ref="5"/>
</evidence>
<evidence type="ECO:0000305" key="133"/>
<evidence type="ECO:0000305" key="134">
    <source>
    </source>
</evidence>
<evidence type="ECO:0000305" key="135">
    <source>
    </source>
</evidence>
<evidence type="ECO:0000305" key="136">
    <source>
    </source>
</evidence>
<evidence type="ECO:0000305" key="137">
    <source>
    </source>
</evidence>
<evidence type="ECO:0000305" key="138">
    <source>
    </source>
</evidence>
<evidence type="ECO:0000305" key="139">
    <source>
    </source>
</evidence>
<evidence type="ECO:0000305" key="140">
    <source>
    </source>
</evidence>
<evidence type="ECO:0000305" key="141">
    <source>
    </source>
</evidence>
<evidence type="ECO:0000305" key="142">
    <source>
    </source>
</evidence>
<evidence type="ECO:0007744" key="143">
    <source>
        <dbReference type="PDB" id="2KR6"/>
    </source>
</evidence>
<evidence type="ECO:0007744" key="144">
    <source>
        <dbReference type="PDB" id="4UIS"/>
    </source>
</evidence>
<evidence type="ECO:0007744" key="145">
    <source>
        <dbReference type="PDB" id="5A63"/>
    </source>
</evidence>
<evidence type="ECO:0007744" key="146">
    <source>
        <dbReference type="PDB" id="5FN2"/>
    </source>
</evidence>
<evidence type="ECO:0007744" key="147">
    <source>
        <dbReference type="PDB" id="5FN3"/>
    </source>
</evidence>
<evidence type="ECO:0007744" key="148">
    <source>
        <dbReference type="PDB" id="5FN4"/>
    </source>
</evidence>
<evidence type="ECO:0007744" key="149">
    <source>
        <dbReference type="PDB" id="5FN5"/>
    </source>
</evidence>
<evidence type="ECO:0007744" key="150">
    <source>
    </source>
</evidence>
<evidence type="ECO:0007744" key="151">
    <source>
    </source>
</evidence>
<evidence type="ECO:0007744" key="152">
    <source>
    </source>
</evidence>
<evidence type="ECO:0007829" key="153">
    <source>
        <dbReference type="PDB" id="2KR6"/>
    </source>
</evidence>
<evidence type="ECO:0007829" key="154">
    <source>
        <dbReference type="PDB" id="6IDF"/>
    </source>
</evidence>
<evidence type="ECO:0007829" key="155">
    <source>
        <dbReference type="PDB" id="6IYC"/>
    </source>
</evidence>
<evidence type="ECO:0007829" key="156">
    <source>
        <dbReference type="PDB" id="6LR4"/>
    </source>
</evidence>
<evidence type="ECO:0007829" key="157">
    <source>
        <dbReference type="PDB" id="8K8E"/>
    </source>
</evidence>
<evidence type="ECO:0007829" key="158">
    <source>
        <dbReference type="PDB" id="8KCS"/>
    </source>
</evidence>
<evidence type="ECO:0007829" key="159">
    <source>
        <dbReference type="PDB" id="8OQY"/>
    </source>
</evidence>
<evidence type="ECO:0007829" key="160">
    <source>
        <dbReference type="PDB" id="8X52"/>
    </source>
</evidence>
<sequence>MTELPAPLSYFQNAQMSEDNHLSNTVRSQNDNRERQEHNDRRSLGHPEPLSNGRPQGNSRQVVEQDEEEDEELTLKYGAKHVIMLFVPVTLCMVVVVATIKSVSFYTRKDGQLIYTPFTEDTETVGQRALHSILNAAIMISVIVVMTILLVVLYKYRCYKVIHAWLIISSLLLLFFFSFIYLGEVFKTYNVAVDYITVALLIWNFGVVGMISIHWKGPLRLQQAYLIMISALMALVFIKYLPEWTAWLILAVISVYDLVAVLCPKGPLRMLVETAQERNETLFPALIYSSTMVWLVNMAEGDPEAQRRVSKNSKYNAESTERESQDTVAENDDGGFSEEWEAQRDSHLGPHRSTPESRAAVQELSSSILAGEDPEERGVKLGLGDFIFYSVLVGKASATASGDWNTTIACFVAILIGLCLTLLLLAIFKKALPALPISITFGLVFYFATDYLVQPFMDQLAFHQFYI</sequence>
<keyword id="KW-0002">3D-structure</keyword>
<keyword id="KW-0025">Alternative splicing</keyword>
<keyword id="KW-0026">Alzheimer disease</keyword>
<keyword id="KW-1008">Amyloidosis</keyword>
<keyword id="KW-0053">Apoptosis</keyword>
<keyword id="KW-0122">Cardiomyopathy</keyword>
<keyword id="KW-0130">Cell adhesion</keyword>
<keyword id="KW-1003">Cell membrane</keyword>
<keyword id="KW-0966">Cell projection</keyword>
<keyword id="KW-0903">Direct protein sequencing</keyword>
<keyword id="KW-0225">Disease variant</keyword>
<keyword id="KW-0256">Endoplasmic reticulum</keyword>
<keyword id="KW-0967">Endosome</keyword>
<keyword id="KW-0333">Golgi apparatus</keyword>
<keyword id="KW-0378">Hydrolase</keyword>
<keyword id="KW-0472">Membrane</keyword>
<keyword id="KW-0523">Neurodegeneration</keyword>
<keyword id="KW-0914">Notch signaling pathway</keyword>
<keyword id="KW-0597">Phosphoprotein</keyword>
<keyword id="KW-0645">Protease</keyword>
<keyword id="KW-1267">Proteomics identification</keyword>
<keyword id="KW-1185">Reference proteome</keyword>
<keyword id="KW-0770">Synapse</keyword>
<keyword id="KW-0812">Transmembrane</keyword>
<keyword id="KW-1133">Transmembrane helix</keyword>
<comment type="function">
    <text evidence="1 9 15 17 20 21 32 40 41 44 46 47 53 58 61 69 83 84 87 92 98 99 121">Catalytic subunit of the gamma-secretase complex, an endoprotease complex that catalyzes the intramembrane cleavage of integral membrane proteins such as Notch receptors and APP (amyloid-beta precursor protein) (PubMed:10206644, PubMed:10545183, PubMed:10593990, PubMed:10811883, PubMed:10899933, PubMed:12679784, PubMed:12740439, PubMed:15274632, PubMed:20460383, PubMed:25043039, PubMed:26280335, PubMed:28269784, PubMed:30598546, PubMed:30630874). Requires the presence of the other members of the gamma-secretase complex for protease activity (PubMed:15274632, PubMed:25043039, PubMed:26280335, PubMed:30598546, PubMed:30630874). Plays a role in Notch and Wnt signaling cascades and regulation of downstream processes via its role in processing key regulatory proteins, and by regulating cytosolic CTNNB1 levels (PubMed:10593990, PubMed:10811883, PubMed:10899933, PubMed:9738936). Stimulates cell-cell adhesion via its interaction with CDH1; this stabilizes the complexes between CDH1 (E-cadherin) and its interaction partners CTNNB1 (beta-catenin), CTNND1 and JUP (gamma-catenin) (PubMed:11953314). Under conditions of apoptosis or calcium influx, cleaves CDH1 (PubMed:11953314). This promotes the disassembly of the complexes between CDH1 and CTNND1, JUP and CTNNB1, increases the pool of cytoplasmic CTNNB1, and thereby negatively regulates Wnt signaling (PubMed:11953314, PubMed:9738936). Required for normal embryonic brain and skeleton development, and for normal angiogenesis (By similarity). Mediates the proteolytic cleavage of EphB2/CTF1 into EphB2/CTF2 (PubMed:17428795, PubMed:28269784). The holoprotein functions as a calcium-leak channel that allows the passive movement of calcium from endoplasmic reticulum to cytosol and is therefore involved in calcium homeostasis (PubMed:16959576, PubMed:25394380). Involved in the regulation of neurite outgrowth (PubMed:15004326, PubMed:20460383). Is a regulator of presynaptic facilitation, spike transmission and synaptic vesicles replenishment in a process that depends on gamma-secretase activity. It acts through the control of SYT7 presynaptic expression (By similarity).</text>
</comment>
<comment type="subunit">
    <text evidence="1 6 16 30 32 35 40 41 42 46 52 68 71 83 84 87 98 99 116 121">Homodimer. The functional gamma-secretase complex is composed of at least four polypeptides: a presenilin homodimer (PSEN1 or PSEN2), nicastrin (NCSTN), APH1 (APH1A/APH1B) and PEN2 (PubMed:12679784, PubMed:12740439, PubMed:15274632, PubMed:25043039, PubMed:25394380, PubMed:26280335, PubMed:30598546, PubMed:30630874). Such minimal complex is sufficient for secretase activity (PubMed:12679784, PubMed:12740439, PubMed:15274632, PubMed:25043039, PubMed:26280335, PubMed:30598546, PubMed:30630874). Other components which are associated with the complex include SLC25A64, SLC5A7, PHB and PSEN1 isoform 3. As part of the gamma-secretase complex, interacts with CRB2 (via transmembrane domain) (PubMed:20299451). Predominantly heterodimer of a N-terminal (NTF) and a C-terminal (CTF) endoproteolytical fragment (PubMed:15274632). Associates with proteolytic processed C-terminal fragments C83 and C99 of the amyloid precursor protein (APP) (via transmembrane domain) (PubMed:30630874). Associates with NOTCH1 (via transmembrane domain) (PubMed:10593990, PubMed:30598546). Associates with cadherin/catenin adhesion complexes through direct binding to CDH1 or CDH2 (PubMed:11953314, PubMed:14515347, PubMed:16126725). Interaction with CDH1 stabilizes the complex and stimulates cell-cell aggregation (PubMed:11953314). Interaction with CDH2 is essential for trafficking of CDH2 from the endoplasmic reticulum to the plasma membrane (PubMed:14515347). Interacts with CTNND2, CTNNB1, CTNND1, JUP, HERPUD1, FLNA, FLNB, MTCH1, PKP4 and PARL (PubMed:10037471, PubMed:10551805, PubMed:11799129, PubMed:11953314, PubMed:16126725, PubMed:9437013, PubMed:9738936). Interacts through its N-terminus with GFAP (isoform 2) (PubMed:12058025). Interacts with DOCK3 (By similarity). Interacts with isoform 1 and isoform 3 of UBQLN1 (PubMed:21143716).</text>
</comment>
<comment type="interaction">
    <interactant intactId="EBI-297277">
        <id>P49768</id>
    </interactant>
    <interactant intactId="EBI-368690">
        <id>Q02410</id>
        <label>APBA1</label>
    </interactant>
    <organismsDiffer>false</organismsDiffer>
    <experiments>4</experiments>
</comment>
<comment type="interaction">
    <interactant intactId="EBI-297277">
        <id>P49768</id>
    </interactant>
    <interactant intactId="EBI-2606935">
        <id>Q96BI3</id>
        <label>APH1A</label>
    </interactant>
    <organismsDiffer>false</organismsDiffer>
    <experiments>3</experiments>
</comment>
<comment type="interaction">
    <interactant intactId="EBI-297277">
        <id>P49768</id>
    </interactant>
    <interactant intactId="EBI-77613">
        <id>P05067</id>
        <label>APP</label>
    </interactant>
    <organismsDiffer>false</organismsDiffer>
    <experiments>6</experiments>
</comment>
<comment type="interaction">
    <interactant intactId="EBI-297277">
        <id>P49768</id>
    </interactant>
    <interactant intactId="EBI-302641">
        <id>P05067-4</id>
        <label>APP</label>
    </interactant>
    <organismsDiffer>false</organismsDiffer>
    <experiments>4</experiments>
</comment>
<comment type="interaction">
    <interactant intactId="EBI-297277">
        <id>P49768</id>
    </interactant>
    <interactant intactId="EBI-2433139">
        <id>P56817</id>
        <label>BACE1</label>
    </interactant>
    <organismsDiffer>false</organismsDiffer>
    <experiments>6</experiments>
</comment>
<comment type="interaction">
    <interactant intactId="EBI-297277">
        <id>P49768</id>
    </interactant>
    <interactant intactId="EBI-295634">
        <id>Q16543</id>
        <label>CDC37</label>
    </interactant>
    <organismsDiffer>false</organismsDiffer>
    <experiments>3</experiments>
</comment>
<comment type="interaction">
    <interactant intactId="EBI-297277">
        <id>P49768</id>
    </interactant>
    <interactant intactId="EBI-712452">
        <id>Q9BQ95</id>
        <label>ECSIT</label>
    </interactant>
    <organismsDiffer>false</organismsDiffer>
    <experiments>4</experiments>
</comment>
<comment type="interaction">
    <interactant intactId="EBI-297277">
        <id>P49768</id>
    </interactant>
    <interactant intactId="EBI-998440">
        <id>Q92542</id>
        <label>NCSTN</label>
    </interactant>
    <organismsDiffer>false</organismsDiffer>
    <experiments>6</experiments>
</comment>
<comment type="interaction">
    <interactant intactId="EBI-297277">
        <id>P49768</id>
    </interactant>
    <interactant intactId="EBI-998468">
        <id>Q9NZ42</id>
        <label>PSENEN</label>
    </interactant>
    <organismsDiffer>false</organismsDiffer>
    <experiments>4</experiments>
</comment>
<comment type="interaction">
    <interactant intactId="EBI-297277">
        <id>P49768</id>
    </interactant>
    <interactant intactId="EBI-357285">
        <id>P50502</id>
        <label>ST13</label>
    </interactant>
    <organismsDiffer>false</organismsDiffer>
    <experiments>3</experiments>
</comment>
<comment type="interaction">
    <interactant intactId="EBI-297277">
        <id>P49768</id>
    </interactant>
    <interactant intactId="EBI-1045825">
        <id>P55061</id>
        <label>TMBIM6</label>
    </interactant>
    <organismsDiffer>false</organismsDiffer>
    <experiments>12</experiments>
</comment>
<comment type="interaction">
    <interactant intactId="EBI-297277">
        <id>P49768</id>
    </interactant>
    <interactant intactId="EBI-998422">
        <id>P49755</id>
        <label>TMED10</label>
    </interactant>
    <organismsDiffer>false</organismsDiffer>
    <experiments>4</experiments>
</comment>
<comment type="interaction">
    <interactant intactId="EBI-297277">
        <id>P49768</id>
    </interactant>
    <interactant intactId="EBI-14036387">
        <id>Q9NZC2</id>
        <label>TREM2</label>
    </interactant>
    <organismsDiffer>false</organismsDiffer>
    <experiments>5</experiments>
</comment>
<comment type="interaction">
    <interactant intactId="EBI-297277">
        <id>P49768</id>
    </interactant>
    <interactant intactId="EBI-81669">
        <id>P98084</id>
        <label>Apba2</label>
    </interactant>
    <organismsDiffer>true</organismsDiffer>
    <experiments>2</experiments>
</comment>
<comment type="interaction">
    <interactant intactId="EBI-11047108">
        <id>P49768-2</id>
    </interactant>
    <interactant intactId="EBI-11529439">
        <id>P63010-2</id>
        <label>AP2B1</label>
    </interactant>
    <organismsDiffer>false</organismsDiffer>
    <experiments>6</experiments>
</comment>
<comment type="interaction">
    <interactant intactId="EBI-11047108">
        <id>P49768-2</id>
    </interactant>
    <interactant intactId="EBI-77613">
        <id>P05067</id>
        <label>APP</label>
    </interactant>
    <organismsDiffer>false</organismsDiffer>
    <experiments>6</experiments>
</comment>
<comment type="interaction">
    <interactant intactId="EBI-11047108">
        <id>P49768-2</id>
    </interactant>
    <interactant intactId="EBI-711320">
        <id>P16870</id>
        <label>CPE</label>
    </interactant>
    <organismsDiffer>false</organismsDiffer>
    <experiments>3</experiments>
</comment>
<comment type="interaction">
    <interactant intactId="EBI-11047108">
        <id>P49768-2</id>
    </interactant>
    <interactant intactId="EBI-9090939">
        <id>Q5D0E6-2</id>
        <label>DALRD3</label>
    </interactant>
    <organismsDiffer>false</organismsDiffer>
    <experiments>3</experiments>
</comment>
<comment type="interaction">
    <interactant intactId="EBI-11047108">
        <id>P49768-2</id>
    </interactant>
    <interactant intactId="EBI-3508943">
        <id>Q9H816</id>
        <label>DCLRE1B</label>
    </interactant>
    <organismsDiffer>false</organismsDiffer>
    <experiments>3</experiments>
</comment>
<comment type="interaction">
    <interactant intactId="EBI-11047108">
        <id>P49768-2</id>
    </interactant>
    <interactant intactId="EBI-396453">
        <id>Q9UHY8</id>
        <label>FEZ2</label>
    </interactant>
    <organismsDiffer>false</organismsDiffer>
    <experiments>3</experiments>
</comment>
<comment type="interaction">
    <interactant intactId="EBI-11047108">
        <id>P49768-2</id>
    </interactant>
    <interactant intactId="EBI-25856644">
        <id>Q06787-7</id>
        <label>FMR1</label>
    </interactant>
    <organismsDiffer>false</organismsDiffer>
    <experiments>3</experiments>
</comment>
<comment type="interaction">
    <interactant intactId="EBI-11047108">
        <id>P49768-2</id>
    </interactant>
    <interactant intactId="EBI-713279">
        <id>P02792</id>
        <label>FTL</label>
    </interactant>
    <organismsDiffer>false</organismsDiffer>
    <experiments>3</experiments>
</comment>
<comment type="interaction">
    <interactant intactId="EBI-11047108">
        <id>P49768-2</id>
    </interactant>
    <interactant intactId="EBI-79722">
        <id>P68431</id>
        <label>H3C12</label>
    </interactant>
    <organismsDiffer>false</organismsDiffer>
    <experiments>6</experiments>
</comment>
<comment type="interaction">
    <interactant intactId="EBI-11047108">
        <id>P49768-2</id>
    </interactant>
    <interactant intactId="EBI-2806068">
        <id>Q12891</id>
        <label>HYAL2</label>
    </interactant>
    <organismsDiffer>false</organismsDiffer>
    <experiments>3</experiments>
</comment>
<comment type="interaction">
    <interactant intactId="EBI-11047108">
        <id>P49768-2</id>
    </interactant>
    <interactant intactId="EBI-21911304">
        <id>Q6DN90-2</id>
        <label>IQSEC1</label>
    </interactant>
    <organismsDiffer>false</organismsDiffer>
    <experiments>6</experiments>
</comment>
<comment type="interaction">
    <interactant intactId="EBI-11047108">
        <id>P49768-2</id>
    </interactant>
    <interactant intactId="EBI-25871195">
        <id>Q9NVX7-2</id>
        <label>KBTBD4</label>
    </interactant>
    <organismsDiffer>false</organismsDiffer>
    <experiments>3</experiments>
</comment>
<comment type="interaction">
    <interactant intactId="EBI-11047108">
        <id>P49768-2</id>
    </interactant>
    <interactant intactId="EBI-1044640">
        <id>Q9BYQ4</id>
        <label>KRTAP9-2</label>
    </interactant>
    <organismsDiffer>false</organismsDiffer>
    <experiments>3</experiments>
</comment>
<comment type="interaction">
    <interactant intactId="EBI-11047108">
        <id>P49768-2</id>
    </interactant>
    <interactant intactId="EBI-1108377">
        <id>Q9BYZ2</id>
        <label>LDHAL6B</label>
    </interactant>
    <organismsDiffer>false</organismsDiffer>
    <experiments>6</experiments>
</comment>
<comment type="interaction">
    <interactant intactId="EBI-11047108">
        <id>P49768-2</id>
    </interactant>
    <interactant intactId="EBI-4397720">
        <id>Q8TDB4</id>
        <label>MGARP</label>
    </interactant>
    <organismsDiffer>false</organismsDiffer>
    <experiments>6</experiments>
</comment>
<comment type="interaction">
    <interactant intactId="EBI-11047108">
        <id>P49768-2</id>
    </interactant>
    <interactant intactId="EBI-21250407">
        <id>A4FUJ8</id>
        <label>MKL1</label>
    </interactant>
    <organismsDiffer>false</organismsDiffer>
    <experiments>6</experiments>
</comment>
<comment type="interaction">
    <interactant intactId="EBI-11047108">
        <id>P49768-2</id>
    </interactant>
    <interactant intactId="EBI-995714">
        <id>Q9Y605</id>
        <label>MRFAP1</label>
    </interactant>
    <organismsDiffer>false</organismsDiffer>
    <experiments>3</experiments>
</comment>
<comment type="interaction">
    <interactant intactId="EBI-11047108">
        <id>P49768-2</id>
    </interactant>
    <interactant intactId="EBI-25888682">
        <id>Q86WS3</id>
        <label>OOSP2</label>
    </interactant>
    <organismsDiffer>false</organismsDiffer>
    <experiments>3</experiments>
</comment>
<comment type="interaction">
    <interactant intactId="EBI-11047108">
        <id>P49768-2</id>
    </interactant>
    <interactant intactId="EBI-1058491">
        <id>Q96FW1</id>
        <label>OTUB1</label>
    </interactant>
    <organismsDiffer>false</organismsDiffer>
    <experiments>3</experiments>
</comment>
<comment type="interaction">
    <interactant intactId="EBI-11047108">
        <id>P49768-2</id>
    </interactant>
    <interactant intactId="EBI-716063">
        <id>Q13113</id>
        <label>PDZK1IP1</label>
    </interactant>
    <organismsDiffer>false</organismsDiffer>
    <experiments>6</experiments>
</comment>
<comment type="interaction">
    <interactant intactId="EBI-11047108">
        <id>P49768-2</id>
    </interactant>
    <interactant intactId="EBI-476768">
        <id>P53350</id>
        <label>PLK1</label>
    </interactant>
    <organismsDiffer>false</organismsDiffer>
    <experiments>3</experiments>
</comment>
<comment type="interaction">
    <interactant intactId="EBI-11047108">
        <id>P49768-2</id>
    </interactant>
    <interactant intactId="EBI-2865290">
        <id>O14494</id>
        <label>PLPP1</label>
    </interactant>
    <organismsDiffer>false</organismsDiffer>
    <experiments>3</experiments>
</comment>
<comment type="interaction">
    <interactant intactId="EBI-11047108">
        <id>P49768-2</id>
    </interactant>
    <interactant intactId="EBI-998468">
        <id>Q9NZ42</id>
        <label>PSENEN</label>
    </interactant>
    <organismsDiffer>false</organismsDiffer>
    <experiments>3</experiments>
</comment>
<comment type="interaction">
    <interactant intactId="EBI-11047108">
        <id>P49768-2</id>
    </interactant>
    <interactant intactId="EBI-21535400">
        <id>Q6ZNA4-2</id>
        <label>RNF111</label>
    </interactant>
    <organismsDiffer>false</organismsDiffer>
    <experiments>6</experiments>
</comment>
<comment type="interaction">
    <interactant intactId="EBI-11047108">
        <id>P49768-2</id>
    </interactant>
    <interactant intactId="EBI-25829984">
        <id>Q9ULX5</id>
        <label>RNF112</label>
    </interactant>
    <organismsDiffer>false</organismsDiffer>
    <experiments>6</experiments>
</comment>
<comment type="interaction">
    <interactant intactId="EBI-11047108">
        <id>P49768-2</id>
    </interactant>
    <interactant intactId="EBI-752324">
        <id>Q8N488</id>
        <label>RYBP</label>
    </interactant>
    <organismsDiffer>false</organismsDiffer>
    <experiments>6</experiments>
</comment>
<comment type="interaction">
    <interactant intactId="EBI-11047108">
        <id>P49768-2</id>
    </interactant>
    <interactant intactId="EBI-10182463">
        <id>Q2NKQ1-4</id>
        <label>SGSM1</label>
    </interactant>
    <organismsDiffer>false</organismsDiffer>
    <experiments>3</experiments>
</comment>
<comment type="interaction">
    <interactant intactId="EBI-11047108">
        <id>P49768-2</id>
    </interactant>
    <interactant intactId="EBI-358545">
        <id>Q9GZS3</id>
        <label>SKIC8</label>
    </interactant>
    <organismsDiffer>false</organismsDiffer>
    <experiments>6</experiments>
</comment>
<comment type="interaction">
    <interactant intactId="EBI-11047108">
        <id>P49768-2</id>
    </interactant>
    <interactant intactId="EBI-18159983">
        <id>Q3KNW5</id>
        <label>SLC10A6</label>
    </interactant>
    <organismsDiffer>false</organismsDiffer>
    <experiments>3</experiments>
</comment>
<comment type="interaction">
    <interactant intactId="EBI-11047108">
        <id>P49768-2</id>
    </interactant>
    <interactant intactId="EBI-11959123">
        <id>Q99932-2</id>
        <label>SPAG8</label>
    </interactant>
    <organismsDiffer>false</organismsDiffer>
    <experiments>6</experiments>
</comment>
<comment type="interaction">
    <interactant intactId="EBI-11047108">
        <id>P49768-2</id>
    </interactant>
    <interactant intactId="EBI-15481185">
        <id>O00300</id>
        <label>TNFRSF11B</label>
    </interactant>
    <organismsDiffer>false</organismsDiffer>
    <experiments>3</experiments>
</comment>
<comment type="interaction">
    <interactant intactId="EBI-11047108">
        <id>P49768-2</id>
    </interactant>
    <interactant intactId="EBI-2682299">
        <id>Q96NC0</id>
        <label>ZMAT2</label>
    </interactant>
    <organismsDiffer>false</organismsDiffer>
    <experiments>6</experiments>
</comment>
<comment type="interaction">
    <interactant intactId="EBI-2606326">
        <id>PRO_0000025591</id>
    </interactant>
    <interactant intactId="EBI-5275794">
        <id>Q63053</id>
        <label>Arc</label>
    </interactant>
    <organismsDiffer>true</organismsDiffer>
    <experiments>3</experiments>
</comment>
<comment type="interaction">
    <interactant intactId="EBI-2606356">
        <id>PRO_0000025592</id>
    </interactant>
    <interactant intactId="EBI-750709">
        <id>P35613</id>
        <label>BSG</label>
    </interactant>
    <organismsDiffer>false</organismsDiffer>
    <experiments>6</experiments>
</comment>
<comment type="interaction">
    <interactant intactId="EBI-2606356">
        <id>PRO_0000025592</id>
    </interactant>
    <interactant intactId="EBI-998440">
        <id>Q92542</id>
        <label>NCSTN</label>
    </interactant>
    <organismsDiffer>false</organismsDiffer>
    <experiments>2</experiments>
</comment>
<comment type="subcellular location">
    <subcellularLocation>
        <location evidence="84">Endoplasmic reticulum</location>
    </subcellularLocation>
    <subcellularLocation>
        <location evidence="17 103 121 134 137">Endoplasmic reticulum membrane</location>
        <topology evidence="83 85 87 89 98 99">Multi-pass membrane protein</topology>
    </subcellularLocation>
    <subcellularLocation>
        <location evidence="17 103 134 137">Golgi apparatus membrane</location>
        <topology evidence="83 85 87 89 98 99">Multi-pass membrane protein</topology>
    </subcellularLocation>
    <subcellularLocation>
        <location evidence="33">Cytoplasmic granule</location>
    </subcellularLocation>
    <subcellularLocation>
        <location evidence="17 32 33 71">Cell membrane</location>
        <topology evidence="85 89 98 99">Multi-pass membrane protein</topology>
    </subcellularLocation>
    <subcellularLocation>
        <location evidence="44">Cell projection</location>
        <location evidence="44">Growth cone</location>
    </subcellularLocation>
    <subcellularLocation>
        <location evidence="84">Early endosome</location>
    </subcellularLocation>
    <subcellularLocation>
        <location evidence="140">Early endosome membrane</location>
        <topology evidence="85 89 98 99">Multi-pass membrane protein</topology>
    </subcellularLocation>
    <subcellularLocation>
        <location evidence="44">Cell projection</location>
        <location evidence="44">Neuron projection</location>
    </subcellularLocation>
    <subcellularLocation>
        <location evidence="3">Cell projection</location>
        <location evidence="3">Axon</location>
    </subcellularLocation>
    <subcellularLocation>
        <location evidence="3">Synapse</location>
    </subcellularLocation>
    <text evidence="17 33 71 121">Translocates with bound NOTCH1 from the endoplasmic reticulum and/or Golgi to the cell surface (PubMed:10593990). Colocalizes with CDH1/2 at sites of cell-cell contact. Colocalizes with CTNNB1 in the endoplasmic reticulum and the proximity of the plasma membrane (PubMed:9738936). Also present in azurophil granules of neutrophils (PubMed:11987239). Colocalizes with UBQLN1 in the cell membrane and in cytoplasmic juxtanuclear structures called aggresomes (PubMed:21143716).</text>
</comment>
<comment type="alternative products">
    <event type="alternative splicing"/>
    <isoform>
        <id>P49768-1</id>
        <name>1</name>
        <name>I-467</name>
        <sequence type="displayed"/>
    </isoform>
    <isoform>
        <id>P49768-2</id>
        <name>2</name>
        <name>I-463</name>
        <sequence type="described" ref="VSP_005191"/>
    </isoform>
    <isoform>
        <id>P49768-3</id>
        <name>3</name>
        <name>I-374</name>
        <sequence type="described" ref="VSP_005191 VSP_005192"/>
    </isoform>
    <isoform>
        <id>P49768-4</id>
        <name>4</name>
        <name>Minilin</name>
        <sequence type="described" ref="VSP_007986 VSP_007987"/>
    </isoform>
    <isoform>
        <id>P49768-5</id>
        <name>5</name>
        <sequence type="described" ref="VSP_005192"/>
    </isoform>
    <isoform>
        <id>P49768-6</id>
        <name>6</name>
        <sequence type="described" ref="VSP_012288"/>
    </isoform>
    <isoform>
        <id>P49768-7</id>
        <name>7</name>
        <sequence type="described" ref="VSP_041440"/>
    </isoform>
</comment>
<comment type="tissue specificity">
    <text evidence="33 101 103 106">Detected in azurophile granules in neutrophils and in platelet cytoplasmic granules (at protein level) (PubMed:11987239). Expressed in a wide range of tissues including various regions of the brain, liver, spleen and lymph nodes (PubMed:7596406, PubMed:8574969, PubMed:8641442).</text>
</comment>
<comment type="domain">
    <text evidence="53">The PAL motif is required for normal active site conformation.</text>
</comment>
<comment type="domain">
    <text evidence="98 99">Substrates, such as NOTCH1 and APP peptides, are bound between PSEN1 transmembrane domains and via the first lumenal loop and the cytoplasmic loop between the sixth and seventh transmembrane domains. Substrate binding causes a conformation change and formation of an intermolecular antiparallel beta-sheet between PSEN1 and its substrates.</text>
</comment>
<comment type="PTM">
    <text evidence="15 46 112 117">Heterogeneous proteolytic processing generates N-terminal (NTF) and C-terminal (CTF) fragments of approximately 35 and 20 kDa, respectively. During apoptosis, the C-terminal fragment (CTF) is further cleaved by caspase-3 to produce the fragment, PS1-CTF12.</text>
</comment>
<comment type="PTM">
    <text evidence="43 110">After endoproteolysis, the C-terminal fragment (CTF) is phosphorylated on serine residues by PKA and/or PKC. Phosphorylation on Ser-346 inhibits endoproteolysis.</text>
</comment>
<comment type="disease" evidence="5 7 8 10 11 12 13 14 18 19 22 24 25 26 27 28 29 31 34 35 36 37 38 39 44 45 48 49 50 51 53 54 55 56 57 58 60 61 62 63 65 66 67 69 73 74 75 76 77 78 79 80 81 82 84 86 87 88 90 91 93 94 95 96 97 100 101 102 104 105 107 108 109 111 113 114 115 118 119 120 122 123 127">
    <disease id="DI-00086">
        <name>Alzheimer disease 3</name>
        <acronym>AD3</acronym>
        <description>A familial early-onset form of Alzheimer disease. Alzheimer disease is a neurodegenerative disorder characterized by progressive dementia, loss of cognitive abilities, and deposition of fibrillar amyloid proteins as intraneuronal neurofibrillary tangles, extracellular amyloid plaques and vascular amyloid deposits. The major constituents of these plaques are neurotoxic amyloid-beta protein 40 and amyloid-beta protein 42, that are produced by the proteolysis of the transmembrane APP protein. The cytotoxic C-terminal fragments (CTFs) and the caspase-cleaved products, such as C31, are also implicated in neuronal death.</description>
        <dbReference type="MIM" id="607822"/>
    </disease>
    <text>The disease is caused by variants affecting the gene represented in this entry.</text>
</comment>
<comment type="disease" evidence="23">
    <disease id="DI-01632">
        <name>Frontotemporal dementia 1</name>
        <acronym>FTD1</acronym>
        <description>A form of dementia characterized by pathologic finding of frontotemporal lobar degeneration, presenile dementia with behavioral changes, deterioration of cognitive capacities and loss of memory. In some cases, parkinsonian symptoms are prominent. Neuropathological changes include frontotemporal atrophy often associated with atrophy of the basal ganglia, substantia nigra, amygdala. In most cases, protein tau deposits are found in glial cells and/or neurons.</description>
        <dbReference type="MIM" id="600274"/>
    </disease>
    <text>The disease is caused by variants affecting the gene represented in this entry.</text>
</comment>
<comment type="disease" evidence="59 91">
    <disease id="DI-02967">
        <name>Cardiomyopathy, dilated, 1U</name>
        <acronym>CMD1U</acronym>
        <description>A disorder characterized by ventricular dilation and impaired systolic function, resulting in congestive heart failure and arrhythmia. Patients are at risk of premature death.</description>
        <dbReference type="MIM" id="613694"/>
    </disease>
    <text>The disease is caused by variants affecting the gene represented in this entry.</text>
</comment>
<comment type="disease" evidence="70">
    <disease id="DI-02997">
        <name>Acne inversa, familial, 3</name>
        <acronym>ACNINV3</acronym>
        <description>A chronic relapsing inflammatory disease of the hair follicles characterized by recurrent draining sinuses, painful skin abscesses, and disfiguring scars. Manifestations typically appear after puberty.</description>
        <dbReference type="MIM" id="613737"/>
    </disease>
    <text>The disease is caused by variants affecting the gene represented in this entry.</text>
</comment>
<comment type="disease" evidence="45">
    <disease id="DI-02937">
        <name>Pick disease of the brain</name>
        <acronym>PIDB</acronym>
        <description>A rare form of dementia pathologically defined by severe atrophy, neuronal loss and gliosis. It is characterized by the occurrence of tau-positive inclusions, swollen neurons (Pick cells) and argentophilic neuronal inclusions known as Pick bodies that disproportionally affect the frontal and temporal cortical regions. Clinical features include aphasia, apraxia, confusion, anomia, memory loss and personality deterioration.</description>
        <dbReference type="MIM" id="172700"/>
    </disease>
    <text>The gene represented in this entry may be involved in disease pathogenesis.</text>
</comment>
<comment type="miscellaneous">
    <molecule>Isoform 3</molecule>
    <text evidence="133">May be produced at very low levels due to a premature stop codon in the mRNA, leading to nonsense-mediated mRNA decay.</text>
</comment>
<comment type="miscellaneous">
    <molecule>Isoform 5</molecule>
    <text evidence="133">May be produced at very low levels due to a premature stop codon in the mRNA, leading to nonsense-mediated mRNA decay.</text>
</comment>
<comment type="similarity">
    <text evidence="133">Belongs to the peptidase A22A family.</text>
</comment>
<comment type="online information" name="Alzheimer Research Forum">
    <link uri="https://www.alzforum.org/mutations/psen-1"/>
    <text>Presenilins mutations</text>
</comment>
<feature type="chain" id="PRO_0000025591" description="Presenilin-1 NTF subunit">
    <location>
        <begin position="1"/>
        <end position="298"/>
    </location>
</feature>
<feature type="chain" id="PRO_0000025592" description="Presenilin-1 CTF subunit">
    <location>
        <begin position="299"/>
        <end position="467"/>
    </location>
</feature>
<feature type="chain" id="PRO_0000236055" description="Presenilin-1 CTF12">
    <location>
        <begin position="346"/>
        <end position="467"/>
    </location>
</feature>
<feature type="topological domain" description="Cytoplasmic" evidence="87">
    <location>
        <begin position="1"/>
        <end position="82"/>
    </location>
</feature>
<feature type="transmembrane region" description="Helical" evidence="87">
    <location>
        <begin position="83"/>
        <end position="103"/>
    </location>
</feature>
<feature type="topological domain" description="Lumenal" evidence="87">
    <location>
        <begin position="104"/>
        <end position="132"/>
    </location>
</feature>
<feature type="transmembrane region" description="Helical" evidence="87">
    <location>
        <begin position="133"/>
        <end position="153"/>
    </location>
</feature>
<feature type="topological domain" description="Cytoplasmic" evidence="87">
    <location>
        <begin position="154"/>
        <end position="166"/>
    </location>
</feature>
<feature type="transmembrane region" description="Helical" evidence="87">
    <location>
        <begin position="167"/>
        <end position="189"/>
    </location>
</feature>
<feature type="topological domain" description="Lumenal" evidence="87">
    <location>
        <begin position="190"/>
        <end position="194"/>
    </location>
</feature>
<feature type="transmembrane region" description="Helical" evidence="87">
    <location>
        <begin position="195"/>
        <end position="216"/>
    </location>
</feature>
<feature type="topological domain" description="Cytoplasmic" evidence="87">
    <location>
        <begin position="217"/>
        <end position="220"/>
    </location>
</feature>
<feature type="transmembrane region" description="Helical" evidence="87">
    <location>
        <begin position="221"/>
        <end position="241"/>
    </location>
</feature>
<feature type="topological domain" description="Lumenal" evidence="87">
    <location>
        <begin position="242"/>
        <end position="248"/>
    </location>
</feature>
<feature type="transmembrane region" description="Helical" evidence="87">
    <location>
        <begin position="249"/>
        <end position="272"/>
    </location>
</feature>
<feature type="topological domain" description="Cytoplasmic" evidence="87">
    <location>
        <begin position="273"/>
        <end position="380"/>
    </location>
</feature>
<feature type="transmembrane region" description="Helical" evidence="87">
    <location>
        <begin position="381"/>
        <end position="401"/>
    </location>
</feature>
<feature type="topological domain" description="Lumenal" evidence="87">
    <location>
        <begin position="402"/>
        <end position="407"/>
    </location>
</feature>
<feature type="transmembrane region" description="Helical" evidence="87">
    <location>
        <begin position="408"/>
        <end position="428"/>
    </location>
</feature>
<feature type="topological domain" description="Cytoplasmic" evidence="87">
    <location>
        <begin position="429"/>
        <end position="432"/>
    </location>
</feature>
<feature type="transmembrane region" description="Helical" evidence="87">
    <location>
        <begin position="433"/>
        <end position="453"/>
    </location>
</feature>
<feature type="topological domain" description="Lumenal" evidence="87">
    <location>
        <begin position="454"/>
        <end position="467"/>
    </location>
</feature>
<feature type="region of interest" description="Disordered" evidence="4">
    <location>
        <begin position="13"/>
        <end position="68"/>
    </location>
</feature>
<feature type="region of interest" description="Important for cleavage of target proteins" evidence="98">
    <location>
        <begin position="288"/>
        <end position="290"/>
    </location>
</feature>
<feature type="region of interest" description="Disordered" evidence="4">
    <location>
        <begin position="305"/>
        <end position="333"/>
    </location>
</feature>
<feature type="region of interest" description="Required for interaction with CTNNB1" evidence="121">
    <location>
        <begin position="322"/>
        <end position="450"/>
    </location>
</feature>
<feature type="region of interest" description="Required for interaction with CTNND2" evidence="6">
    <location>
        <begin position="372"/>
        <end position="399"/>
    </location>
</feature>
<feature type="region of interest" description="Important for cleavage of target proteins" evidence="98">
    <location>
        <begin position="377"/>
        <end position="381"/>
    </location>
</feature>
<feature type="region of interest" description="Important for cleavage of target proteins" evidence="98">
    <location>
        <begin position="432"/>
        <end position="434"/>
    </location>
</feature>
<feature type="region of interest" description="Interaction with MTCH1" evidence="16">
    <location>
        <begin position="464"/>
        <end position="467"/>
    </location>
</feature>
<feature type="short sequence motif" description="PAL" evidence="139">
    <location>
        <begin position="433"/>
        <end position="435"/>
    </location>
</feature>
<feature type="compositionally biased region" description="Polar residues" evidence="4">
    <location>
        <begin position="13"/>
        <end position="29"/>
    </location>
</feature>
<feature type="compositionally biased region" description="Basic and acidic residues" evidence="4">
    <location>
        <begin position="30"/>
        <end position="45"/>
    </location>
</feature>
<feature type="active site" evidence="135 136 138">
    <location>
        <position position="257"/>
    </location>
</feature>
<feature type="active site" evidence="135 136 138 141 142">
    <location>
        <position position="385"/>
    </location>
</feature>
<feature type="site" description="Cleavage; alternate" evidence="112">
    <location>
        <begin position="291"/>
        <end position="292"/>
    </location>
</feature>
<feature type="site" description="Cleavage; alternate" evidence="112">
    <location>
        <begin position="292"/>
        <end position="293"/>
    </location>
</feature>
<feature type="site" description="Cleavage" evidence="112">
    <location>
        <begin position="298"/>
        <end position="299"/>
    </location>
</feature>
<feature type="site" description="Cleavage; by caspase" evidence="117">
    <location>
        <begin position="345"/>
        <end position="346"/>
    </location>
</feature>
<feature type="modified residue" description="Phosphoserine" evidence="150 151 152">
    <location>
        <position position="43"/>
    </location>
</feature>
<feature type="modified residue" description="Phosphoserine" evidence="2">
    <location>
        <position position="51"/>
    </location>
</feature>
<feature type="modified residue" description="Phosphoserine; by PKA" evidence="43">
    <location>
        <position position="310"/>
    </location>
</feature>
<feature type="modified residue" description="Phosphoserine; by PKC" evidence="43">
    <location>
        <position position="346"/>
    </location>
</feature>
<feature type="modified residue" description="Phosphoserine" evidence="151 152">
    <location>
        <position position="367"/>
    </location>
</feature>
<feature type="splice variant" id="VSP_005191" description="In isoform 2 and isoform 3." evidence="128 129 130">
    <location>
        <begin position="26"/>
        <end position="29"/>
    </location>
</feature>
<feature type="splice variant" id="VSP_007986" description="In isoform 4." evidence="131">
    <original>IHAWLIISSLLLLFFFSFIYLGE</original>
    <variation>SMRHRSLLSTLFFLWLGILVTVT</variation>
    <location>
        <begin position="162"/>
        <end position="184"/>
    </location>
</feature>
<feature type="splice variant" id="VSP_007987" description="In isoform 4." evidence="131">
    <location>
        <begin position="185"/>
        <end position="467"/>
    </location>
</feature>
<feature type="splice variant" id="VSP_041440" description="In isoform 7." evidence="133">
    <location>
        <begin position="257"/>
        <end position="289"/>
    </location>
</feature>
<feature type="splice variant" id="VSP_005192" description="In isoform 3 and isoform 5." evidence="130 132">
    <original>STERESQDTVAENDDGGFSEEWEAQRDSHLGPHRSTPESRAAVQELSSSILAGEDPEERGVKLGLGDFIFYSVLVGKASATASGDWNTTIACFVAILIGLCLTLLLLAIFKKALPALPISITFGLVFYFATDYLVQPFMDQLAFHQFYI</original>
    <variation>RACLPPAAINLLSIAPMAPRLFMPKGACRPTAQKGSHKTLLQRMMMAGSVRNGKPRGTVI</variation>
    <location>
        <begin position="319"/>
        <end position="467"/>
    </location>
</feature>
<feature type="splice variant" id="VSP_012288" description="In isoform 6." evidence="133">
    <location>
        <begin position="319"/>
        <end position="376"/>
    </location>
</feature>
<feature type="sequence variant" id="VAR_075260" description="In AD3; uncertain significance; decreased protease activity with APP; dbSNP:rs63750592." evidence="24 91">
    <original>R</original>
    <variation>Q</variation>
    <location>
        <position position="35"/>
    </location>
</feature>
<feature type="sequence variant" id="VAR_006413" description="In AD3; also found in late-onset Alzheimer disease; impaired protease activity with APP; results in altered amyloid-beta production and increased amyloid-beta 42/amyloid-beta 40 ratio; no effect on interaction with GFAP; dbSNP:rs63749824." evidence="18 24 35 56 60 91 115">
    <original>A</original>
    <variation>V</variation>
    <location>
        <position position="79"/>
    </location>
</feature>
<feature type="sequence variant" id="VAR_006414" description="In AD3; decreased protease activity with APP; no effect on interaction with GFAP; dbSNP:rs63749967." evidence="12 35 91 105">
    <original>V</original>
    <variation>L</variation>
    <location>
        <position position="82"/>
    </location>
</feature>
<feature type="sequence variant" id="VAR_075261" description="In AD3." evidence="86">
    <original>I</original>
    <variation>T</variation>
    <location>
        <position position="83"/>
    </location>
</feature>
<feature type="sequence variant" id="VAR_081228" description="In AD3; the patient also manifest spastic paraparesis and apraxia; loss of protease activity with APP in vitro; altered amyloid-beta production in cells transfected with the mutant and increased amyloid-beta 42/amyloid-beta 40 ratio; dbSNP:rs63750599." evidence="49 91">
    <original>L</original>
    <variation>P</variation>
    <location>
        <position position="85"/>
    </location>
</feature>
<feature type="sequence variant" id="VAR_081229" description="In AD3; decreased protease activity with APP; increased amyloid-beta 42/amyloid-beta 40 ratio; dbSNP:rs63750815." evidence="29">
    <original>V</original>
    <variation>L</variation>
    <location>
        <position position="89"/>
    </location>
</feature>
<feature type="sequence variant" id="VAR_016214" description="In AD3; loss of protease activity with APP; dbSNP:rs63751141." evidence="22 91">
    <original>C</original>
    <variation>S</variation>
    <location>
        <position position="92"/>
    </location>
</feature>
<feature type="sequence variant" id="VAR_081230" description="In AD3; uncertain significance; reduced protease activity with APP; no relevant change in amyloid-beta 42/amyloid-beta 40 ratio; dbSNP:rs63750831." evidence="26">
    <original>V</original>
    <variation>M</variation>
    <location>
        <position position="94"/>
    </location>
</feature>
<feature type="sequence variant" id="VAR_006415" description="In AD3; loss of protease activity with APP; dbSNP:rs63750601." evidence="91 107">
    <original>V</original>
    <variation>F</variation>
    <location>
        <position position="96"/>
    </location>
</feature>
<feature type="sequence variant" id="VAR_081231" description="In AD3; uncertain significance; slightly reduced protease activity with APP; dbSNP:rs63750852." evidence="51 91">
    <original>V</original>
    <variation>L</variation>
    <location>
        <position position="97"/>
    </location>
</feature>
<feature type="sequence variant" id="VAR_009208" description="In AD3; dbSNP:rs63750321." evidence="18">
    <original>F</original>
    <variation>L</variation>
    <location>
        <position position="105"/>
    </location>
</feature>
<feature type="sequence variant" id="VAR_016215" description="In FTD1; dbSNP:rs63751399." evidence="23">
    <original>L</original>
    <variation>P</variation>
    <location>
        <position position="113"/>
    </location>
</feature>
<feature type="sequence variant" id="VAR_006416" description="In AD3; dbSNP:rs63750450." evidence="24 39 115">
    <original>Y</original>
    <variation>C</variation>
    <location>
        <position position="115"/>
    </location>
</feature>
<feature type="sequence variant" id="VAR_006417" description="In AD3; impaired protease activity with APP and increased amyloid-beta 42/amyloid-beta 40 ratio." evidence="12 91 105">
    <original>Y</original>
    <variation>H</variation>
    <location>
        <position position="115"/>
    </location>
</feature>
<feature type="sequence variant" id="VAR_081232" description="In AD3; dbSNP:rs63750730." evidence="97">
    <original>T</original>
    <variation>I</variation>
    <location>
        <position position="116"/>
    </location>
</feature>
<feature type="sequence variant" id="VAR_010120" description="In AD3; unusual amyloid cotton wool plaques detected in one patient's brain; severe decrease of protease activity with APP; results in increased amyloid-beta 42/amyloid-beta 40 ratio; dbSNP:rs63750730." evidence="11 24 91 94">
    <original>T</original>
    <variation>N</variation>
    <location>
        <position position="116"/>
    </location>
</feature>
<feature type="sequence variant" id="VAR_009209" description="In AD3; impaired ability to cleave Ephb2/CTF1; results in altered amyloid-beta production and increased amyloid-beta 42/amyloid-beta 40 ratio; impaired regulation of neurite outgrowth; dbSNP:rs63749805." evidence="44 61 118">
    <original>P</original>
    <variation>L</variation>
    <location>
        <position position="117"/>
    </location>
</feature>
<feature type="sequence variant" id="VAR_081233" description="In AD3; results in altered amyloid-beta production and increased amyloid-beta 42/amyloid-beta 40 ratio; impaired regulation of neurite outgrowth; dbSNP:rs63750550." evidence="44">
    <original>P</original>
    <variation>S</variation>
    <location>
        <position position="117"/>
    </location>
</feature>
<feature type="sequence variant" id="VAR_006418" description="In AD3; impaired protease activity with APP and increased amyloid-beta 42/amyloid-beta 40 ratio; dbSNP:rs63751272." evidence="12 91 119">
    <original>E</original>
    <variation>D</variation>
    <location>
        <position position="120"/>
    </location>
</feature>
<feature type="sequence variant" id="VAR_006419" description="In AD3; impaired protease activity with APP and increased amyloid-beta 42/amyloid-beta 40 ratio; dbSNP:rs63750800." evidence="91">
    <original>E</original>
    <variation>K</variation>
    <location>
        <position position="120"/>
    </location>
</feature>
<feature type="sequence variant" id="VAR_070023" description="In AD3; uncertain significance; loss of protease activity with APP; dbSNP:rs1595002439." evidence="76 91">
    <original>L</original>
    <variation>R</variation>
    <location>
        <position position="134"/>
    </location>
</feature>
<feature type="sequence variant" id="VAR_010121" description="In AD3; impaired protease activity with APP and increased amyloid-beta 42/amyloid-beta 40 ratio; dbSNP:rs63750353." evidence="91 113">
    <original>N</original>
    <variation>D</variation>
    <location>
        <position position="135"/>
    </location>
</feature>
<feature type="sequence variant" id="VAR_006420" description="In AD3; dbSNP:rs63750522." evidence="109">
    <original>M</original>
    <variation>I</variation>
    <location>
        <position position="139"/>
    </location>
</feature>
<feature type="sequence variant" id="VAR_010122" description="In AD3; dbSNP:rs63751106." evidence="120">
    <original>M</original>
    <variation>K</variation>
    <location>
        <position position="139"/>
    </location>
</feature>
<feature type="sequence variant" id="VAR_006421" description="In AD3; dbSNP:rs63751106." evidence="12 105">
    <original>M</original>
    <variation>T</variation>
    <location>
        <position position="139"/>
    </location>
</feature>
<feature type="sequence variant" id="VAR_006422" description="In AD3; increased amyloid-beta 42/amyloid-beta 40 ratio; dbSNP:rs63751037." evidence="18 91 100">
    <original>M</original>
    <variation>V</variation>
    <location>
        <position position="139"/>
    </location>
</feature>
<feature type="sequence variant" id="VAR_081234" description="In AD3; uncertain significance." evidence="93">
    <original>V</original>
    <variation>F</variation>
    <location>
        <position position="142"/>
    </location>
</feature>
<feature type="sequence variant" id="VAR_006423" description="In AD3; dbSNP:rs63750322." evidence="7">
    <original>I</original>
    <variation>F</variation>
    <location>
        <position position="143"/>
    </location>
</feature>
<feature type="sequence variant" id="VAR_006424" description="In AD3; impaired protease activity with APP; results in altered amyloid-beta production and increased amyloid-beta 42/amyloid-beta 40 ratio; dbSNP:rs63750004." evidence="24 26 45 56 91 104">
    <original>I</original>
    <variation>T</variation>
    <location>
        <position position="143"/>
    </location>
</feature>
<feature type="sequence variant" id="VAR_006425" description="In AD3; dbSNP:rs63750391." evidence="24 39">
    <original>M</original>
    <variation>I</variation>
    <location>
        <position position="146"/>
    </location>
</feature>
<feature type="sequence variant" id="VAR_006426" description="In AD3; disease phenotype shows high clinical variability; founder mutation originating from Southern Italy and distributed worldwide; alters the conformation of the active site; slightly increased protease activity with APP; decreased activity for Notch1 cleavage; no loss of its ability to cleave Ephb2/CTF1; dbSNP:rs63750306." evidence="12 24 61 67 75 91 101">
    <original>M</original>
    <variation>L</variation>
    <location>
        <position position="146"/>
    </location>
</feature>
<feature type="sequence variant" id="VAR_006427" description="In AD3; loss of function as calcium-leak channel; results in calcium overload in the endoplasmic reticulum; dbSNP:rs63750306." evidence="24 58 100">
    <original>M</original>
    <variation>V</variation>
    <location>
        <position position="146"/>
    </location>
</feature>
<feature type="sequence variant" id="VAR_010123" description="In AD3; results in altered amyloid-beta production and increased amyloid-beta 42/amyloid-beta 40 ratio; dbSNP:rs63750907." evidence="12 91">
    <original>T</original>
    <variation>I</variation>
    <location>
        <position position="147"/>
    </location>
</feature>
<feature type="sequence variant" id="VAR_081235" description="In AD3; abolishes protease activity with APP resulting in decreased amyloid-beta 42 and amyloid-beta 40 production; dbSNP:rs63751441." evidence="39 81 91">
    <original>L</original>
    <variation>V</variation>
    <location>
        <position position="153"/>
    </location>
</feature>
<feature type="sequence variant" id="VAR_081236" description="In AD3; uncertain significance; dbSNP:rs63751292." evidence="39">
    <original>Y</original>
    <variation>C</variation>
    <location>
        <position position="154"/>
    </location>
</feature>
<feature type="sequence variant" id="VAR_081237" description="In AD3; disease phenotype includes spastic paraparesis; abolishes protease activity with APP resulting in decreased amyloid-beta 42 and amyloid-beta 40 production; dbSNP:rs63750588." evidence="48 91">
    <original>Y</original>
    <variation>N</variation>
    <location>
        <position position="154"/>
    </location>
</feature>
<feature type="sequence variant" id="VAR_075262" description="In AD3; uncertain significance." evidence="24">
    <original>Y</original>
    <variation>FTY</variation>
    <location>
        <position position="156"/>
    </location>
</feature>
<feature type="sequence variant" id="VAR_081238" description="In AD3; uncertain significance; dbSNP:rs778630379." evidence="78">
    <original>Y</original>
    <variation>F</variation>
    <location>
        <position position="159"/>
    </location>
</feature>
<feature type="sequence variant" id="VAR_006428" description="In AD3; abolishes protease activity with APP; decreased activity for Notch cleavage; dbSNP:rs63750590." evidence="12 24 75 76 91 101 105 107 119">
    <original>H</original>
    <variation>R</variation>
    <location>
        <position position="163"/>
    </location>
</feature>
<feature type="sequence variant" id="VAR_006429" description="In AD3; slightly increased protease activity with APP and slightly increased amyloid-beta 42 production; dbSNP:rs63749885." evidence="91 100">
    <original>H</original>
    <variation>Y</variation>
    <location>
        <position position="163"/>
    </location>
</feature>
<feature type="sequence variant" id="VAR_010124" description="In AD3; dbSNP:rs63751484." evidence="12">
    <original>W</original>
    <variation>C</variation>
    <location>
        <position position="165"/>
    </location>
</feature>
<feature type="sequence variant" id="VAR_016216" description="In AD3; onset in adolescence; severe decrease of protease activity with APP; results in altered amyloid-beta production and increased amyloid-beta 42/amyloid-beta 40 ratio; results in reduced Notch proteolysis; dbSNP:rs63750265." evidence="34 77 79 91">
    <original>L</original>
    <variation>P</variation>
    <location>
        <position position="166"/>
    </location>
</feature>
<feature type="sequence variant" id="VAR_081239" description="In AD3; uncertain significance; abolishes protease activity with APP resulting in decreased amyloid-beta 42 and amyloid-beta 40 production." evidence="39">
    <location>
        <position position="168"/>
    </location>
</feature>
<feature type="sequence variant" id="VAR_006430" description="In AD3; dbSNP:rs63751210." evidence="122">
    <original>S</original>
    <variation>L</variation>
    <location>
        <position position="169"/>
    </location>
</feature>
<feature type="sequence variant" id="VAR_006431" description="In AD3; results in altered amyloid-beta production and increased amyloid-beta 42/amyloid-beta 40 ratio; dbSNP:rs63750418." evidence="5 91">
    <original>S</original>
    <variation>P</variation>
    <location>
        <position position="169"/>
    </location>
</feature>
<feature type="sequence variant" id="VAR_081240" description="In AD3; results in altered amyloid-beta production and increased amyloid-beta 42/amyloid-beta 40 ratio; dbSNP:rs63750577." evidence="54 62 91 95">
    <original>S</original>
    <variation>F</variation>
    <location>
        <position position="170"/>
    </location>
</feature>
<feature type="sequence variant" id="VAR_006432" description="In AD3; abolishes protease activity with APP; dbSNP:rs63750963." evidence="39 91 123">
    <original>L</original>
    <variation>P</variation>
    <location>
        <position position="171"/>
    </location>
</feature>
<feature type="sequence variant" id="VAR_010125" description="In AD3; results in altered amyloid-beta production and increased amyloid-beta 42/amyloid-beta 40 ratio; dbSNP:rs63750299." evidence="12 91">
    <original>L</original>
    <variation>W</variation>
    <location>
        <position position="173"/>
    </location>
</feature>
<feature type="sequence variant" id="VAR_016217" description="In AD3; results in altered amyloid-beta production and increased amyloid-beta 42/amyloid-beta 40 ratio; dbSNP:rs63751144." evidence="37 91">
    <original>L</original>
    <variation>M</variation>
    <location>
        <position position="174"/>
    </location>
</feature>
<feature type="sequence variant" id="VAR_075263" description="In AD3; results in altered amyloid-beta production and increased amyloid-beta 42/amyloid-beta 40 ratio; dbSNP:rs63749911." evidence="24 91">
    <original>F</original>
    <variation>L</variation>
    <location>
        <position position="177"/>
    </location>
</feature>
<feature type="sequence variant" id="VAR_075264" description="In AD3; uncertain significance; dbSNP:rs63749806." evidence="24">
    <original>F</original>
    <variation>S</variation>
    <location>
        <position position="177"/>
    </location>
</feature>
<feature type="sequence variant" id="VAR_075265" description="In AD3; uncertain significance; abolishes protease activity with APP; dbSNP:rs63750155." evidence="24 91">
    <original>S</original>
    <variation>P</variation>
    <location>
        <position position="178"/>
    </location>
</feature>
<feature type="sequence variant" id="VAR_081241" description="In PIDB and AD3; uncertain significance; neuropathologic examination of brain sections from a patient shows the presence of Pick bodies and absence of beta-amyloid plaques; results in altered amyloid-beta production and increased amyloid-beta 42/amyloid-beta 40 ratio in vitro; dbSNP:rs63751068." evidence="45 91">
    <original>G</original>
    <variation>V</variation>
    <location>
        <position position="183"/>
    </location>
</feature>
<feature type="sequence variant" id="VAR_081242" description="In AD3; results in altered amyloid-beta production and increased amyloid-beta 42/amyloid-beta 40 ratio; dbSNP:rs63750311." evidence="39 91">
    <original>E</original>
    <variation>D</variation>
    <location>
        <position position="184"/>
    </location>
</feature>
<feature type="sequence variant" id="VAR_011876" description="In dbSNP:rs1042864.">
    <original>F</original>
    <variation>L</variation>
    <location>
        <position position="205"/>
    </location>
</feature>
<feature type="sequence variant" id="VAR_016218" description="In AD3; results in altered amyloid-beta production and increased amyloid-beta 42/amyloid-beta 40 ratio; dbSNP:rs63750082." evidence="24 28 90 91">
    <original>G</original>
    <variation>A</variation>
    <location>
        <position position="206"/>
    </location>
</feature>
<feature type="sequence variant" id="VAR_081243" description="In AD3; affects APP processing resulting in increased amyloid-beta 42/amyloid-beta 40 ratio; does not affect NOTCH processing; does not affect endoproteolysis; reduced interaction with PEN2; results in decreased protein levels in the endoplasmic reticulum but increased levels in early endosome; reduced ability to maintain ER calcium homeostasis; dbSNP:rs63750082." evidence="73 84 93">
    <original>G</original>
    <variation>D</variation>
    <location>
        <position position="206"/>
    </location>
</feature>
<feature type="sequence variant" id="VAR_075266" description="In AD3; results in altered amyloid-beta production and increased amyloid-beta 42/amyloid-beta 40 ratio; dbSNP:rs63750569." evidence="24 91">
    <original>G</original>
    <variation>S</variation>
    <location>
        <position position="206"/>
    </location>
</feature>
<feature type="sequence variant" id="VAR_075267" description="In AD3; uncertain significance; dbSNP:rs63750053." evidence="24">
    <original>G</original>
    <variation>E</variation>
    <location>
        <position position="209"/>
    </location>
</feature>
<feature type="sequence variant" id="VAR_009210" description="In AD3; results in altered amyloid-beta production and increased amyloid-beta 42/amyloid-beta 40 ratio; dbSNP:rs63749880." evidence="13 91">
    <original>G</original>
    <variation>R</variation>
    <location>
        <position position="209"/>
    </location>
</feature>
<feature type="sequence variant" id="VAR_006433" description="In AD3; abolishes protease activity with APP; dbSNP:rs63750053." evidence="91 119">
    <original>G</original>
    <variation>V</variation>
    <location>
        <position position="209"/>
    </location>
</feature>
<feature type="sequence variant" id="VAR_075268" description="In AD3; increases protease activity with APP resulting in altered amyloid-beta production and increased amyloid-beta 42/amyloid-beta 40 ratio; dbSNP:rs63750861." evidence="24 87 91">
    <original>I</original>
    <variation>L</variation>
    <location>
        <position position="213"/>
    </location>
</feature>
<feature type="sequence variant" id="VAR_006434" description="In AD3; decreased protease activity with APP resulting in altered amyloid-beta production and increased amyloid-beta 42/amyloid-beta 40 ratio; dbSNP:rs63751309." evidence="63 107">
    <original>I</original>
    <variation>T</variation>
    <location>
        <position position="213"/>
    </location>
</feature>
<feature type="sequence variant" id="VAR_070024" description="Found in a patient with dementia; uncertain significance; dbSNP:rs63751003." evidence="76">
    <original>H</original>
    <variation>Y</variation>
    <location>
        <position position="214"/>
    </location>
</feature>
<feature type="sequence variant" id="VAR_081244" description="In AD3; with unusual amyloid cotton wool plaques; decreased protease activity with APP resulting in altered amyloid-beta production and increased amyloid-beta 42/amyloid-beta 40 ratio; dbSNP:rs267606983." evidence="65 91">
    <original>G</original>
    <variation>R</variation>
    <location>
        <position position="217"/>
    </location>
</feature>
<feature type="sequence variant" id="VAR_010126" description="In AD3; dbSNP:rs63750761." evidence="10">
    <original>L</original>
    <variation>P</variation>
    <location>
        <position position="219"/>
    </location>
</feature>
<feature type="sequence variant" id="VAR_075269" description="In AD3; uncertain significance; slightly increased protease activity with APP and slightly increased amyloid-beta 42/amyloid-beta 40 ratio; dbSNP:rs63750009." evidence="24 91">
    <original>Q</original>
    <variation>R</variation>
    <location>
        <position position="222"/>
    </location>
</feature>
<feature type="sequence variant" id="VAR_081245" description="In AD3; decreased protease activity with APP resulting in altered amyloid-beta production and increased amyloid-beta 42/amyloid-beta 40 ratio; dbSNP:rs63749970." evidence="39 91">
    <original>I</original>
    <variation>F</variation>
    <location>
        <position position="229"/>
    </location>
</feature>
<feature type="sequence variant" id="VAR_006435" description="In AD3; decreased protease activity with APP resulting in altered amyloid-beta production and increased amyloid-beta 42/amyloid-beta 40 ratio; dbSNP:rs63749836." evidence="12 24 91 105">
    <original>A</original>
    <variation>T</variation>
    <location>
        <position position="231"/>
    </location>
</feature>
<feature type="sequence variant" id="VAR_006436" description="In AD3; results in altered amyloid-beta production and increased amyloid-beta 42/amyloid-beta 40 ratio; dbSNP:rs63750799." evidence="56 115">
    <original>A</original>
    <variation>V</variation>
    <location>
        <position position="231"/>
    </location>
</feature>
<feature type="sequence variant" id="VAR_009211" description="In AD3; slightly decreased protease activity with APP resulting in altered amyloid-beta production and mildly increased amyloid-beta 42/amyloid-beta 40 ratio; dbSNP:rs63751287." evidence="14 24 91">
    <original>M</original>
    <variation>L</variation>
    <location>
        <position position="233"/>
    </location>
</feature>
<feature type="sequence variant" id="VAR_006437" description="In AD3; decreased protease activity with APP resulting in altered amyloid-beta production and increased amyloid-beta 42/amyloid-beta 40 ratio; dbSNP:rs63751024." evidence="12 91 111">
    <original>M</original>
    <variation>T</variation>
    <location>
        <position position="233"/>
    </location>
</feature>
<feature type="sequence variant" id="VAR_006438" description="In AD3; abolishes protease activity with APP; dbSNP:rs63749835." evidence="12 24 91">
    <original>L</original>
    <variation>P</variation>
    <location>
        <position position="235"/>
    </location>
</feature>
<feature type="sequence variant" id="VAR_081246" description="In AD3; abolishes protease activity with APP." evidence="74 91">
    <original>L</original>
    <variation>R</variation>
    <location>
        <position position="235"/>
    </location>
</feature>
<feature type="sequence variant" id="VAR_081247" description="In AD3; reduced APP cleavage resulting in decreased amyloid-beta 42 and amyloid-beta 40 production; no relevant change in amyloid-beta 42/amyloid-beta 40 ratio; dbSNP:rs63751130." evidence="39 91">
    <original>L</original>
    <variation>V</variation>
    <location>
        <position position="235"/>
    </location>
</feature>
<feature type="sequence variant" id="VAR_081248" description="In AD3; uncertain significance; disease phenotype includes spastic paraparesis; severe decrease of protease activity with APP; results in decreased amyloid-beta 42 and amyloid-beta 40 production; dbSNP:rs63750858." evidence="25 87 91">
    <original>F</original>
    <variation>I</variation>
    <location>
        <position position="237"/>
    </location>
</feature>
<feature type="sequence variant" id="VAR_081249" description="In AD3; uncertain significance; dbSNP:rs63750858." evidence="39">
    <original>F</original>
    <variation>L</variation>
    <location>
        <position position="237"/>
    </location>
</feature>
<feature type="sequence variant" id="VAR_006439" description="In AD3; nearly abolishes protease activity with APP; increased amyloid-beta 42/amyloid-beta 40 ratio; no loss of its ability to cleave Ephb2/CTF1; dbSNP:rs63750526." evidence="61 91 101">
    <original>A</original>
    <variation>E</variation>
    <location>
        <position position="246"/>
    </location>
</feature>
<feature type="sequence variant" id="VAR_006440" description="In AD3; nearly abolishes protease activity with APP; increased amyloid-beta 42/amyloid-beta 40 ratio; dbSNP:rs63751163." evidence="91">
    <original>L</original>
    <variation>S</variation>
    <location>
        <position position="250"/>
    </location>
</feature>
<feature type="sequence variant" id="VAR_006441" description="In AD3; nearly abolishes protease activity with APP; increased amyloid-beta 42/amyloid-beta 40 ratio; impaired ability to cleave Ephb2/CTF1; dbSNP:rs63751420." evidence="39 61 91 102 119">
    <original>A</original>
    <variation>V</variation>
    <location>
        <position position="260"/>
    </location>
</feature>
<feature type="sequence variant" id="VAR_075270" description="In AD3; nearly abolishes protease activity with APP; increased amyloid-beta 42/amyloid-beta 40 ratio; dbSNP:rs63750964." evidence="24 87 91">
    <original>V</original>
    <variation>F</variation>
    <location>
        <position position="261"/>
    </location>
</feature>
<feature type="sequence variant" id="VAR_006442" description="In AD3; decreased protease activity with APP resulting in altered amyloid-beta production and increased amyloid-beta 42/amyloid-beta 40 ratio; dbSNP:rs63750248." evidence="56 91">
    <original>L</original>
    <variation>F</variation>
    <location>
        <position position="262"/>
    </location>
</feature>
<feature type="sequence variant" id="VAR_070025" description="In AD3." evidence="76">
    <original>L</original>
    <variation>V</variation>
    <location>
        <position position="262"/>
    </location>
</feature>
<feature type="sequence variant" id="VAR_081250" description="In AD3; results in altered amyloid-beta production and increased amyloid-beta 42/amyloid-beta 40 ratio; dbSNP:rs63751102." evidence="39 56">
    <original>C</original>
    <variation>F</variation>
    <location>
        <position position="263"/>
    </location>
</feature>
<feature type="sequence variant" id="VAR_006443" description="In AD3; decreased protease activity with APP; increased amyloid-beta 42/amyloid-beta 40 ratio; dbSNP:rs63750543." evidence="91">
    <original>C</original>
    <variation>R</variation>
    <location>
        <position position="263"/>
    </location>
</feature>
<feature type="sequence variant" id="VAR_006444" description="In AD3; decreased protease activity with APP; increased amyloid-beta 42/amyloid-beta 40 ratio; impaired ability to cleave Ephb2/CTF1; dbSNP:rs63750301." evidence="12 61 91 105 119">
    <original>P</original>
    <variation>L</variation>
    <location>
        <position position="264"/>
    </location>
</feature>
<feature type="sequence variant" id="VAR_016219" description="In AD3; nearly abolishes protease activity with APP; increased amyloid-beta 42/amyloid-beta 40 ratio; dbSNP:rs121917807." evidence="31 91">
    <original>G</original>
    <variation>S</variation>
    <location>
        <position position="266"/>
    </location>
</feature>
<feature type="sequence variant" id="VAR_006445" description="In AD3; decreased protease activity with APP; increased amyloid-beta 42/amyloid-beta 40 ratio; dbSNP:rs63751229." evidence="91 100">
    <original>P</original>
    <variation>S</variation>
    <location>
        <position position="267"/>
    </location>
</feature>
<feature type="sequence variant" id="VAR_006447" description="In AD3; decreased protease activity with APP; increased amyloid-beta 42/amyloid-beta 40 ratio; dbSNP:rs63751019." evidence="91">
    <original>R</original>
    <variation>G</variation>
    <location>
        <position position="269"/>
    </location>
</feature>
<feature type="sequence variant" id="VAR_006448" description="In AD3; dbSNP:rs63750900." evidence="39">
    <original>R</original>
    <variation>H</variation>
    <location>
        <position position="269"/>
    </location>
</feature>
<feature type="sequence variant" id="VAR_016220" description="In AD3; abolishes protease activity with APP; dbSNP:rs63750886." evidence="38 91">
    <original>L</original>
    <variation>V</variation>
    <location>
        <position position="271"/>
    </location>
</feature>
<feature type="sequence variant" id="VAR_075271" description="In AD3; uncertain significance; abolishes protease activity with APP; dbSNP:rs63750284." evidence="24 91">
    <original>T</original>
    <variation>R</variation>
    <location>
        <position position="274"/>
    </location>
</feature>
<feature type="sequence variant" id="VAR_081251" description="In AD3; uncertain significance; reduced protease activity with APP resulting in reduced amyloid-beta 40 levels but no relevant changes in amyloid-beta 42/amyloid-beta 40 ratio; dbSNP:rs1555355869." evidence="82 91">
    <original>A</original>
    <variation>V</variation>
    <location>
        <position position="275"/>
    </location>
</feature>
<feature type="sequence variant" id="VAR_081252" description="In AD3; atypical phenotype presenting as language impairment, impaired frontal executive function and relative preservation of memory; severe decrease of APP and Notch proteolysis; dbSNP:rs63749891." evidence="50 79">
    <original>R</original>
    <variation>I</variation>
    <location>
        <position position="278"/>
    </location>
</feature>
<feature type="sequence variant" id="VAR_006449" description="In AD3; dbSNP:rs63749891." evidence="111">
    <original>R</original>
    <variation>T</variation>
    <location>
        <position position="278"/>
    </location>
</feature>
<feature type="sequence variant" id="VAR_006450" description="In AD3; strong deposition of amyloid-beta 42 is observed in brain regions of AD3 patients; decreased protease activity with APP resulting in altered amyloid-beta production and increased amyloid-beta 42/amyloid-beta 40 ratio; decreased activity for Notch1 cleavage; dbSNP:rs63750231." evidence="26 75 91 92 100 108 114">
    <original>E</original>
    <variation>A</variation>
    <location>
        <position position="280"/>
    </location>
</feature>
<feature type="sequence variant" id="VAR_006451" description="In AD3; some AD3 patients manifest spastic paraparesis and unusual amyloid plaques with prominent amyloid angiopathy on brain biopsy; decreased protease activity with APP; increased amyloid-beta 42/amyloid-beta 40 ratio; impaired ability to cleave Ephb2/CTF1; dbSNP:rs63750231." evidence="36 61 91 100">
    <original>E</original>
    <variation>G</variation>
    <location>
        <position position="280"/>
    </location>
</feature>
<feature type="sequence variant" id="VAR_009212" description="In AD3; abolishes protease activity with APP; dbSNP:rs63750050." evidence="14 91">
    <original>L</original>
    <variation>R</variation>
    <location>
        <position position="282"/>
    </location>
</feature>
<feature type="sequence variant" id="VAR_081253" description="In AD3; results in altered amyloid-beta production and increased amyloid-beta 42/amyloid-beta 40 ratio; dbSNP:rs63749937." evidence="27 45 56">
    <original>L</original>
    <variation>V</variation>
    <location>
        <position position="282"/>
    </location>
</feature>
<feature type="sequence variant" id="VAR_006452" description="In AD3; slightly decreased protease activity with APP and slightly decreased amyloid-beta 42/amyloid-beta 40 ratio; dbSNP:rs63751139." evidence="91 102">
    <original>A</original>
    <variation>V</variation>
    <location>
        <position position="285"/>
    </location>
</feature>
<feature type="sequence variant" id="VAR_006453" description="In AD3; results in altered amyloid-beta production and increased amyloid-beta 42/amyloid-beta 40 ratio; dbSNP:rs63751235." evidence="91 101">
    <original>L</original>
    <variation>V</variation>
    <location>
        <position position="286"/>
    </location>
</feature>
<feature type="sequence variant" id="VAR_010127" description="In AD3." evidence="109">
    <original>S</original>
    <variation>C</variation>
    <location>
        <position position="289"/>
    </location>
</feature>
<feature type="sequence variant" id="VAR_081254" description="Found in patients with late-onset Alzheimer disease; uncertain significance; results in altered amyloid-beta production and increased amyloid-beta 42/amyloid-beta 40 ratio; dbSNP:rs115865530." evidence="92">
    <original>K</original>
    <variation>R</variation>
    <location>
        <position position="311"/>
    </location>
</feature>
<feature type="sequence variant" id="VAR_064747" description="Found in a renal cell carcinoma sample; somatic mutation." evidence="72">
    <original>Y</original>
    <variation>C</variation>
    <location>
        <position position="315"/>
    </location>
</feature>
<feature type="sequence variant" id="VAR_006454" description="In dbSNP:rs17125721." evidence="12 14 18 24 26 39 64 115 124 125 126">
    <original>E</original>
    <variation>G</variation>
    <location>
        <position position="318"/>
    </location>
</feature>
<feature type="sequence variant" id="VAR_064902" description="In CMD1U; results in slightly decreased protease activity with APP and slightly decreased amyloid-beta 42/amyloid-beta 40 ratio; dbSNP:rs121917809." evidence="59 91">
    <original>D</original>
    <variation>G</variation>
    <location>
        <position position="333"/>
    </location>
</feature>
<feature type="sequence variant" id="VAR_075272" description="In AD3; uncertain significance." evidence="24">
    <original>R</original>
    <variation>RR</variation>
    <location>
        <position position="352"/>
    </location>
</feature>
<feature type="sequence variant" id="VAR_075273" description="In AD3; uncertain significance; results in decreased protease activity with APP and decreased amyloid-beta 42/amyloid-beta 40 ratio; dbSNP:rs63751164." evidence="24 91">
    <original>T</original>
    <variation>I</variation>
    <location>
        <position position="354"/>
    </location>
</feature>
<feature type="sequence variant" id="VAR_075274" description="In AD3; uncertain significance; results in altered amyloid-beta production and increased amyloid-beta 42/amyloid-beta 40 ratio; dbSNP:rs63751174." evidence="24 91">
    <original>R</original>
    <variation>Q</variation>
    <location>
        <position position="358"/>
    </location>
</feature>
<feature type="sequence variant" id="VAR_075275" description="In AD3; uncertain significance; dbSNP:rs63750941." evidence="24">
    <original>S</original>
    <variation>Y</variation>
    <location>
        <position position="365"/>
    </location>
</feature>
<feature type="sequence variant" id="VAR_081255" description="In AD3; uncertain significance." evidence="39">
    <original>R</original>
    <variation>M</variation>
    <location>
        <position position="377"/>
    </location>
</feature>
<feature type="sequence variant" id="VAR_006455" description="In AD3; decreased protease activity with APP; results in altered amyloid-beta production and increased amyloid-beta 42/amyloid-beta 40 ratio." evidence="8 91">
    <original>G</original>
    <variation>E</variation>
    <location>
        <position position="378"/>
    </location>
</feature>
<feature type="sequence variant" id="VAR_081256" description="In AD3; abolishes protease activity with APP; dbSNP:rs63750323." evidence="39 90 91">
    <original>G</original>
    <variation>V</variation>
    <location>
        <position position="378"/>
    </location>
</feature>
<feature type="sequence variant" id="VAR_081257" description="In AD3; dbSNP:rs63750687." evidence="80">
    <original>L</original>
    <variation>F</variation>
    <location>
        <position position="381"/>
    </location>
</feature>
<feature type="sequence variant" id="VAR_081258" description="In AD3; results in altered amyloid-beta production and increased amyloid-beta 42/amyloid-beta 40 ratio; dbSNP:rs63750687." evidence="66 91">
    <original>L</original>
    <variation>V</variation>
    <location>
        <position position="381"/>
    </location>
</feature>
<feature type="sequence variant" id="VAR_006456" description="In AD3; results in reduced APP and Notch proteolysis; results in altered amyloid-beta production and increased amyloid-beta 42/amyloid-beta 40 ratio; dbSNP:rs63750646." evidence="56 79 91 104">
    <original>G</original>
    <variation>A</variation>
    <location>
        <position position="384"/>
    </location>
</feature>
<feature type="sequence variant" id="VAR_010128" description="In AD3; abolishes protease activity with APP; dbSNP:rs63750883." evidence="12 91">
    <original>S</original>
    <variation>I</variation>
    <location>
        <position position="390"/>
    </location>
</feature>
<feature type="sequence variant" id="VAR_006457" description="In AD3; results in reduced APP and Notch proteolysis; results in altered amyloid-beta production and increased amyloid-beta 42/amyloid-beta 40 ratio; dbSNP:rs63751416." evidence="12 79 91 102 105">
    <original>L</original>
    <variation>V</variation>
    <location>
        <position position="392"/>
    </location>
</feature>
<feature type="sequence variant" id="VAR_075276" description="In AD3; uncertain significance; abolishes protease activity with APP; dbSNP:rs63750929." evidence="24 91">
    <original>G</original>
    <variation>V</variation>
    <location>
        <position position="394"/>
    </location>
</feature>
<feature type="sequence variant" id="VAR_070026" description="In AD3; uncertain significance; decreased protease activity with APP; results in altered amyloid-beta production and increased amyloid-beta 42/amyloid-beta 40 ratio." evidence="91">
    <original>A</original>
    <variation>T</variation>
    <location>
        <position position="396"/>
    </location>
</feature>
<feature type="sequence variant" id="VAR_010129" description="In AD3; uncertain significance; decreased protease activity with APP; dbSNP:rs63751254." evidence="19 91">
    <original>N</original>
    <variation>S</variation>
    <location>
        <position position="405"/>
    </location>
</feature>
<feature type="sequence variant" id="VAR_075277" description="In AD3; dbSNP:rs906454643." evidence="88">
    <original>I</original>
    <variation>T</variation>
    <location>
        <position position="408"/>
    </location>
</feature>
<feature type="sequence variant" id="VAR_009213" description="In AD3; uncertain significance; decreased protease activity with APP; dbSNP:rs63750227." evidence="14 91">
    <original>A</original>
    <variation>T</variation>
    <location>
        <position position="409"/>
    </location>
</feature>
<feature type="sequence variant" id="VAR_006458" description="In AD3; results in reduced APP and Notch proteolysis; dbSNP:rs661." evidence="12 79 91 105 119">
    <original>C</original>
    <variation>Y</variation>
    <location>
        <position position="410"/>
    </location>
</feature>
<feature type="sequence variant" id="VAR_081259" description="In AD3; uncertain significance." evidence="96">
    <original>G</original>
    <variation>A</variation>
    <location>
        <position position="417"/>
    </location>
</feature>
<feature type="sequence variant" id="VAR_075278" description="In AD3; uncertain significance; nearly abolishes protease activity with APP; dbSNP:rs63751316." evidence="24 91">
    <original>L</original>
    <variation>F</variation>
    <location>
        <position position="418"/>
    </location>
</feature>
<feature type="sequence variant" id="VAR_006459" description="In AD3; uncertain significance; slightly decreased protease activity with APP; dbSNP:rs63751223." evidence="91 119">
    <original>A</original>
    <variation>P</variation>
    <location>
        <position position="426"/>
    </location>
</feature>
<feature type="sequence variant" id="VAR_025605" description="In AD3; decreased protease activity with APP; results in altered amyloid-beta production and increased amyloid-beta 42/amyloid-beta 40 ratio; dbSNP:rs63750083." evidence="24 55 57 91 127">
    <original>A</original>
    <variation>E</variation>
    <location>
        <position position="431"/>
    </location>
</feature>
<feature type="sequence variant" id="VAR_075280" description="In AD3; with unusual amyloid cotton wool plaques; almost abolishes gamma-secretase activity; no endoproteolytic cleavage; no APP nor NOTCH1 processing; no detectable amyloid-beta; dbSNP:rs63750001." evidence="24 53 69 79 91">
    <original>L</original>
    <variation>F</variation>
    <location>
        <position position="435"/>
    </location>
</feature>
<feature type="sequence variant" id="VAR_006460" description="In AD3; severe decrease of protease activity with APP; dbSNP:rs121917808." evidence="77 122">
    <original>P</original>
    <variation>Q</variation>
    <location>
        <position position="436"/>
    </location>
</feature>
<feature type="sequence variant" id="VAR_008141" description="In AD3; partially abolishes gamma-secretase activity; results in altered amyloid-beta production and increased amyloid-beta 42/amyloid-beta 40 ratio; dbSNP:rs63749925." evidence="7 72 91">
    <original>P</original>
    <variation>S</variation>
    <location>
        <position position="436"/>
    </location>
</feature>
<feature type="sequence variant" id="VAR_075282" description="In AD3; uncertain significance; no significant change of protease activity with APP; dbSNP:rs63750249." evidence="24 91">
    <original>I</original>
    <variation>V</variation>
    <location>
        <position position="439"/>
    </location>
</feature>
<feature type="mutagenesis site" description="No effect on interaction with GFAP." evidence="35">
    <location>
        <begin position="66"/>
        <end position="72"/>
    </location>
</feature>
<feature type="mutagenesis site" description="No effect on interaction with GFAP." evidence="35">
    <original>KY</original>
    <variation>AA</variation>
    <location>
        <begin position="76"/>
        <end position="77"/>
    </location>
</feature>
<feature type="mutagenesis site" description="Loss of interaction with GFAP." evidence="35">
    <original>VI</original>
    <variation>EE</variation>
    <location>
        <begin position="82"/>
        <end position="83"/>
    </location>
</feature>
<feature type="mutagenesis site" description="Loss of interaction with GFAP." evidence="35">
    <original>V</original>
    <variation>K</variation>
    <variation>E</variation>
    <location>
        <position position="82"/>
    </location>
</feature>
<feature type="mutagenesis site" description="Loss of interaction with GFAP." evidence="35">
    <original>ML</original>
    <variation>EE</variation>
    <location>
        <begin position="84"/>
        <end position="85"/>
    </location>
</feature>
<feature type="mutagenesis site" description="Nearly abolishes protease activity with APP. Increased amyloid-beta 42/amyloid-beta 40 ratio in vitro." evidence="91">
    <original>T</original>
    <variation>A</variation>
    <location>
        <position position="99"/>
    </location>
</feature>
<feature type="mutagenesis site" description="Nearly abolishes protease activity with APP. Increased amyloid-beta 42/amyloid-beta 40 ratio in vitro." evidence="91">
    <original>F</original>
    <variation>I</variation>
    <location>
        <position position="105"/>
    </location>
</feature>
<feature type="mutagenesis site" description="Nearly abolishes protease activity with APP." evidence="91">
    <original>R</original>
    <variation>Q</variation>
    <location>
        <position position="108"/>
    </location>
</feature>
<feature type="mutagenesis site" description="Formation of an artifactual disulfide bond with a substrate protein." evidence="98 99">
    <original>Q</original>
    <variation>C</variation>
    <location>
        <position position="112"/>
    </location>
</feature>
<feature type="mutagenesis site" description="Severe decrease of protease activity with APP. Increased amyloid-beta 42/amyloid-beta 40 ratio in vitro." evidence="91">
    <original>L</original>
    <variation>Q</variation>
    <location>
        <position position="113"/>
    </location>
</feature>
<feature type="mutagenesis site" description="Nearly abolishes protease activity with APP. Increased amyloid-beta 42/amyloid-beta 40 ratio in vitro." evidence="91">
    <original>P</original>
    <variation>A</variation>
    <location>
        <position position="117"/>
    </location>
</feature>
<feature type="mutagenesis site" description="Nearly abolishes protease activity with APP. Increased amyloid-beta 42/amyloid-beta 40 ratio in vitro." evidence="91">
    <original>E</original>
    <variation>K</variation>
    <location>
        <position position="123"/>
    </location>
</feature>
<feature type="mutagenesis site" description="Severe decrease of protease activity with APP." evidence="91">
    <original>H</original>
    <variation>R</variation>
    <location>
        <position position="131"/>
    </location>
</feature>
<feature type="mutagenesis site" description="Decreased protease activity with APP." evidence="91">
    <original>A</original>
    <variation>G</variation>
    <location>
        <position position="136"/>
    </location>
</feature>
<feature type="mutagenesis site" description="Increased amyloid-beta 42/amyloid-beta 40 ratio in vitro." evidence="91">
    <original>I</original>
    <variation>V</variation>
    <location>
        <position position="143"/>
    </location>
</feature>
<feature type="mutagenesis site" description="Nearly abolishes protease activity with APP." evidence="91">
    <original>L</original>
    <variation>P</variation>
    <location>
        <position position="150"/>
    </location>
</feature>
<feature type="mutagenesis site" description="Decreased protease activity with APP. Increased amyloid-beta 42/amyloid-beta 40 ratio in vitro." evidence="91">
    <original>W</original>
    <variation>G</variation>
    <location>
        <position position="165"/>
    </location>
</feature>
<feature type="mutagenesis site" description="Nearly abolishes protease activity with APP." evidence="91">
    <original>I</original>
    <variation>T</variation>
    <location>
        <position position="168"/>
    </location>
</feature>
<feature type="mutagenesis site" description="Nearly abolishes protease activity with APP." evidence="91">
    <original>F</original>
    <variation>L</variation>
    <location>
        <position position="176"/>
    </location>
</feature>
<feature type="mutagenesis site" description="Nearly abolishes protease activity with APP. Increased amyloid-beta 42/amyloid-beta 40 ratio in vitro." evidence="91">
    <original>E</original>
    <variation>G</variation>
    <location>
        <position position="184"/>
    </location>
</feature>
<feature type="mutagenesis site" description="Nearly abolishes protease activity with APP." evidence="87 91">
    <original>I</original>
    <variation>F</variation>
    <location>
        <position position="202"/>
    </location>
</feature>
<feature type="mutagenesis site" description="Nearly abolishes protease activity with APP." evidence="91">
    <original>S</original>
    <variation>Y</variation>
    <location>
        <position position="212"/>
    </location>
</feature>
<feature type="mutagenesis site" description="Nearly abolishes protease activity with APP. Increased amyloid-beta 42/amyloid-beta 40 ratio in vitro." evidence="91">
    <original>H</original>
    <variation>D</variation>
    <location>
        <position position="214"/>
    </location>
</feature>
<feature type="mutagenesis site" description="Decreased protease activity with APP. Increased amyloid-beta 42/amyloid-beta 40 ratio in vitro." evidence="91">
    <original>L</original>
    <variation>F</variation>
    <location>
        <position position="219"/>
    </location>
</feature>
<feature type="mutagenesis site" description="Abolishes protease activity with APP." evidence="91">
    <original>Q</original>
    <variation>R</variation>
    <location>
        <position position="223"/>
    </location>
</feature>
<feature type="mutagenesis site" description="Increases protease activity with APP." evidence="87 91">
    <original>L</original>
    <variation>F</variation>
    <location>
        <position position="226"/>
    </location>
</feature>
<feature type="mutagenesis site" description="Abolishes protease activity with APP." evidence="91">
    <original>S</original>
    <variation>I</variation>
    <location>
        <position position="230"/>
    </location>
</feature>
<feature type="mutagenesis site" description="Abolishes protease activity with APP." evidence="91">
    <original>I</original>
    <variation>M</variation>
    <location>
        <position position="238"/>
    </location>
</feature>
<feature type="mutagenesis site" description="Abolishes protease activity with APP." evidence="91">
    <original>K</original>
    <variation>N</variation>
    <location>
        <position position="239"/>
    </location>
</feature>
<feature type="mutagenesis site" description="Abolishes protease activity with APP." evidence="91">
    <original>T</original>
    <variation>P</variation>
    <location>
        <position position="245"/>
    </location>
</feature>
<feature type="mutagenesis site" description="Nearly abolishes protease activity with APP. Increased amyloid-beta 42/amyloid-beta 40 ratio in vitro." evidence="87 91">
    <original>L</original>
    <variation>R</variation>
    <location>
        <position position="248"/>
    </location>
</feature>
<feature type="mutagenesis site" description="Alters gamma-secretase cleavage specificity. Increased production of amyloid-beta protein 42. No effect on enzymatic activity." evidence="47">
    <original>Y</original>
    <variation>F</variation>
    <location>
        <position position="256"/>
    </location>
</feature>
<feature type="mutagenesis site" description="Nearly abolishes protease activity with APP. Increased amyloid-beta 42/amyloid-beta 40 ratio in vitro." evidence="91">
    <original>Y</original>
    <variation>S</variation>
    <location>
        <position position="256"/>
    </location>
</feature>
<feature type="mutagenesis site" description="Impaired ability to cleave Ephb2/CTF1." evidence="61">
    <original>D</original>
    <variation>A</variation>
    <location>
        <position position="257"/>
    </location>
</feature>
<feature type="mutagenesis site" description="Loss of endoproteolytic cleavage. Severe decrease of protease activity with APP. Reduces production of amyloid-beta. Reduces production of NICD in NOTCH1 processing." evidence="9 21 47 77">
    <original>D</original>
    <variation>A</variation>
    <location>
        <position position="257"/>
    </location>
</feature>
<feature type="mutagenesis site" description="Abolishes gamma-secretase activity. Reduces production of amyloid-beta in APP processing. Accumulation of full-length PS1. Loss of binding of transition state analog gamma-secretase inhibitor." evidence="9 21 47">
    <original>D</original>
    <variation>E</variation>
    <location>
        <position position="257"/>
    </location>
</feature>
<feature type="mutagenesis site" description="Increased amyloid-beta 42/amyloid-beta 40 ratio in vitro." evidence="91">
    <original>V</original>
    <variation>A</variation>
    <location>
        <position position="272"/>
    </location>
</feature>
<feature type="mutagenesis site" description="Decreased protease activity with APP. Increased amyloid-beta 42/amyloid-beta 40 ratio in vitro." evidence="91">
    <original>E</original>
    <variation>A</variation>
    <location>
        <position position="273"/>
    </location>
</feature>
<feature type="mutagenesis site" description="Nearly abolishes protease activity with APP. Increased amyloid-beta 42/amyloid-beta 40 ratio in vitro." evidence="91">
    <original>R</original>
    <variation>K</variation>
    <location>
        <position position="278"/>
    </location>
</feature>
<feature type="mutagenesis site" description="No significant change of protease activity with APP." evidence="91">
    <original>P</original>
    <variation>S</variation>
    <location>
        <position position="284"/>
    </location>
</feature>
<feature type="mutagenesis site" description="Increases production of amyloid-beta in APP processing." evidence="20">
    <original>L</original>
    <variation>A</variation>
    <variation>E</variation>
    <variation>P</variation>
    <variation>Q</variation>
    <variation>R</variation>
    <variation>W</variation>
    <location>
        <position position="286"/>
    </location>
</feature>
<feature type="mutagenesis site" description="Reduces production of NICD in NOTCH1 processing." evidence="20">
    <original>L</original>
    <variation>E</variation>
    <variation>R</variation>
    <location>
        <position position="286"/>
    </location>
</feature>
<feature type="mutagenesis site" description="Loss of NOTCH1 and APP C83 cleavage." evidence="98 99">
    <location>
        <begin position="288"/>
        <end position="290"/>
    </location>
</feature>
<feature type="mutagenesis site" description="Abolishes protease activity with APP." evidence="91">
    <original>T</original>
    <variation>P</variation>
    <location>
        <position position="291"/>
    </location>
</feature>
<feature type="mutagenesis site" description="Loss of endoproteolytic cleavage." evidence="15">
    <original>M</original>
    <variation>D</variation>
    <location>
        <position position="292"/>
    </location>
</feature>
<feature type="mutagenesis site" description="Abolishes PKA-mediated phosphorylation; no effect on caspase-mediated cleavage." evidence="43">
    <original>S</original>
    <variation>A</variation>
    <location>
        <position position="310"/>
    </location>
</feature>
<feature type="mutagenesis site" description="Abolishes caspase cleavage." evidence="117">
    <original>D</original>
    <variation>N</variation>
    <location>
        <position position="345"/>
    </location>
</feature>
<feature type="mutagenesis site" description="Abolishes PKC-mediated phosphorylation; no effect on PKA-mediated phosphorylation." evidence="43">
    <original>S</original>
    <variation>A</variation>
    <location>
        <position position="346"/>
    </location>
</feature>
<feature type="mutagenesis site" description="Inhibits caspase-mediated cleavage. Modulates progression of apoptosis." evidence="43">
    <original>S</original>
    <variation>E</variation>
    <location>
        <position position="346"/>
    </location>
</feature>
<feature type="mutagenesis site" description="Decreased protease activity with APP." evidence="91">
    <original>R</original>
    <variation>C</variation>
    <location>
        <position position="352"/>
    </location>
</feature>
<feature type="mutagenesis site" description="Slightly increased protease activity with APP." evidence="91">
    <original>S</original>
    <variation>A</variation>
    <location>
        <position position="365"/>
    </location>
</feature>
<feature type="mutagenesis site" description="No effect on caspase cleavage." evidence="117">
    <original>D</original>
    <variation>N</variation>
    <location>
        <position position="373"/>
    </location>
</feature>
<feature type="mutagenesis site" description="Loss of NOTCH1 and APP C83 cleavage." evidence="98 99">
    <location>
        <begin position="377"/>
        <end position="381"/>
    </location>
</feature>
<feature type="mutagenesis site" description="Nearly abolishes protease activity with APP." evidence="91">
    <original>R</original>
    <variation>W</variation>
    <location>
        <position position="377"/>
    </location>
</feature>
<feature type="mutagenesis site" description="Loss of endoproteolytic cleavage. Severe decrease of protease activity with APP. Reduces production of amyloid-beta. Loss of NOTCH1 cleavage. Disassembly of the N-cadherin/PS1 complex at the cell surface. Impairs CDH2 processing." evidence="9 21 42 47 77 98 99 117">
    <original>D</original>
    <variation>A</variation>
    <location>
        <position position="385"/>
    </location>
</feature>
<feature type="mutagenesis site" description="Abolishes gamma-secretase activity. Reduces production of amyloid-beta in APP processing. Accumulation of full-length PS1. Loss of binding of transition state analog gamma-secretase inhibitor." evidence="9 21 42 47 117">
    <original>D</original>
    <variation>E</variation>
    <location>
        <position position="385"/>
    </location>
</feature>
<feature type="mutagenesis site" description="No effect on caspase cleavage." evidence="9 21 42 47 117">
    <original>D</original>
    <variation>N</variation>
    <location>
        <position position="385"/>
    </location>
</feature>
<feature type="mutagenesis site" description="Nearly abolishes protease activity with APP. Increased amyloid-beta 42/amyloid-beta 40 ratio in vitro." evidence="91">
    <original>F</original>
    <variation>S</variation>
    <location>
        <position position="386"/>
    </location>
</feature>
<feature type="mutagenesis site" description="Alters gamma-secretase cleavage specificity. Increased production of amyloid-beta protein 42. No effect on enzymatic activity." evidence="47">
    <original>Y</original>
    <variation>F</variation>
    <location>
        <position position="389"/>
    </location>
</feature>
<feature type="mutagenesis site" description="Decreased protease activity with APP." evidence="91">
    <original>V</original>
    <variation>F</variation>
    <location>
        <position position="391"/>
    </location>
</feature>
<feature type="mutagenesis site" description="Abolishes protease activity with APP." evidence="91">
    <original>V</original>
    <variation>I</variation>
    <location>
        <position position="412"/>
    </location>
</feature>
<feature type="mutagenesis site" description="Decreased protease activity with APP. Increased amyloid-beta 42/amyloid-beta 40 ratio in vitro." evidence="91">
    <original>L</original>
    <variation>R</variation>
    <location>
        <position position="420"/>
    </location>
</feature>
<feature type="mutagenesis site" description="Increases protease activity with APP." evidence="87 91">
    <original>L</original>
    <variation>V</variation>
    <location>
        <position position="424"/>
    </location>
</feature>
<feature type="mutagenesis site" description="Loss of NOTCH1 and APP C83 cleavage." evidence="98 99">
    <location>
        <begin position="432"/>
        <end position="434"/>
    </location>
</feature>
<feature type="mutagenesis site" description="Loss of NOTCH1 and APP C83 cleavage." evidence="98 99">
    <original>L</original>
    <variation>P</variation>
    <location>
        <position position="432"/>
    </location>
</feature>
<feature type="mutagenesis site" description="No effect on endoproteolytic cleavage. No effect on APP nor NOTCH1 processing. Slightly increased amyloid-beta protein 42/40 ratio." evidence="53">
    <original>P</original>
    <variation>A</variation>
    <location>
        <position position="433"/>
    </location>
</feature>
<feature type="mutagenesis site" description="No endoproteolytic cleavage; no APP, nor NOTCH1 processing. No detectable amyloid-beta." evidence="53 69">
    <original>P</original>
    <variation>D</variation>
    <variation>F</variation>
    <variation>L</variation>
    <variation>N</variation>
    <variation>V</variation>
    <location>
        <position position="433"/>
    </location>
</feature>
<feature type="mutagenesis site" description="Very little endoproteolysis. Little APP processing. No NOTCH1 processing. Very low levels amyloid-beta protein 40 and no detectable amyloid-beta protein 42." evidence="53">
    <original>P</original>
    <variation>G</variation>
    <location>
        <position position="433"/>
    </location>
</feature>
<feature type="mutagenesis site" description="Some loss of endoproteolytic cleavage. Some loss of APP and NOTCH1 processing. 6 to 13-fold increase in amyloid-beta protein 42/40 ratio." evidence="53 91">
    <original>A</original>
    <variation>C</variation>
    <location>
        <position position="434"/>
    </location>
</feature>
<feature type="mutagenesis site" description="No endoproteolytic cleavage. No APP nor NOTCH1 processing. No detectable amyloid-beta." evidence="53">
    <original>A</original>
    <variation>D</variation>
    <variation>I</variation>
    <variation>L</variation>
    <variation>V</variation>
    <location>
        <position position="434"/>
    </location>
</feature>
<feature type="mutagenesis site" description="No effect on endoproteolytic cleavage. No effect on APP nor NOTCH1 processing. Reduced amyloid-beta protein 42/40 ratio." evidence="53">
    <original>A</original>
    <variation>G</variation>
    <location>
        <position position="434"/>
    </location>
</feature>
<feature type="mutagenesis site" description="No effect on endoproteolytic cleavage. No effect on APP processing. Impaired NOTCH1 processing. Greatly reduced amyloid-beta protein 42/40 ratio." evidence="53">
    <original>L</original>
    <variation>A</variation>
    <location>
        <position position="435"/>
    </location>
</feature>
<feature type="mutagenesis site" description="Greatly reduced endoproteolytic cleavage. Very little APP and NOTCH1 processing. Very low levels of amyloid-beta protein 40 and no detectable amyloid-beta protein 42." evidence="53">
    <original>L</original>
    <variation>G</variation>
    <location>
        <position position="435"/>
    </location>
</feature>
<feature type="mutagenesis site" description="No effect on endoproteolytic cleavage. No effect on APP nor NOTCH1 processing." evidence="53">
    <original>L</original>
    <variation>I</variation>
    <location>
        <position position="435"/>
    </location>
</feature>
<feature type="mutagenesis site" description="No endoproteolytic cleavage; no APP, nor NOTCH1 processing. No detectable amyloid-beta." evidence="69">
    <original>L</original>
    <variation>R</variation>
    <location>
        <position position="435"/>
    </location>
</feature>
<feature type="mutagenesis site" description="No effect on endoproteolytic cleavage. No effect on APP processing. Impaired NOTCH1 processing. Some increase in amyloid-beta protein 42/40 ratio." evidence="53">
    <original>L</original>
    <variation>V</variation>
    <location>
        <position position="435"/>
    </location>
</feature>
<feature type="mutagenesis site" description="Decreased protease activity with APP. Increased amyloid-beta 42/amyloid-beta 40 ratio in vitro." evidence="91">
    <original>I</original>
    <variation>V</variation>
    <location>
        <position position="437"/>
    </location>
</feature>
<feature type="sequence conflict" description="In Ref. 7; AAL16811." evidence="133" ref="7">
    <original>R</original>
    <variation>G</variation>
    <location>
        <position position="128"/>
    </location>
</feature>
<feature type="strand" evidence="156">
    <location>
        <begin position="77"/>
        <end position="80"/>
    </location>
</feature>
<feature type="helix" evidence="158">
    <location>
        <begin position="83"/>
        <end position="102"/>
    </location>
</feature>
<feature type="helix" evidence="155">
    <location>
        <begin position="105"/>
        <end position="107"/>
    </location>
</feature>
<feature type="strand" evidence="160">
    <location>
        <begin position="114"/>
        <end position="116"/>
    </location>
</feature>
<feature type="strand" evidence="155">
    <location>
        <begin position="120"/>
        <end position="123"/>
    </location>
</feature>
<feature type="helix" evidence="158">
    <location>
        <begin position="125"/>
        <end position="155"/>
    </location>
</feature>
<feature type="helix" evidence="158">
    <location>
        <begin position="159"/>
        <end position="175"/>
    </location>
</feature>
<feature type="helix" evidence="158">
    <location>
        <begin position="177"/>
        <end position="188"/>
    </location>
</feature>
<feature type="helix" evidence="158">
    <location>
        <begin position="195"/>
        <end position="214"/>
    </location>
</feature>
<feature type="helix" evidence="158">
    <location>
        <begin position="219"/>
        <end position="240"/>
    </location>
</feature>
<feature type="helix" evidence="158">
    <location>
        <begin position="243"/>
        <end position="262"/>
    </location>
</feature>
<feature type="strand" evidence="154">
    <location>
        <begin position="263"/>
        <end position="266"/>
    </location>
</feature>
<feature type="helix" evidence="158">
    <location>
        <begin position="267"/>
        <end position="277"/>
    </location>
</feature>
<feature type="strand" evidence="154">
    <location>
        <begin position="278"/>
        <end position="280"/>
    </location>
</feature>
<feature type="helix" evidence="157">
    <location>
        <begin position="284"/>
        <end position="286"/>
    </location>
</feature>
<feature type="strand" evidence="158">
    <location>
        <begin position="287"/>
        <end position="289"/>
    </location>
</feature>
<feature type="helix" evidence="153">
    <location>
        <begin position="293"/>
        <end position="299"/>
    </location>
</feature>
<feature type="strand" evidence="153">
    <location>
        <begin position="341"/>
        <end position="345"/>
    </location>
</feature>
<feature type="helix" evidence="153">
    <location>
        <begin position="356"/>
        <end position="368"/>
    </location>
</feature>
<feature type="strand" evidence="158">
    <location>
        <begin position="380"/>
        <end position="382"/>
    </location>
</feature>
<feature type="helix" evidence="158">
    <location>
        <begin position="383"/>
        <end position="398"/>
    </location>
</feature>
<feature type="strand" evidence="159">
    <location>
        <begin position="400"/>
        <end position="402"/>
    </location>
</feature>
<feature type="helix" evidence="158">
    <location>
        <begin position="403"/>
        <end position="428"/>
    </location>
</feature>
<feature type="strand" evidence="154">
    <location>
        <begin position="432"/>
        <end position="434"/>
    </location>
</feature>
<feature type="helix" evidence="158">
    <location>
        <begin position="435"/>
        <end position="451"/>
    </location>
</feature>
<feature type="helix" evidence="158">
    <location>
        <begin position="454"/>
        <end position="463"/>
    </location>
</feature>
<accession>P49768</accession>
<accession>B2R6D3</accession>
<accession>O95465</accession>
<accession>Q14762</accession>
<accession>Q15719</accession>
<accession>Q15720</accession>
<accession>Q96P33</accession>
<accession>Q9UIF0</accession>
<protein>
    <recommendedName>
        <fullName>Presenilin-1</fullName>
        <shortName>PS-1</shortName>
        <ecNumber evidence="9 20 21 40 46 87">3.4.23.-</ecNumber>
    </recommendedName>
    <alternativeName>
        <fullName>Protein S182</fullName>
    </alternativeName>
    <component>
        <recommendedName>
            <fullName>Presenilin-1 NTF subunit</fullName>
        </recommendedName>
    </component>
    <component>
        <recommendedName>
            <fullName>Presenilin-1 CTF subunit</fullName>
        </recommendedName>
    </component>
    <component>
        <recommendedName>
            <fullName>Presenilin-1 CTF12</fullName>
            <shortName>PS1-CTF12</shortName>
        </recommendedName>
    </component>
</protein>
<organism>
    <name type="scientific">Homo sapiens</name>
    <name type="common">Human</name>
    <dbReference type="NCBI Taxonomy" id="9606"/>
    <lineage>
        <taxon>Eukaryota</taxon>
        <taxon>Metazoa</taxon>
        <taxon>Chordata</taxon>
        <taxon>Craniata</taxon>
        <taxon>Vertebrata</taxon>
        <taxon>Euteleostomi</taxon>
        <taxon>Mammalia</taxon>
        <taxon>Eutheria</taxon>
        <taxon>Euarchontoglires</taxon>
        <taxon>Primates</taxon>
        <taxon>Haplorrhini</taxon>
        <taxon>Catarrhini</taxon>
        <taxon>Hominidae</taxon>
        <taxon>Homo</taxon>
    </lineage>
</organism>